<keyword id="KW-0002">3D-structure</keyword>
<keyword id="KW-0013">ADP-ribosylation</keyword>
<keyword id="KW-0963">Cytoplasm</keyword>
<keyword id="KW-0903">Direct protein sequencing</keyword>
<keyword id="KW-1017">Isopeptide bond</keyword>
<keyword id="KW-0472">Membrane</keyword>
<keyword id="KW-0496">Mitochondrion</keyword>
<keyword id="KW-1000">Mitochondrion outer membrane</keyword>
<keyword id="KW-0539">Nucleus</keyword>
<keyword id="KW-0597">Phosphoprotein</keyword>
<keyword id="KW-1185">Reference proteome</keyword>
<keyword id="KW-0677">Repeat</keyword>
<keyword id="KW-0832">Ubl conjugation</keyword>
<reference key="1">
    <citation type="journal article" date="1985" name="EMBO J.">
        <title>The human ubiquitin multigene family: some genes contain multiple directly repeated ubiquitin coding sequences.</title>
        <authorList>
            <person name="Wiborg O."/>
            <person name="Pedersen M.S."/>
            <person name="Wind A."/>
            <person name="Berglund L.E."/>
            <person name="Marcker K.A."/>
            <person name="Vuust J."/>
        </authorList>
    </citation>
    <scope>NUCLEOTIDE SEQUENCE [MRNA]</scope>
</reference>
<reference key="2">
    <citation type="journal article" date="1998" name="J. Biochem.">
        <title>Cloning of human polyubiquitin cDNAs and a ubiquitin-binding assay involving its in vitro translation product.</title>
        <authorList>
            <person name="Kim N.S."/>
            <person name="Yamaguchi T."/>
            <person name="Sekine S."/>
            <person name="Saeki M."/>
            <person name="Iwamuro S."/>
            <person name="Kato S."/>
        </authorList>
    </citation>
    <scope>NUCLEOTIDE SEQUENCE [MRNA]</scope>
</reference>
<reference key="3">
    <citation type="journal article" date="2003" name="J. Mol. Evol.">
        <title>Lineage-specific homogenization of the polyubiquitin gene among human and great apes.</title>
        <authorList>
            <person name="Tachikui H."/>
            <person name="Saitou N."/>
            <person name="Nakajima T."/>
            <person name="Hayasaka I."/>
            <person name="Ishida T."/>
            <person name="Inoue I."/>
        </authorList>
    </citation>
    <scope>NUCLEOTIDE SEQUENCE [GENOMIC DNA]</scope>
</reference>
<reference key="4">
    <citation type="journal article" date="2006" name="Nature">
        <title>The finished DNA sequence of human chromosome 12.</title>
        <authorList>
            <person name="Scherer S.E."/>
            <person name="Muzny D.M."/>
            <person name="Buhay C.J."/>
            <person name="Chen R."/>
            <person name="Cree A."/>
            <person name="Ding Y."/>
            <person name="Dugan-Rocha S."/>
            <person name="Gill R."/>
            <person name="Gunaratne P."/>
            <person name="Harris R.A."/>
            <person name="Hawes A.C."/>
            <person name="Hernandez J."/>
            <person name="Hodgson A.V."/>
            <person name="Hume J."/>
            <person name="Jackson A."/>
            <person name="Khan Z.M."/>
            <person name="Kovar-Smith C."/>
            <person name="Lewis L.R."/>
            <person name="Lozado R.J."/>
            <person name="Metzker M.L."/>
            <person name="Milosavljevic A."/>
            <person name="Miner G.R."/>
            <person name="Montgomery K.T."/>
            <person name="Morgan M.B."/>
            <person name="Nazareth L.V."/>
            <person name="Scott G."/>
            <person name="Sodergren E."/>
            <person name="Song X.-Z."/>
            <person name="Steffen D."/>
            <person name="Lovering R.C."/>
            <person name="Wheeler D.A."/>
            <person name="Worley K.C."/>
            <person name="Yuan Y."/>
            <person name="Zhang Z."/>
            <person name="Adams C.Q."/>
            <person name="Ansari-Lari M.A."/>
            <person name="Ayele M."/>
            <person name="Brown M.J."/>
            <person name="Chen G."/>
            <person name="Chen Z."/>
            <person name="Clerc-Blankenburg K.P."/>
            <person name="Davis C."/>
            <person name="Delgado O."/>
            <person name="Dinh H.H."/>
            <person name="Draper H."/>
            <person name="Gonzalez-Garay M.L."/>
            <person name="Havlak P."/>
            <person name="Jackson L.R."/>
            <person name="Jacob L.S."/>
            <person name="Kelly S.H."/>
            <person name="Li L."/>
            <person name="Li Z."/>
            <person name="Liu J."/>
            <person name="Liu W."/>
            <person name="Lu J."/>
            <person name="Maheshwari M."/>
            <person name="Nguyen B.-V."/>
            <person name="Okwuonu G.O."/>
            <person name="Pasternak S."/>
            <person name="Perez L.M."/>
            <person name="Plopper F.J.H."/>
            <person name="Santibanez J."/>
            <person name="Shen H."/>
            <person name="Tabor P.E."/>
            <person name="Verduzco D."/>
            <person name="Waldron L."/>
            <person name="Wang Q."/>
            <person name="Williams G.A."/>
            <person name="Zhang J."/>
            <person name="Zhou J."/>
            <person name="Allen C.C."/>
            <person name="Amin A.G."/>
            <person name="Anyalebechi V."/>
            <person name="Bailey M."/>
            <person name="Barbaria J.A."/>
            <person name="Bimage K.E."/>
            <person name="Bryant N.P."/>
            <person name="Burch P.E."/>
            <person name="Burkett C.E."/>
            <person name="Burrell K.L."/>
            <person name="Calderon E."/>
            <person name="Cardenas V."/>
            <person name="Carter K."/>
            <person name="Casias K."/>
            <person name="Cavazos I."/>
            <person name="Cavazos S.R."/>
            <person name="Ceasar H."/>
            <person name="Chacko J."/>
            <person name="Chan S.N."/>
            <person name="Chavez D."/>
            <person name="Christopoulos C."/>
            <person name="Chu J."/>
            <person name="Cockrell R."/>
            <person name="Cox C.D."/>
            <person name="Dang M."/>
            <person name="Dathorne S.R."/>
            <person name="David R."/>
            <person name="Davis C.M."/>
            <person name="Davy-Carroll L."/>
            <person name="Deshazo D.R."/>
            <person name="Donlin J.E."/>
            <person name="D'Souza L."/>
            <person name="Eaves K.A."/>
            <person name="Egan A."/>
            <person name="Emery-Cohen A.J."/>
            <person name="Escotto M."/>
            <person name="Flagg N."/>
            <person name="Forbes L.D."/>
            <person name="Gabisi A.M."/>
            <person name="Garza M."/>
            <person name="Hamilton C."/>
            <person name="Henderson N."/>
            <person name="Hernandez O."/>
            <person name="Hines S."/>
            <person name="Hogues M.E."/>
            <person name="Huang M."/>
            <person name="Idlebird D.G."/>
            <person name="Johnson R."/>
            <person name="Jolivet A."/>
            <person name="Jones S."/>
            <person name="Kagan R."/>
            <person name="King L.M."/>
            <person name="Leal B."/>
            <person name="Lebow H."/>
            <person name="Lee S."/>
            <person name="LeVan J.M."/>
            <person name="Lewis L.C."/>
            <person name="London P."/>
            <person name="Lorensuhewa L.M."/>
            <person name="Loulseged H."/>
            <person name="Lovett D.A."/>
            <person name="Lucier A."/>
            <person name="Lucier R.L."/>
            <person name="Ma J."/>
            <person name="Madu R.C."/>
            <person name="Mapua P."/>
            <person name="Martindale A.D."/>
            <person name="Martinez E."/>
            <person name="Massey E."/>
            <person name="Mawhiney S."/>
            <person name="Meador M.G."/>
            <person name="Mendez S."/>
            <person name="Mercado C."/>
            <person name="Mercado I.C."/>
            <person name="Merritt C.E."/>
            <person name="Miner Z.L."/>
            <person name="Minja E."/>
            <person name="Mitchell T."/>
            <person name="Mohabbat F."/>
            <person name="Mohabbat K."/>
            <person name="Montgomery B."/>
            <person name="Moore N."/>
            <person name="Morris S."/>
            <person name="Munidasa M."/>
            <person name="Ngo R.N."/>
            <person name="Nguyen N.B."/>
            <person name="Nickerson E."/>
            <person name="Nwaokelemeh O.O."/>
            <person name="Nwokenkwo S."/>
            <person name="Obregon M."/>
            <person name="Oguh M."/>
            <person name="Oragunye N."/>
            <person name="Oviedo R.J."/>
            <person name="Parish B.J."/>
            <person name="Parker D.N."/>
            <person name="Parrish J."/>
            <person name="Parks K.L."/>
            <person name="Paul H.A."/>
            <person name="Payton B.A."/>
            <person name="Perez A."/>
            <person name="Perrin W."/>
            <person name="Pickens A."/>
            <person name="Primus E.L."/>
            <person name="Pu L.-L."/>
            <person name="Puazo M."/>
            <person name="Quiles M.M."/>
            <person name="Quiroz J.B."/>
            <person name="Rabata D."/>
            <person name="Reeves K."/>
            <person name="Ruiz S.J."/>
            <person name="Shao H."/>
            <person name="Sisson I."/>
            <person name="Sonaike T."/>
            <person name="Sorelle R.P."/>
            <person name="Sutton A.E."/>
            <person name="Svatek A.F."/>
            <person name="Svetz L.A."/>
            <person name="Tamerisa K.S."/>
            <person name="Taylor T.R."/>
            <person name="Teague B."/>
            <person name="Thomas N."/>
            <person name="Thorn R.D."/>
            <person name="Trejos Z.Y."/>
            <person name="Trevino B.K."/>
            <person name="Ukegbu O.N."/>
            <person name="Urban J.B."/>
            <person name="Vasquez L.I."/>
            <person name="Vera V.A."/>
            <person name="Villasana D.M."/>
            <person name="Wang L."/>
            <person name="Ward-Moore S."/>
            <person name="Warren J.T."/>
            <person name="Wei X."/>
            <person name="White F."/>
            <person name="Williamson A.L."/>
            <person name="Wleczyk R."/>
            <person name="Wooden H.S."/>
            <person name="Wooden S.H."/>
            <person name="Yen J."/>
            <person name="Yoon L."/>
            <person name="Yoon V."/>
            <person name="Zorrilla S.E."/>
            <person name="Nelson D."/>
            <person name="Kucherlapati R."/>
            <person name="Weinstock G."/>
            <person name="Gibbs R.A."/>
        </authorList>
    </citation>
    <scope>NUCLEOTIDE SEQUENCE [LARGE SCALE GENOMIC DNA]</scope>
</reference>
<reference key="5">
    <citation type="journal article" date="2004" name="Genome Res.">
        <title>The status, quality, and expansion of the NIH full-length cDNA project: the Mammalian Gene Collection (MGC).</title>
        <authorList>
            <consortium name="The MGC Project Team"/>
        </authorList>
    </citation>
    <scope>NUCLEOTIDE SEQUENCE [LARGE SCALE MRNA]</scope>
    <source>
        <tissue>Brain</tissue>
        <tissue>Liver</tissue>
        <tissue>Lung</tissue>
        <tissue>Placenta</tissue>
    </source>
</reference>
<reference key="6">
    <citation type="journal article" date="1996" name="Gene">
        <title>Heterogeneous structure of the polyubiquitin gene UbC of HeLa S3 cells.</title>
        <authorList>
            <person name="Nenoi M."/>
            <person name="Mita K."/>
            <person name="Ichimura S."/>
            <person name="Cartwright I.L."/>
            <person name="Takahashi E."/>
            <person name="Yamauchi M."/>
            <person name="Tsuji H."/>
        </authorList>
    </citation>
    <scope>NUCLEOTIDE SEQUENCE [GENOMIC DNA] OF 1-611</scope>
</reference>
<reference key="7">
    <citation type="journal article" date="1975" name="Nature">
        <title>Molecular conservation of 74 amino acid sequence of ubiquitin between cattle and man.</title>
        <authorList>
            <person name="Schlesinger D.H."/>
            <person name="Goldstein G."/>
        </authorList>
    </citation>
    <scope>PROTEIN SEQUENCE OF 1-74</scope>
</reference>
<reference key="8">
    <citation type="submission" date="2008-12" db="UniProtKB">
        <authorList>
            <person name="Lubec G."/>
            <person name="Chen W.-Q."/>
            <person name="Sun Y."/>
        </authorList>
    </citation>
    <scope>PROTEIN SEQUENCE OF 1-27; 30-42 AND 55-72</scope>
    <scope>IDENTIFICATION BY MASS SPECTROMETRY</scope>
    <source>
        <tissue>Fetal brain cortex</tissue>
    </source>
</reference>
<reference key="9">
    <citation type="journal article" date="2006" name="J. Biol. Chem.">
        <title>Alzheimer disease-specific conformation of hyperphosphorylated paired helical filament-tau is polyubiquitinated through Lys-48, Lys-11, and Lys-6 ubiquitin conjugation.</title>
        <authorList>
            <person name="Cripps D."/>
            <person name="Thomas S.N."/>
            <person name="Jeng Y."/>
            <person name="Yang F."/>
            <person name="Davies P."/>
            <person name="Yang A.J."/>
        </authorList>
    </citation>
    <scope>PROTEIN SEQUENCE OF 1-27 AND 43-54</scope>
    <scope>UBIQUITINATION AT LYS-6; LYS-11 AND LYS-48</scope>
    <scope>IDENTIFICATION BY MASS SPECTROMETRY</scope>
</reference>
<reference key="10">
    <citation type="journal article" date="1998" name="Genetics">
        <title>Higher frequency of concerted evolutionary events in rodents than in man at the polyubiquitin gene VNTR locus.</title>
        <authorList>
            <person name="Nenoi M."/>
            <person name="Mita K."/>
            <person name="Ichimura S."/>
            <person name="Kawano A."/>
        </authorList>
    </citation>
    <scope>NUCLEOTIDE SEQUENCE [GENOMIC DNA] OF 77-685</scope>
</reference>
<reference key="11">
    <citation type="journal article" date="1987" name="Biochem. Biophys. Res. Commun.">
        <title>Cloning and sequence analysis of a cDNA encoding poly-ubiquitin in human ovarian granulosa cells.</title>
        <authorList>
            <person name="Einspanier R."/>
            <person name="Sharma H.S."/>
            <person name="Scheit K.H."/>
        </authorList>
    </citation>
    <scope>NUCLEOTIDE SEQUENCE [MRNA] OF 417-685</scope>
</reference>
<reference key="12">
    <citation type="journal article" date="2006" name="Mol. Cell">
        <title>Differential regulation of EGF receptor internalization and degradation by multiubiquitination within the kinase domain.</title>
        <authorList>
            <person name="Huang F."/>
            <person name="Kirkpatrick D."/>
            <person name="Jiang X."/>
            <person name="Gygi S.P."/>
            <person name="Sorkin A."/>
        </authorList>
    </citation>
    <scope>FUNCTION</scope>
    <scope>UBIQUITINATION AT LYS-11; LYS-29; LYS-48 AND LYS-63</scope>
    <scope>IDENTIFICATION BY MASS SPECTROMETRY</scope>
</reference>
<reference key="13">
    <citation type="journal article" date="2004" name="J. Biol. Chem.">
        <title>Functional regulation of FEZ1 by the U-box-type ubiquitin ligase E4B contributes to neuritogenesis.</title>
        <authorList>
            <person name="Okumura F."/>
            <person name="Hatakeyama S."/>
            <person name="Matsumoto M."/>
            <person name="Kamura T."/>
            <person name="Nakayama K."/>
        </authorList>
    </citation>
    <scope>UBIQUITINATION AT LYS-27</scope>
</reference>
<reference key="14">
    <citation type="journal article" date="2008" name="Proc. Natl. Acad. Sci. U.S.A.">
        <title>Polyubiquitination of proliferating cell nuclear antigen by HLTF and SHPRH prevents genomic instability from stalled replication forks.</title>
        <authorList>
            <person name="Motegi A."/>
            <person name="Liaw H.-J."/>
            <person name="Lee K.-Y."/>
            <person name="Roest H.P."/>
            <person name="Maas A."/>
            <person name="Wu X."/>
            <person name="Moinova H."/>
            <person name="Markowitz S.D."/>
            <person name="Ding H."/>
            <person name="Hoeijmakers J.H.J."/>
            <person name="Myung K."/>
        </authorList>
    </citation>
    <scope>UBIQUITINATION AT LYS-63</scope>
    <scope>MUTAGENESIS OF LYS-48 AND LYS-63</scope>
</reference>
<reference key="15">
    <citation type="journal article" date="2009" name="Biochem. Soc. Trans.">
        <title>The emerging complexity of protein ubiquitination.</title>
        <authorList>
            <person name="Komander D."/>
        </authorList>
    </citation>
    <scope>REVIEW</scope>
    <scope>FUNCTION</scope>
</reference>
<reference key="16">
    <citation type="journal article" date="2014" name="Biochem. J.">
        <title>Parkin is activated by PINK1-dependent phosphorylation of ubiquitin at Ser65.</title>
        <authorList>
            <person name="Kazlauskaite A."/>
            <person name="Kondapalli C."/>
            <person name="Gourlay R."/>
            <person name="Campbell D.G."/>
            <person name="Ritorto M.S."/>
            <person name="Hofmann K."/>
            <person name="Alessi D.R."/>
            <person name="Knebel A."/>
            <person name="Trost M."/>
            <person name="Muqit M.M."/>
        </authorList>
    </citation>
    <scope>PHOSPHORYLATION AT SER-65</scope>
    <scope>MUTAGENESIS OF SER-65</scope>
</reference>
<reference key="17">
    <citation type="journal article" date="2014" name="J. Cell Biol.">
        <title>PINK1 phosphorylates ubiquitin to activate Parkin E3 ubiquitin ligase activity.</title>
        <authorList>
            <person name="Kane L.A."/>
            <person name="Lazarou M."/>
            <person name="Fogel A.I."/>
            <person name="Li Y."/>
            <person name="Yamano K."/>
            <person name="Sarraf S.A."/>
            <person name="Banerjee S."/>
            <person name="Youle R.J."/>
        </authorList>
    </citation>
    <scope>SUBCELLULAR LOCATION</scope>
    <scope>PHOSPHORYLATION AT SER-65</scope>
    <scope>MUTAGENESIS OF SER-65</scope>
</reference>
<reference key="18">
    <citation type="journal article" date="2014" name="Nature">
        <title>Ubiquitin is phosphorylated by PINK1 to activate parkin.</title>
        <authorList>
            <person name="Koyano F."/>
            <person name="Okatsu K."/>
            <person name="Kosako H."/>
            <person name="Tamura Y."/>
            <person name="Go E."/>
            <person name="Kimura M."/>
            <person name="Kimura Y."/>
            <person name="Tsuchiya H."/>
            <person name="Yoshihara H."/>
            <person name="Hirokawa T."/>
            <person name="Endo T."/>
            <person name="Fon E.A."/>
            <person name="Trempe J.F."/>
            <person name="Saeki Y."/>
            <person name="Tanaka K."/>
            <person name="Matsuda N."/>
        </authorList>
    </citation>
    <scope>PHOSPHORYLATION AT SER-65</scope>
    <scope>MUTAGENESIS OF SER-65</scope>
</reference>
<reference key="19">
    <citation type="journal article" date="2017" name="Mol. Cell">
        <title>Ubiquitin Modification by the E3 Ligase/ADP-Ribosyltransferase Dtx3L/Parp9.</title>
        <authorList>
            <person name="Yang C.S."/>
            <person name="Jividen K."/>
            <person name="Spencer A."/>
            <person name="Dworak N."/>
            <person name="Ni L."/>
            <person name="Oostdyk L.T."/>
            <person name="Chatterjee M."/>
            <person name="Kusmider B."/>
            <person name="Reon B."/>
            <person name="Parlak M."/>
            <person name="Gorbunova V."/>
            <person name="Abbas T."/>
            <person name="Jeffery E."/>
            <person name="Sherman N.E."/>
            <person name="Paschal B.M."/>
        </authorList>
    </citation>
    <scope>ADP-RIBOSYLATION AT GLY-76</scope>
    <scope>MUTAGENESIS OF HIS-68; ARG-72; ARG-74 AND GLY-76</scope>
</reference>
<reference key="20">
    <citation type="journal article" date="2021" name="Nat. Chem. Biol.">
        <title>K29-linked ubiquitin signaling regulates proteotoxic stress response and cell cycle.</title>
        <authorList>
            <person name="Yu Y."/>
            <person name="Zheng Q."/>
            <person name="Erramilli S.K."/>
            <person name="Pan M."/>
            <person name="Park S."/>
            <person name="Xie Y."/>
            <person name="Li J."/>
            <person name="Fei J."/>
            <person name="Kossiakoff A.A."/>
            <person name="Liu L."/>
            <person name="Zhao M."/>
        </authorList>
    </citation>
    <scope>FUNCTION (UBIQUITIN)</scope>
    <scope>UBIQUITINATION AT LYS-29</scope>
</reference>
<reference key="21">
    <citation type="journal article" date="2015" name="Mol. Cell">
        <title>K29-selective ubiquitin binding domain reveals structural basis of specificity and heterotypic nature of K29 polyubiquitin.</title>
        <authorList>
            <person name="Kristariyanto Y.A."/>
            <person name="Abdul Rehman S.A."/>
            <person name="Campbell D.G."/>
            <person name="Morrice N.A."/>
            <person name="Johnson C."/>
            <person name="Toth R."/>
            <person name="Kulathu Y."/>
        </authorList>
    </citation>
    <scope>UBIQUITINATION AT LYS-29</scope>
</reference>
<reference evidence="25" key="22">
    <citation type="journal article" date="1987" name="J. Mol. Biol.">
        <title>Structure of ubiquitin refined at 1.8-A resolution.</title>
        <authorList>
            <person name="Vijay-Kumar S."/>
            <person name="Bugg C.E."/>
            <person name="Cook W.J."/>
        </authorList>
    </citation>
    <scope>X-RAY CRYSTALLOGRAPHY (1.80 ANGSTROMS) OF 1-76</scope>
</reference>
<reference evidence="24" key="23">
    <citation type="journal article" date="1994" name="Biochem. J.">
        <title>Synthetic, structural and biological studies of the ubiquitin system: the total chemical synthesis of ubiquitin.</title>
        <authorList>
            <person name="Ramage R."/>
            <person name="Green J."/>
            <person name="Muir T.W."/>
            <person name="Ogunjobi O.M."/>
            <person name="Love S."/>
            <person name="Shaw K."/>
        </authorList>
    </citation>
    <scope>X-RAY CRYSTALLOGRAPHY (1.80 ANGSTROMS) OF 1-76</scope>
</reference>
<reference evidence="23" key="24">
    <citation type="journal article" date="1994" name="J. Mol. Biol.">
        <title>Structure of tetraubiquitin shows how multiubiquitin chains can be formed.</title>
        <authorList>
            <person name="Cook W.J."/>
            <person name="Jeffrey L.C."/>
            <person name="Kasperek E."/>
            <person name="Pickart C.M."/>
        </authorList>
    </citation>
    <scope>X-RAY CRYSTALLOGRAPHY (2.40 ANGSTROMS) OF 1-76</scope>
</reference>
<reference evidence="21" key="25">
    <citation type="journal article" date="2001" name="Acta Crystallogr. D">
        <title>Structure of a new crystal form of tetraubiquitin.</title>
        <authorList>
            <person name="Phillips C.L."/>
            <person name="Thrower J."/>
            <person name="Pickart C.M."/>
            <person name="Hill C.P."/>
        </authorList>
    </citation>
    <scope>X-RAY CRYSTALLOGRAPHY (2.70 ANGSTROMS) OF 1-76</scope>
</reference>
<reference evidence="22" key="26">
    <citation type="journal article" date="2002" name="Cell">
        <title>Crystal structure of a UBP-family deubiquitinating enzyme in isolation and in complex with ubiquitin aldehyde.</title>
        <authorList>
            <person name="Hu M."/>
            <person name="Li P."/>
            <person name="Li M."/>
            <person name="Li W."/>
            <person name="Yao T."/>
            <person name="Wu J.-W."/>
            <person name="Gu W."/>
            <person name="Cohen R.E."/>
            <person name="Shi Y."/>
        </authorList>
    </citation>
    <scope>X-RAY CRYSTALLOGRAPHY (2.30 ANGSTROMS) OF 1-76 IN COMPLEX WITH USP7</scope>
</reference>
<reference evidence="27" key="27">
    <citation type="journal article" date="2011" name="EMBO Rep.">
        <title>Polyubiquitin binding and cross-reactivity in the USP domain deubiquitinase USP21.</title>
        <authorList>
            <person name="Ye Y."/>
            <person name="Akutsu M."/>
            <person name="Reyes-Turcu F."/>
            <person name="Enchev R.I."/>
            <person name="Wilkinson K.D."/>
            <person name="Komander D."/>
        </authorList>
    </citation>
    <scope>X-RAY CRYSTALLOGRAPHY (2.70 ANGSTROMS) OF 1-152 IN COMPLEX WITH USP21</scope>
</reference>
<reference evidence="26" key="28">
    <citation type="journal article" date="2010" name="Nat. Struct. Mol. Biol.">
        <title>Lys11-linked ubiquitin chains adopt compact conformations and are preferentially hydrolyzed by the deubiquitinase Cezanne.</title>
        <authorList>
            <person name="Bremm A."/>
            <person name="Freund S.M."/>
            <person name="Komander D."/>
        </authorList>
    </citation>
    <scope>X-RAY CRYSTALLOGRAPHY (2.20 ANGSTROMS) OF 1-76</scope>
</reference>
<reference evidence="28 29" key="29">
    <citation type="journal article" date="2013" name="Cell">
        <title>OTU deubiquitinases reveal mechanisms of linkage specificity and enable ubiquitin chain restriction analysis.</title>
        <authorList>
            <person name="Mevissen T.E."/>
            <person name="Hospenthal M.K."/>
            <person name="Geurink P.P."/>
            <person name="Elliott P.R."/>
            <person name="Akutsu M."/>
            <person name="Arnaudo N."/>
            <person name="Ekkebus R."/>
            <person name="Kulathu Y."/>
            <person name="Wauer T."/>
            <person name="El Oualid F."/>
            <person name="Freund S.M."/>
            <person name="Ovaa H."/>
            <person name="Komander D."/>
        </authorList>
    </citation>
    <scope>X-RAY CRYSTALLOGRAPHY (2.35 ANGSTROMS) OF 609-684 IN COMPLEX WITH YOD1</scope>
</reference>
<reference evidence="30" key="30">
    <citation type="journal article" date="2015" name="EMBO J.">
        <title>Ubiquitin Ser65 phosphorylation affects ubiquitin structure, chain assembly and hydrolysis.</title>
        <authorList>
            <person name="Wauer T."/>
            <person name="Swatek K.N."/>
            <person name="Wagstaff J.L."/>
            <person name="Gladkova C."/>
            <person name="Pruneda J.N."/>
            <person name="Michel M.A."/>
            <person name="Gersch M."/>
            <person name="Johnson C.M."/>
            <person name="Freund S.M."/>
            <person name="Komander D."/>
        </authorList>
    </citation>
    <scope>X-RAY CRYSTALLOGRAPHY (1.90 ANGSTROMS) OF 153-228 PHOSPHORYLATED AT SER-65</scope>
    <scope>PHOSPHORYLATION AT SER-65</scope>
</reference>
<reference evidence="31 32 33" key="31">
    <citation type="journal article" date="2015" name="Mol. Cell">
        <title>Assembly and specific recognition of K29- and K33-linked polyubiquitin.</title>
        <authorList>
            <person name="Michel M.A."/>
            <person name="Elliott P.R."/>
            <person name="Swatek K.N."/>
            <person name="Simicek M."/>
            <person name="Pruneda J.N."/>
            <person name="Wagstaff J.L."/>
            <person name="Freund S.M."/>
            <person name="Komander D."/>
        </authorList>
    </citation>
    <scope>X-RAY CRYSTALLOGRAPHY (1.68 ANGSTROMS) OF 1-76 IN COMPLEX WITH ZRANB1</scope>
    <scope>UBIQUITINATION AT LYS-29 AND LYS-33</scope>
</reference>
<reference evidence="34" key="32">
    <citation type="journal article" date="2020" name="Mol. Cell">
        <title>Threonine ADP-ribosylation of ubiquitin by a bacterial effector family blocks host ubiquitination.</title>
        <authorList>
            <person name="Yan F."/>
            <person name="Huang C."/>
            <person name="Wang X."/>
            <person name="Tan J."/>
            <person name="Cheng S."/>
            <person name="Wan M."/>
            <person name="Wang Z."/>
            <person name="Wang S."/>
            <person name="Luo S."/>
            <person name="Li A."/>
            <person name="Guo X."/>
            <person name="Feng M."/>
            <person name="Liu X."/>
            <person name="Zhu Y."/>
            <person name="Zhou Y."/>
        </authorList>
    </citation>
    <scope>X-RAY CRYSTALLOGRAPHY (2.55 ANGSTROMS) OF 1-76</scope>
    <scope>ADP-RIBOSYLATION AT THR-66 (MICROBIAL INFECTION)</scope>
    <scope>MUTAGENESIS OF THR-66</scope>
</reference>
<reference evidence="35" key="33">
    <citation type="journal article" date="2020" name="Nat. Struct. Mol. Biol.">
        <title>FANCD2-FANCI is a clamp stabilized on DNA by monoubiquitination of FANCD2 during DNA repair.</title>
        <authorList>
            <person name="Alcon P."/>
            <person name="Shakeel S."/>
            <person name="Chen Z.A."/>
            <person name="Rappsilber J."/>
            <person name="Patel K.J."/>
            <person name="Passmore L.A."/>
        </authorList>
    </citation>
    <scope>STRUCTURE BY ELECTRON MICROSCOPY (3.80 ANGSTROMS) OF 1-76</scope>
</reference>
<reference evidence="36" key="34">
    <citation type="journal article" date="2023" name="EMBO J.">
        <title>Structural and biochemical basis of interdependent FANCI-FANCD2 ubiquitination.</title>
        <authorList>
            <person name="Lemonidis K."/>
            <person name="Rennie M.L."/>
            <person name="Arkinson C."/>
            <person name="Chaugule V.K."/>
            <person name="Clarke M."/>
            <person name="Streetley J."/>
            <person name="Walden H."/>
        </authorList>
    </citation>
    <scope>STRUCTURE BY ELECTRON MICROSCOPY (4.14 ANGSTROMS) OF 1-76</scope>
</reference>
<reference evidence="37" key="35">
    <citation type="journal article" date="2024" name="Nat. Struct. Mol. Biol.">
        <title>Mechanism of millisecond Lys48-linked poly-ubiquitin chain formation by cullin-RING ligases.</title>
        <authorList>
            <person name="Liwocha J."/>
            <person name="Li J."/>
            <person name="Purser N."/>
            <person name="Rattanasopa C."/>
            <person name="Maiwald S."/>
            <person name="Krist D.T."/>
            <person name="Scott D.C."/>
            <person name="Steigenberger B."/>
            <person name="Prabu J.R."/>
            <person name="Schulman B.A."/>
            <person name="Kleiger G."/>
        </authorList>
    </citation>
    <scope>STRUCTURE BY ELECTRON MICROSCOPY (3.76 ANGSTROMS) IN COMPLEX WITH UBE2R2 AND CRL2(FEM1C) COMPLEX</scope>
    <scope>FUNCTION</scope>
    <scope>MUTAGENESIS OF ARG-54; ASN-60 AND HIS-68</scope>
</reference>
<reference evidence="38 39 40 41" key="36">
    <citation type="journal article" date="2024" name="Nat. Commun.">
        <title>Structural basis for C-degron selectivity across KLHDCX family E3 ubiquitin ligases.</title>
        <authorList>
            <person name="Scott D.C."/>
            <person name="Chittori S."/>
            <person name="Purser N."/>
            <person name="King M.T."/>
            <person name="Maiwald S.A."/>
            <person name="Churion K."/>
            <person name="Nourse A."/>
            <person name="Lee C."/>
            <person name="Paulo J.A."/>
            <person name="Miller D.J."/>
            <person name="Elledge S.J."/>
            <person name="Harper J.W."/>
            <person name="Kleiger G."/>
            <person name="Schulman B.A."/>
        </authorList>
    </citation>
    <scope>X-RAY CRYSTALLOGRAPHY (1.88 ANGSTROMS) OF 1-76 IN COMPLEX WITH KLHDC3; ELOB AND ELOC</scope>
    <scope>STRUCTURE BY ELECTRON MICROSCOPY (3.20 ANGSTROMS) OF 1-76 IN COMPLEX WITH KLHDC10; ELOB AND ELOC</scope>
    <scope>FUNCTION</scope>
    <scope>MUTAGENESIS OF THR-7; THR-9; ARG-42; ILE-44; LYS-48; HIS-68; ARG-72; GLY-75 AND GLY-76</scope>
</reference>
<comment type="function">
    <molecule>Ubiquitin</molecule>
    <text evidence="4 14 15 16 17">Exists either covalently attached to another protein, or free (unanchored). When covalently bound, it is conjugated to target proteins via an isopeptide bond either as a monomer (monoubiquitin), a polymer linked via different Lys residues of the ubiquitin (polyubiquitin chains) or a linear polymer linked via the initiator Met of the ubiquitin (linear polyubiquitin chains). Polyubiquitin chains, when attached to a target protein, have different functions depending on the Lys residue of the ubiquitin that is linked: Lys-6-linked may be involved in DNA repair; Lys-11-linked is involved in ERAD (endoplasmic reticulum-associated degradation) and in cell-cycle regulation; Lys-29-linked is involved in proteotoxic stress response and cell cycle; Lys-33-linked is involved in kinase modification; Lys-48-linked is involved in protein degradation via the proteasome; Lys-63-linked is involved in endocytosis, DNA-damage responses as well as in signaling processes leading to activation of the transcription factor NF-kappa-B. Linear polymer chains formed via attachment by the initiator Met lead to cell signaling. Ubiquitin is usually conjugated to Lys residues of target proteins, however, in rare cases, conjugation to Cys or Ser residues has been observed. When polyubiquitin is free (unanchored-polyubiquitin), it also has distinct roles, such as in activation of protein kinases, and in signaling. During ubiquitination, the acceptor ubiquitin is positioned in the active site via direct interaction with the E2 ubiquitin-conjugating enzymes such as UBE2R2 (PubMed:38326650). As a monoubiquitin, its C-terminal glycine is recognized as a C-degron by Cul2-RING (CRL2) E3 ubiquitin-protein ligase complexes (PubMed:39548056).</text>
</comment>
<comment type="interaction">
    <interactant intactId="EBI-3390054">
        <id>P0CG48</id>
    </interactant>
    <interactant intactId="EBI-1569435">
        <id>Q9UNQ0</id>
        <label>ABCG2</label>
    </interactant>
    <organismsDiffer>false</organismsDiffer>
    <experiments>2</experiments>
</comment>
<comment type="interaction">
    <interactant intactId="EBI-3390054">
        <id>P0CG48</id>
    </interactant>
    <interactant intactId="EBI-954387">
        <id>Q16186</id>
        <label>ADRM1</label>
    </interactant>
    <organismsDiffer>false</organismsDiffer>
    <experiments>11</experiments>
</comment>
<comment type="interaction">
    <interactant intactId="EBI-3390054">
        <id>P0CG48</id>
    </interactant>
    <interactant intactId="EBI-346622">
        <id>Q9ULH1</id>
        <label>ASAP1</label>
    </interactant>
    <organismsDiffer>false</organismsDiffer>
    <experiments>2</experiments>
</comment>
<comment type="interaction">
    <interactant intactId="EBI-3390054">
        <id>P0CG48</id>
    </interactant>
    <interactant intactId="EBI-310968">
        <id>O43150</id>
        <label>ASAP2</label>
    </interactant>
    <organismsDiffer>false</organismsDiffer>
    <experiments>2</experiments>
</comment>
<comment type="interaction">
    <interactant intactId="EBI-3390054">
        <id>P0CG48</id>
    </interactant>
    <interactant intactId="EBI-946068">
        <id>P54252-1</id>
        <label>ATXN3</label>
    </interactant>
    <organismsDiffer>false</organismsDiffer>
    <experiments>2</experiments>
</comment>
<comment type="interaction">
    <interactant intactId="EBI-3390054">
        <id>P0CG48</id>
    </interactant>
    <interactant intactId="EBI-6968951">
        <id>Q9HB09-1</id>
        <label>BCL2L12</label>
    </interactant>
    <organismsDiffer>false</organismsDiffer>
    <experiments>3</experiments>
</comment>
<comment type="interaction">
    <interactant intactId="EBI-3390054">
        <id>P0CG48</id>
    </interactant>
    <interactant intactId="EBI-2341576">
        <id>P35226</id>
        <label>BMI1</label>
    </interactant>
    <organismsDiffer>false</organismsDiffer>
    <experiments>2</experiments>
</comment>
<comment type="interaction">
    <interactant intactId="EBI-3390054">
        <id>P0CG48</id>
    </interactant>
    <interactant intactId="EBI-1001438">
        <id>O60566</id>
        <label>BUB1B</label>
    </interactant>
    <organismsDiffer>false</organismsDiffer>
    <experiments>3</experiments>
</comment>
<comment type="interaction">
    <interactant intactId="EBI-3390054">
        <id>P0CG48</id>
    </interactant>
    <interactant intactId="EBI-2876678">
        <id>Q9H305</id>
        <label>CDIP1</label>
    </interactant>
    <organismsDiffer>false</organismsDiffer>
    <experiments>3</experiments>
</comment>
<comment type="interaction">
    <interactant intactId="EBI-3390054">
        <id>P0CG48</id>
    </interactant>
    <interactant intactId="EBI-444308">
        <id>P06493</id>
        <label>CDK1</label>
    </interactant>
    <organismsDiffer>false</organismsDiffer>
    <experiments>6</experiments>
</comment>
<comment type="interaction">
    <interactant intactId="EBI-3390054">
        <id>P0CG48</id>
    </interactant>
    <interactant intactId="EBI-7331284">
        <id>Q99062</id>
        <label>CSF3R</label>
    </interactant>
    <organismsDiffer>false</organismsDiffer>
    <experiments>2</experiments>
</comment>
<comment type="interaction">
    <interactant intactId="EBI-3390054">
        <id>P0CG48</id>
    </interactant>
    <interactant intactId="EBI-77321">
        <id>Q9UER7</id>
        <label>DAXX</label>
    </interactant>
    <organismsDiffer>false</organismsDiffer>
    <experiments>2</experiments>
</comment>
<comment type="interaction">
    <interactant intactId="EBI-3390054">
        <id>P0CG48</id>
    </interactant>
    <interactant intactId="EBI-724310">
        <id>Q15038</id>
        <label>DAZAP2</label>
    </interactant>
    <organismsDiffer>false</organismsDiffer>
    <experiments>6</experiments>
</comment>
<comment type="interaction">
    <interactant intactId="EBI-3390054">
        <id>P0CG48</id>
    </interactant>
    <interactant intactId="EBI-716083">
        <id>O43583</id>
        <label>DENR</label>
    </interactant>
    <organismsDiffer>false</organismsDiffer>
    <experiments>3</experiments>
</comment>
<comment type="interaction">
    <interactant intactId="EBI-3390054">
        <id>P0CG48</id>
    </interactant>
    <interactant intactId="EBI-2806959">
        <id>Q6ICB0</id>
        <label>DESI1</label>
    </interactant>
    <organismsDiffer>false</organismsDiffer>
    <experiments>3</experiments>
</comment>
<comment type="interaction">
    <interactant intactId="EBI-3390054">
        <id>P0CG48</id>
    </interactant>
    <interactant intactId="EBI-1755174">
        <id>Q86Y01</id>
        <label>DTX1</label>
    </interactant>
    <organismsDiffer>false</organismsDiffer>
    <experiments>2</experiments>
</comment>
<comment type="interaction">
    <interactant intactId="EBI-3390054">
        <id>P0CG48</id>
    </interactant>
    <interactant intactId="EBI-374260">
        <id>Q15717</id>
        <label>ELAVL1</label>
    </interactant>
    <organismsDiffer>false</organismsDiffer>
    <experiments>4</experiments>
</comment>
<comment type="interaction">
    <interactant intactId="EBI-3390054">
        <id>P0CG48</id>
    </interactant>
    <interactant intactId="EBI-12135243">
        <id>O95208-2</id>
        <label>EPN2</label>
    </interactant>
    <organismsDiffer>false</organismsDiffer>
    <experiments>3</experiments>
</comment>
<comment type="interaction">
    <interactant intactId="EBI-3390054">
        <id>P0CG48</id>
    </interactant>
    <interactant intactId="EBI-11978259">
        <id>Q92567-2</id>
        <label>FAM168A</label>
    </interactant>
    <organismsDiffer>false</organismsDiffer>
    <experiments>3</experiments>
</comment>
<comment type="interaction">
    <interactant intactId="EBI-3390054">
        <id>P0CG48</id>
    </interactant>
    <interactant intactId="EBI-3904795">
        <id>P25098</id>
        <label>GRK2</label>
    </interactant>
    <organismsDiffer>false</organismsDiffer>
    <experiments>3</experiments>
</comment>
<comment type="interaction">
    <interactant intactId="EBI-3390054">
        <id>P0CG48</id>
    </interactant>
    <interactant intactId="EBI-466029">
        <id>P42858</id>
        <label>HTT</label>
    </interactant>
    <organismsDiffer>false</organismsDiffer>
    <experiments>3</experiments>
</comment>
<comment type="interaction">
    <interactant intactId="EBI-3390054">
        <id>P0CG48</id>
    </interactant>
    <interactant intactId="EBI-81279">
        <id>Q9Y6K9</id>
        <label>IKBKG</label>
    </interactant>
    <organismsDiffer>false</organismsDiffer>
    <experiments>4</experiments>
</comment>
<comment type="interaction">
    <interactant intactId="EBI-3390054">
        <id>P0CG48</id>
    </interactant>
    <interactant intactId="EBI-2696013">
        <id>Q13887</id>
        <label>KLF5</label>
    </interactant>
    <organismsDiffer>false</organismsDiffer>
    <experiments>2</experiments>
</comment>
<comment type="interaction">
    <interactant intactId="EBI-3390054">
        <id>P0CG48</id>
    </interactant>
    <interactant intactId="EBI-1348">
        <id>P06239</id>
        <label>LCK</label>
    </interactant>
    <organismsDiffer>false</organismsDiffer>
    <experiments>2</experiments>
</comment>
<comment type="interaction">
    <interactant intactId="EBI-3390054">
        <id>P0CG48</id>
    </interactant>
    <interactant intactId="EBI-7886448">
        <id>P48357-3</id>
        <label>LEPR</label>
    </interactant>
    <organismsDiffer>false</organismsDiffer>
    <experiments>2</experiments>
</comment>
<comment type="interaction">
    <interactant intactId="EBI-3390054">
        <id>P0CG48</id>
    </interactant>
    <interactant intactId="EBI-1047372">
        <id>Q9UDY8</id>
        <label>MALT1</label>
    </interactant>
    <organismsDiffer>false</organismsDiffer>
    <experiments>4</experiments>
</comment>
<comment type="interaction">
    <interactant intactId="EBI-3390054">
        <id>P0CG48</id>
    </interactant>
    <interactant intactId="EBI-448104">
        <id>Q9Y6R4</id>
        <label>MAP3K4</label>
    </interactant>
    <organismsDiffer>false</organismsDiffer>
    <experiments>2</experiments>
</comment>
<comment type="interaction">
    <interactant intactId="EBI-3390054">
        <id>P0CG48</id>
    </interactant>
    <interactant intactId="EBI-358684">
        <id>O43318</id>
        <label>MAP3K7</label>
    </interactant>
    <organismsDiffer>false</organismsDiffer>
    <experiments>4</experiments>
</comment>
<comment type="interaction">
    <interactant intactId="EBI-3390054">
        <id>P0CG48</id>
    </interactant>
    <interactant intactId="EBI-2341610">
        <id>Q9NX47</id>
        <label>MARCHF5</label>
    </interactant>
    <organismsDiffer>false</organismsDiffer>
    <experiments>2</experiments>
</comment>
<comment type="interaction">
    <interactant intactId="EBI-3390054">
        <id>P0CG48</id>
    </interactant>
    <interactant intactId="EBI-389668">
        <id>Q00987</id>
        <label>MDM2</label>
    </interactant>
    <organismsDiffer>false</organismsDiffer>
    <experiments>6</experiments>
</comment>
<comment type="interaction">
    <interactant intactId="EBI-3390054">
        <id>P0CG48</id>
    </interactant>
    <interactant intactId="EBI-11980301">
        <id>Q8N3F0</id>
        <label>MTURN</label>
    </interactant>
    <organismsDiffer>false</organismsDiffer>
    <experiments>3</experiments>
</comment>
<comment type="interaction">
    <interactant intactId="EBI-3390054">
        <id>P0CG48</id>
    </interactant>
    <interactant intactId="EBI-447544">
        <id>P01106</id>
        <label>MYC</label>
    </interactant>
    <organismsDiffer>false</organismsDiffer>
    <experiments>5</experiments>
</comment>
<comment type="interaction">
    <interactant intactId="EBI-3390054">
        <id>P0CG48</id>
    </interactant>
    <interactant intactId="EBI-742698">
        <id>Q14596</id>
        <label>NBR1</label>
    </interactant>
    <organismsDiffer>false</organismsDiffer>
    <experiments>3</experiments>
</comment>
<comment type="interaction">
    <interactant intactId="EBI-3390054">
        <id>P0CG48</id>
    </interactant>
    <interactant intactId="EBI-713635">
        <id>O43639</id>
        <label>NCK2</label>
    </interactant>
    <organismsDiffer>false</organismsDiffer>
    <experiments>2</experiments>
</comment>
<comment type="interaction">
    <interactant intactId="EBI-3390054">
        <id>P0CG48</id>
    </interactant>
    <interactant intactId="EBI-3905796">
        <id>Q14934</id>
        <label>NFATC4</label>
    </interactant>
    <organismsDiffer>false</organismsDiffer>
    <experiments>3</experiments>
</comment>
<comment type="interaction">
    <interactant intactId="EBI-3390054">
        <id>P0CG48</id>
    </interactant>
    <interactant intactId="EBI-307386">
        <id>P25963</id>
        <label>NFKBIA</label>
    </interactant>
    <organismsDiffer>false</organismsDiffer>
    <experiments>3</experiments>
</comment>
<comment type="interaction">
    <interactant intactId="EBI-3390054">
        <id>P0CG48</id>
    </interactant>
    <interactant intactId="EBI-1994109">
        <id>Q8TAT6</id>
        <label>NPLOC4</label>
    </interactant>
    <organismsDiffer>false</organismsDiffer>
    <experiments>2</experiments>
</comment>
<comment type="interaction">
    <interactant intactId="EBI-3390054">
        <id>P0CG48</id>
    </interactant>
    <interactant intactId="EBI-355676">
        <id>P09874</id>
        <label>PARP1</label>
    </interactant>
    <organismsDiffer>false</organismsDiffer>
    <experiments>2</experiments>
</comment>
<comment type="interaction">
    <interactant intactId="EBI-3390054">
        <id>P0CG48</id>
    </interactant>
    <interactant intactId="EBI-2129767">
        <id>P35227</id>
        <label>PCGF2</label>
    </interactant>
    <organismsDiffer>false</organismsDiffer>
    <experiments>2</experiments>
</comment>
<comment type="interaction">
    <interactant intactId="EBI-3390054">
        <id>P0CG48</id>
    </interactant>
    <interactant intactId="EBI-373552">
        <id>Q96CS7</id>
        <label>PLEKHB2</label>
    </interactant>
    <organismsDiffer>false</organismsDiffer>
    <experiments>3</experiments>
</comment>
<comment type="interaction">
    <interactant intactId="EBI-3390054">
        <id>P0CG48</id>
    </interactant>
    <interactant intactId="EBI-769257">
        <id>Q9NRQ2</id>
        <label>PLSCR4</label>
    </interactant>
    <organismsDiffer>false</organismsDiffer>
    <experiments>3</experiments>
</comment>
<comment type="interaction">
    <interactant intactId="EBI-3390054">
        <id>P0CG48</id>
    </interactant>
    <interactant intactId="EBI-2827270">
        <id>Q9Y253</id>
        <label>POLH</label>
    </interactant>
    <organismsDiffer>false</organismsDiffer>
    <experiments>4</experiments>
</comment>
<comment type="interaction">
    <interactant intactId="EBI-3390054">
        <id>P0CG48</id>
    </interactant>
    <interactant intactId="EBI-741774">
        <id>Q9UNA4</id>
        <label>POLI</label>
    </interactant>
    <organismsDiffer>false</organismsDiffer>
    <experiments>4</experiments>
</comment>
<comment type="interaction">
    <interactant intactId="EBI-3390054">
        <id>P0CG48</id>
    </interactant>
    <interactant intactId="EBI-1383528">
        <id>P17252</id>
        <label>PRKCA</label>
    </interactant>
    <organismsDiffer>false</organismsDiffer>
    <experiments>2</experiments>
</comment>
<comment type="interaction">
    <interactant intactId="EBI-3390054">
        <id>P0CG48</id>
    </interactant>
    <interactant intactId="EBI-359318">
        <id>P55036</id>
        <label>PSMD4</label>
    </interactant>
    <organismsDiffer>false</organismsDiffer>
    <experiments>4</experiments>
</comment>
<comment type="interaction">
    <interactant intactId="EBI-3390054">
        <id>P0CG48</id>
    </interactant>
    <interactant intactId="EBI-954531">
        <id>P54727</id>
        <label>RAD23B</label>
    </interactant>
    <organismsDiffer>false</organismsDiffer>
    <experiments>5</experiments>
</comment>
<comment type="interaction">
    <interactant intactId="EBI-3390054">
        <id>P0CG48</id>
    </interactant>
    <interactant intactId="EBI-3916363">
        <id>Q96NR8</id>
        <label>RDH12</label>
    </interactant>
    <organismsDiffer>false</organismsDiffer>
    <experiments>2</experiments>
</comment>
<comment type="interaction">
    <interactant intactId="EBI-3390054">
        <id>P0CG48</id>
    </interactant>
    <interactant intactId="EBI-73886">
        <id>Q04206</id>
        <label>RELA</label>
    </interactant>
    <organismsDiffer>false</organismsDiffer>
    <experiments>6</experiments>
</comment>
<comment type="interaction">
    <interactant intactId="EBI-3390054">
        <id>P0CG48</id>
    </interactant>
    <interactant intactId="EBI-752324">
        <id>Q8N488</id>
        <label>RYBP</label>
    </interactant>
    <organismsDiffer>false</organismsDiffer>
    <experiments>3</experiments>
</comment>
<comment type="interaction">
    <interactant intactId="EBI-3390054">
        <id>P0CG48</id>
    </interactant>
    <interactant intactId="EBI-2880236">
        <id>Q9H4L4</id>
        <label>SENP3</label>
    </interactant>
    <organismsDiffer>false</organismsDiffer>
    <experiments>2</experiments>
</comment>
<comment type="interaction">
    <interactant intactId="EBI-3390054">
        <id>P0CG48</id>
    </interactant>
    <interactant intactId="EBI-346595">
        <id>Q96B97</id>
        <label>SH3KBP1</label>
    </interactant>
    <organismsDiffer>false</organismsDiffer>
    <experiments>6</experiments>
</comment>
<comment type="interaction">
    <interactant intactId="EBI-3390054">
        <id>P0CG48</id>
    </interactant>
    <interactant intactId="EBI-77848">
        <id>Q9Y5X1</id>
        <label>SNX9</label>
    </interactant>
    <organismsDiffer>false</organismsDiffer>
    <experiments>2</experiments>
</comment>
<comment type="interaction">
    <interactant intactId="EBI-3390054">
        <id>P0CG48</id>
    </interactant>
    <interactant intactId="EBI-307104">
        <id>Q13501</id>
        <label>SQSTM1</label>
    </interactant>
    <organismsDiffer>false</organismsDiffer>
    <experiments>3</experiments>
</comment>
<comment type="interaction">
    <interactant intactId="EBI-3390054">
        <id>P0CG48</id>
    </interactant>
    <interactant intactId="EBI-752333">
        <id>Q92783</id>
        <label>STAM</label>
    </interactant>
    <organismsDiffer>false</organismsDiffer>
    <experiments>2</experiments>
</comment>
<comment type="interaction">
    <interactant intactId="EBI-3390054">
        <id>P0CG48</id>
    </interactant>
    <interactant intactId="EBI-529518">
        <id>Q86VP1</id>
        <label>TAX1BP1</label>
    </interactant>
    <organismsDiffer>false</organismsDiffer>
    <experiments>8</experiments>
</comment>
<comment type="interaction">
    <interactant intactId="EBI-3390054">
        <id>P0CG48</id>
    </interactant>
    <interactant intactId="EBI-366083">
        <id>P04637</id>
        <label>TP53</label>
    </interactant>
    <organismsDiffer>false</organismsDiffer>
    <experiments>15</experiments>
</comment>
<comment type="interaction">
    <interactant intactId="EBI-3390054">
        <id>P0CG48</id>
    </interactant>
    <interactant intactId="EBI-359276">
        <id>Q9Y4K3</id>
        <label>TRAF6</label>
    </interactant>
    <organismsDiffer>false</organismsDiffer>
    <experiments>3</experiments>
</comment>
<comment type="interaction">
    <interactant intactId="EBI-3390054">
        <id>P0CG48</id>
    </interactant>
    <interactant intactId="EBI-749370">
        <id>Q9BSL1</id>
        <label>UBAC1</label>
    </interactant>
    <organismsDiffer>false</organismsDiffer>
    <experiments>3</experiments>
</comment>
<comment type="interaction">
    <interactant intactId="EBI-3390054">
        <id>P0CG48</id>
    </interactant>
    <interactant intactId="EBI-1051028">
        <id>P60604</id>
        <label>UBE2G2</label>
    </interactant>
    <organismsDiffer>false</organismsDiffer>
    <experiments>3</experiments>
</comment>
<comment type="interaction">
    <interactant intactId="EBI-3390054">
        <id>P0CG48</id>
    </interactant>
    <interactant intactId="EBI-11026619">
        <id>Q05086-3</id>
        <label>UBE3A</label>
    </interactant>
    <organismsDiffer>false</organismsDiffer>
    <experiments>3</experiments>
</comment>
<comment type="interaction">
    <interactant intactId="EBI-3390054">
        <id>P0CG48</id>
    </interactant>
    <interactant intactId="EBI-947187">
        <id>Q9UHD9</id>
        <label>UBQLN2</label>
    </interactant>
    <organismsDiffer>false</organismsDiffer>
    <experiments>3</experiments>
</comment>
<comment type="interaction">
    <interactant intactId="EBI-3390054">
        <id>P0CG48</id>
    </interactant>
    <interactant intactId="EBI-517127">
        <id>P98170</id>
        <label>XIAP</label>
    </interactant>
    <organismsDiffer>false</organismsDiffer>
    <experiments>3</experiments>
</comment>
<comment type="interaction">
    <interactant intactId="EBI-3390054">
        <id>P0CG48</id>
    </interactant>
    <interactant intactId="EBI-2510804">
        <id>Q5VVQ6</id>
        <label>YOD1</label>
    </interactant>
    <organismsDiffer>false</organismsDiffer>
    <experiments>3</experiments>
</comment>
<comment type="interaction">
    <interactant intactId="EBI-3390054">
        <id>P0CG48</id>
    </interactant>
    <interactant intactId="EBI-8028844">
        <id>O76080</id>
        <label>ZFAND5</label>
    </interactant>
    <organismsDiffer>false</organismsDiffer>
    <experiments>3</experiments>
</comment>
<comment type="interaction">
    <interactant intactId="EBI-3390054">
        <id>P0CG48</id>
    </interactant>
    <interactant intactId="EBI-527853">
        <id>Q9UGI0</id>
        <label>ZRANB1</label>
    </interactant>
    <organismsDiffer>false</organismsDiffer>
    <experiments>2</experiments>
</comment>
<comment type="interaction">
    <interactant intactId="EBI-3390054">
        <id>P0CG48</id>
    </interactant>
    <interactant intactId="EBI-5717">
        <id>P40087</id>
        <label>DDI1</label>
    </interactant>
    <organismsDiffer>true</organismsDiffer>
    <experiments>2</experiments>
</comment>
<comment type="interaction">
    <interactant intactId="EBI-3390054">
        <id>P0CG48</id>
    </interactant>
    <interactant intactId="EBI-6174">
        <id>P48510</id>
        <label>DSK2</label>
    </interactant>
    <organismsDiffer>true</organismsDiffer>
    <experiments>2</experiments>
</comment>
<comment type="interaction">
    <interactant intactId="EBI-3390054">
        <id>P0CG48</id>
    </interactant>
    <interactant intactId="EBI-7987880">
        <id>Q61088</id>
        <label>Fzd4</label>
    </interactant>
    <organismsDiffer>true</organismsDiffer>
    <experiments>3</experiments>
</comment>
<comment type="interaction">
    <interactant intactId="EBI-3390054">
        <id>P0CG48</id>
    </interactant>
    <interactant intactId="EBI-998011">
        <id>O88522</id>
        <label>Ikbkg</label>
    </interactant>
    <organismsDiffer>true</organismsDiffer>
    <experiments>3</experiments>
</comment>
<comment type="interaction">
    <interactant intactId="EBI-3390054">
        <id>P0CG48</id>
    </interactant>
    <interactant intactId="EBI-14668">
        <id>P32628</id>
        <label>RAD23</label>
    </interactant>
    <organismsDiffer>true</organismsDiffer>
    <experiments>2</experiments>
</comment>
<comment type="interaction">
    <interactant intactId="EBI-3390054">
        <id>P0CG48</id>
    </interactant>
    <interactant intactId="EBI-4437395">
        <id>Q84L31</id>
        <label>RAD23C</label>
    </interactant>
    <organismsDiffer>true</organismsDiffer>
    <experiments>2</experiments>
</comment>
<comment type="interaction">
    <interactant intactId="EBI-3390054">
        <id>P0CG48</id>
    </interactant>
    <interactant intactId="EBI-7266339">
        <id>Q62921</id>
        <label>Rbck1</label>
    </interactant>
    <organismsDiffer>true</organismsDiffer>
    <experiments>2</experiments>
</comment>
<comment type="interaction">
    <interactant intactId="EBI-3390054">
        <id>P0CG48</id>
    </interactant>
    <interactant intactId="EBI-25474079">
        <id>PRO_0000037311</id>
        <label>rep</label>
        <dbReference type="UniProtKB" id="P0C6X7"/>
    </interactant>
    <organismsDiffer>true</organismsDiffer>
    <experiments>3</experiments>
</comment>
<comment type="interaction">
    <interactant intactId="EBI-3390054">
        <id>P0CG48</id>
    </interactant>
    <interactant intactId="EBI-25492388">
        <id>PRO_0000449621</id>
        <label>rep</label>
        <dbReference type="UniProtKB" id="P0DTD1"/>
    </interactant>
    <organismsDiffer>true</organismsDiffer>
    <experiments>2</experiments>
</comment>
<comment type="interaction">
    <interactant intactId="EBI-3390054">
        <id>P0CG48</id>
    </interactant>
    <interactant intactId="EBI-7061954">
        <id>P04325</id>
        <label>rev</label>
    </interactant>
    <organismsDiffer>true</organismsDiffer>
    <experiments>2</experiments>
</comment>
<comment type="interaction">
    <interactant intactId="EBI-3390054">
        <id>P0CG48</id>
    </interactant>
    <interactant intactId="EBI-2620423">
        <id>P55034</id>
        <label>RPN10</label>
    </interactant>
    <organismsDiffer>true</organismsDiffer>
    <experiments>2</experiments>
</comment>
<comment type="interaction">
    <interactant intactId="EBI-3390054">
        <id>P0CG48</id>
    </interactant>
    <interactant intactId="EBI-7710745">
        <id>O48726</id>
        <label>RPN13</label>
    </interactant>
    <organismsDiffer>true</organismsDiffer>
    <experiments>9</experiments>
</comment>
<comment type="interaction">
    <interactant intactId="EBI-3390054">
        <id>P0CG48</id>
    </interactant>
    <interactant intactId="EBI-7091763">
        <id>Q9EPK8</id>
        <label>Trpv4</label>
    </interactant>
    <organismsDiffer>true</organismsDiffer>
    <experiments>3</experiments>
</comment>
<comment type="subcellular location">
    <molecule>Ubiquitin</molecule>
    <subcellularLocation>
        <location evidence="1">Cytoplasm</location>
    </subcellularLocation>
    <subcellularLocation>
        <location evidence="1">Nucleus</location>
    </subcellularLocation>
    <subcellularLocation>
        <location evidence="7">Mitochondrion outer membrane</location>
        <topology evidence="20">Peripheral membrane protein</topology>
    </subcellularLocation>
</comment>
<comment type="PTM">
    <molecule>Ubiquitin</molecule>
    <text evidence="6 7 8 9">Phosphorylated at Ser-65 by PINK1 during mitophagy. Phosphorylated ubiquitin specifically binds and activates parkin (PRKN), triggering mitophagy (PubMed:24660806, PubMed:24751536, PubMed:24784582, PubMed:25527291). Phosphorylation does not affect E1-mediated E2 charging of ubiquitin but affects discharging of E2 enzymes to form polyubiquitin chains. It also affects deubiquitination by deubiquitinase enzymes such as USP30 (PubMed:25527291).</text>
</comment>
<comment type="PTM">
    <molecule>Ubiquitin</molecule>
    <text evidence="12">Mono-ADP-ribosylated at the C-terminus by PARP9, a component of the PPAR9-DTX3L complex. ADP-ribosylation requires processing by E1 and E2 enzymes and prevents ubiquitin conjugation to substrates such as histones.</text>
</comment>
<comment type="PTM">
    <molecule>Ubiquitin</molecule>
    <text evidence="13">(Microbial infection) Mono-ADP-ribosylated at Thr-66 by the C.violaceum CteC virulence factor. ADP-ribosylation causes the shutdown of polyubiquitin synthesis and disrupts the recognition and reversal of polyubiquitin.</text>
</comment>
<comment type="miscellaneous">
    <text>Ubiquitin is encoded by 4 different genes. UBA52 and RPS27A genes code for a single copy of ubiquitin fused to the ribosomal proteins eL40 and eS31, respectively. UBB and UBC genes code for a polyubiquitin precursor with exact head to tail repeats, the number of repeats differ between species and strains.</text>
</comment>
<comment type="miscellaneous">
    <text>For the sake of clarity sequence features are annotated only for the first chain, and are not repeated for each of the following chains.</text>
</comment>
<comment type="similarity">
    <text evidence="18">Belongs to the ubiquitin family.</text>
</comment>
<organism>
    <name type="scientific">Homo sapiens</name>
    <name type="common">Human</name>
    <dbReference type="NCBI Taxonomy" id="9606"/>
    <lineage>
        <taxon>Eukaryota</taxon>
        <taxon>Metazoa</taxon>
        <taxon>Chordata</taxon>
        <taxon>Craniata</taxon>
        <taxon>Vertebrata</taxon>
        <taxon>Euteleostomi</taxon>
        <taxon>Mammalia</taxon>
        <taxon>Eutheria</taxon>
        <taxon>Euarchontoglires</taxon>
        <taxon>Primates</taxon>
        <taxon>Haplorrhini</taxon>
        <taxon>Catarrhini</taxon>
        <taxon>Hominidae</taxon>
        <taxon>Homo</taxon>
    </lineage>
</organism>
<feature type="chain" id="PRO_0000396178" description="Ubiquitin">
    <location>
        <begin position="1"/>
        <end position="76"/>
    </location>
</feature>
<feature type="chain" id="PRO_0000396179" description="Ubiquitin">
    <location>
        <begin position="77"/>
        <end position="152"/>
    </location>
</feature>
<feature type="chain" id="PRO_0000396180" description="Ubiquitin">
    <location>
        <begin position="153"/>
        <end position="228"/>
    </location>
</feature>
<feature type="chain" id="PRO_0000396181" description="Ubiquitin">
    <location>
        <begin position="229"/>
        <end position="304"/>
    </location>
</feature>
<feature type="chain" id="PRO_0000396182" description="Ubiquitin">
    <location>
        <begin position="305"/>
        <end position="380"/>
    </location>
</feature>
<feature type="chain" id="PRO_0000396183" description="Ubiquitin">
    <location>
        <begin position="381"/>
        <end position="456"/>
    </location>
</feature>
<feature type="chain" id="PRO_0000396184" description="Ubiquitin">
    <location>
        <begin position="457"/>
        <end position="532"/>
    </location>
</feature>
<feature type="chain" id="PRO_0000396185" description="Ubiquitin">
    <location>
        <begin position="533"/>
        <end position="608"/>
    </location>
</feature>
<feature type="chain" id="PRO_0000396186" description="Ubiquitin">
    <location>
        <begin position="609"/>
        <end position="684"/>
    </location>
</feature>
<feature type="propeptide" id="PRO_0000396187">
    <location>
        <position position="685"/>
    </location>
</feature>
<feature type="domain" description="Ubiquitin-like 1" evidence="2">
    <location>
        <begin position="1"/>
        <end position="76"/>
    </location>
</feature>
<feature type="domain" description="Ubiquitin-like 2" evidence="2">
    <location>
        <begin position="77"/>
        <end position="152"/>
    </location>
</feature>
<feature type="domain" description="Ubiquitin-like 3" evidence="2">
    <location>
        <begin position="153"/>
        <end position="228"/>
    </location>
</feature>
<feature type="domain" description="Ubiquitin-like 4" evidence="2">
    <location>
        <begin position="229"/>
        <end position="304"/>
    </location>
</feature>
<feature type="domain" description="Ubiquitin-like 5" evidence="2">
    <location>
        <begin position="305"/>
        <end position="380"/>
    </location>
</feature>
<feature type="domain" description="Ubiquitin-like 6" evidence="2">
    <location>
        <begin position="381"/>
        <end position="456"/>
    </location>
</feature>
<feature type="domain" description="Ubiquitin-like 7" evidence="2">
    <location>
        <begin position="457"/>
        <end position="532"/>
    </location>
</feature>
<feature type="domain" description="Ubiquitin-like 8" evidence="2">
    <location>
        <begin position="533"/>
        <end position="608"/>
    </location>
</feature>
<feature type="domain" description="Ubiquitin-like 9" evidence="2">
    <location>
        <begin position="609"/>
        <end position="684"/>
    </location>
</feature>
<feature type="site" description="Interacts with activating enzyme">
    <location>
        <position position="54"/>
    </location>
</feature>
<feature type="site" description="Essential for function">
    <location>
        <position position="68"/>
    </location>
</feature>
<feature type="site" description="Interacts with activating enzyme">
    <location>
        <position position="72"/>
    </location>
</feature>
<feature type="modified residue" description="Phosphoserine; by PINK1" evidence="6 7 8 9">
    <location>
        <position position="65"/>
    </location>
</feature>
<feature type="modified residue" description="(Microbial infection) ADP-ribosylthreonine" evidence="13">
    <location>
        <position position="66"/>
    </location>
</feature>
<feature type="modified residue" description="ADP-ribosylglycine" evidence="12">
    <location>
        <position position="76"/>
    </location>
</feature>
<feature type="cross-link" description="Glycyl lysine isopeptide (Lys-Gly) (interchain with G-Cter in ubiquitin)" evidence="3">
    <location>
        <position position="6"/>
    </location>
</feature>
<feature type="cross-link" description="Glycyl lysine isopeptide (Lys-Gly) (interchain with G-Cter in ubiquitin)" evidence="3 4">
    <location>
        <position position="11"/>
    </location>
</feature>
<feature type="cross-link" description="Glycyl lysine isopeptide (Lys-Gly) (interchain with G-Cter in ubiquitin)" evidence="19">
    <location>
        <position position="27"/>
    </location>
</feature>
<feature type="cross-link" description="Glycyl lysine isopeptide (Lys-Gly) (interchain with G-Cter in ubiquitin)" evidence="4 10 11 14">
    <location>
        <position position="29"/>
    </location>
</feature>
<feature type="cross-link" description="Glycyl lysine isopeptide (Lys-Gly) (interchain with G-Cter in ubiquitin)" evidence="11">
    <location>
        <position position="33"/>
    </location>
</feature>
<feature type="cross-link" description="Glycyl lysine isopeptide (Lys-Gly) (interchain with G-Cter in ubiquitin)" evidence="3 4">
    <location>
        <position position="48"/>
    </location>
</feature>
<feature type="cross-link" description="Glycyl lysine isopeptide (Lys-Gly) (interchain with G-Cter in ubiquitin)" evidence="4 5">
    <location>
        <position position="63"/>
    </location>
</feature>
<feature type="cross-link" description="Glycyl lysine isopeptide (Gly-Lys) (interchain with K-? in acceptor proteins)">
    <location>
        <position position="76"/>
    </location>
</feature>
<feature type="mutagenesis site" description="Impairs ubiquitination by CRL2(KLHDC3) E3 ligase complex; when associated with D-9." evidence="16">
    <original>T</original>
    <variation>D</variation>
    <location>
        <position position="7"/>
    </location>
</feature>
<feature type="mutagenesis site" description="Impairs ubiquitination by CRL2(KLHDC3) E3 ligase complex; when associated with D-7." evidence="16">
    <original>T</original>
    <variation>D</variation>
    <location>
        <position position="9"/>
    </location>
</feature>
<feature type="mutagenesis site" description="Impairs ubiquitination by CRL2(KLHDC3) E3 ligase complex; when associated with D-44. Impairs ubiquitination by CRL2(KLHDC3) E3 ligase complex; when associated with A-72." evidence="16">
    <original>R</original>
    <variation>E</variation>
    <location>
        <position position="42"/>
    </location>
</feature>
<feature type="mutagenesis site" description="Impairs ubiquitination by CRL2(KLHDC3) E3 ligase complex; when associated with E-42. Impairs ubiquitination by CRL2(KLHDC3) E3 ligase complex; when associated with A-68." evidence="16">
    <original>I</original>
    <variation>D</variation>
    <location>
        <position position="44"/>
    </location>
</feature>
<feature type="mutagenesis site" description="No effect on HLTF-mediated polyubiquitination of PCNA. Impairs ubiquitination by CRL2(KLHDC3) E3 ligase complex." evidence="5 16">
    <original>K</original>
    <variation>R</variation>
    <location>
        <position position="48"/>
    </location>
</feature>
<feature type="mutagenesis site" description="Decreases affinity for UBE2R2 in CRL2(FEM1C)-UBE2R2 complex." evidence="15">
    <original>R</original>
    <variation>D</variation>
    <location>
        <position position="54"/>
    </location>
</feature>
<feature type="mutagenesis site" description="Decreases affinity for UBE2R2 in CRL2(FEM1C)-UBE2R2 complex." evidence="15">
    <original>N</original>
    <variation>R</variation>
    <location>
        <position position="60"/>
    </location>
</feature>
<feature type="mutagenesis site" description="Abolishes HLTF-mediated polyubiquitination of PCNA." evidence="5">
    <original>K</original>
    <variation>R</variation>
    <location>
        <position position="63"/>
    </location>
</feature>
<feature type="mutagenesis site" description="Prevents phosphorylation in case of mitophagy. Decreased localization of PRKN to mitochondria." evidence="6 7 8">
    <original>S</original>
    <variation>A</variation>
    <location>
        <position position="65"/>
    </location>
</feature>
<feature type="mutagenesis site" description="Phosphomimetic mutant that binds and activates PRKN." evidence="7">
    <original>S</original>
    <variation>D</variation>
    <location>
        <position position="65"/>
    </location>
</feature>
<feature type="mutagenesis site" description="Phosphomimetic mutant that binds and activates PRKN." evidence="7">
    <original>S</original>
    <variation>E</variation>
    <location>
        <position position="65"/>
    </location>
</feature>
<feature type="mutagenesis site" description="Abolishes CteC-catalyzed ADP-ribosylation." evidence="13">
    <original>T</original>
    <variation>A</variation>
    <location>
        <position position="66"/>
    </location>
</feature>
<feature type="mutagenesis site" description="Decreases affinity for UBE2R2 in ECS(FEM1C)-UBE2R2 complex. Impairs ubiquitination by CRL2(KLHDC3) E3 ligase complex; when associated with D-44. Impairs ubiquitination by CRL2(KLHDC3) E3 ligase complex; when associated with A-72." evidence="15 16">
    <original>H</original>
    <variation>A</variation>
    <location>
        <position position="68"/>
    </location>
</feature>
<feature type="mutagenesis site" description="Loss of DTX3L-mediated polyubiquitination of histone H3 and H4." evidence="12">
    <original>H</original>
    <variation>G</variation>
    <location>
        <position position="68"/>
    </location>
</feature>
<feature type="mutagenesis site" description="Impairs ubiquitination by CRL2(KLHDC3) E3 ligase complex; when associated with E-42. Impairs ubiquitination by CRL2(KLHDC3) E3 ligase complex; when associated with A-68." evidence="16">
    <original>R</original>
    <variation>A</variation>
    <location>
        <position position="72"/>
    </location>
</feature>
<feature type="mutagenesis site" description="No effect on ADP-ribosylation." evidence="12">
    <original>R</original>
    <variation>G</variation>
    <location>
        <position position="72"/>
    </location>
</feature>
<feature type="mutagenesis site" description="No effect on ADP-ribosylation, when associated with K-74." evidence="12">
    <original>R</original>
    <variation>K</variation>
    <location>
        <position position="72"/>
    </location>
</feature>
<feature type="mutagenesis site" description="No effect on ADP-ribosylation." evidence="12">
    <original>R</original>
    <variation>G</variation>
    <location>
        <position position="74"/>
    </location>
</feature>
<feature type="mutagenesis site" description="No effect on ADP-ribosylation, when associated with K-72." evidence="12">
    <original>R</original>
    <variation>K</variation>
    <location>
        <position position="74"/>
    </location>
</feature>
<feature type="mutagenesis site" description="No effect on ubiquitination by CRL2(KLHDC3) E3 ligase complex. Impairs ubiquitination by CRL2(KLHDC10) E3 ligase complex." evidence="16">
    <original>G</original>
    <variation>R</variation>
    <variation>Q</variation>
    <location>
        <position position="75"/>
    </location>
</feature>
<feature type="mutagenesis site" description="Loss of ADP-ribosylation. Impairs ubiquitination by CRL2(KLHDC3) E3 ligase complex. No effect on ubiquitination by CRL2(KLHDC10) E3 ligase complex." evidence="12 16">
    <original>G</original>
    <variation>A</variation>
    <location>
        <position position="76"/>
    </location>
</feature>
<feature type="mutagenesis site" description="Impairs ubiquitination by CRL2(KLHDC3) and CRL2(KLHDC10) E3 ligase complex." evidence="16">
    <original>G</original>
    <variation>D</variation>
    <location>
        <position position="76"/>
    </location>
</feature>
<feature type="sequence conflict" description="In Ref. 4; AC126309." evidence="18" ref="4">
    <original>P</original>
    <variation>S</variation>
    <location>
        <position position="190"/>
    </location>
</feature>
<feature type="sequence conflict" description="In Ref. 6; BAA09860." evidence="18" ref="6">
    <original>V</original>
    <variation>G</variation>
    <location>
        <position position="397"/>
    </location>
</feature>
<feature type="strand" evidence="55">
    <location>
        <begin position="381"/>
        <end position="386"/>
    </location>
</feature>
<feature type="strand" evidence="55">
    <location>
        <begin position="392"/>
        <end position="397"/>
    </location>
</feature>
<feature type="helix" evidence="55">
    <location>
        <begin position="403"/>
        <end position="414"/>
    </location>
</feature>
<feature type="helix" evidence="55">
    <location>
        <begin position="418"/>
        <end position="420"/>
    </location>
</feature>
<feature type="strand" evidence="55">
    <location>
        <begin position="421"/>
        <end position="425"/>
    </location>
</feature>
<feature type="strand" evidence="47">
    <location>
        <begin position="428"/>
        <end position="430"/>
    </location>
</feature>
<feature type="turn" evidence="55">
    <location>
        <begin position="436"/>
        <end position="440"/>
    </location>
</feature>
<feature type="strand" evidence="55">
    <location>
        <begin position="446"/>
        <end position="451"/>
    </location>
</feature>
<feature type="strand" evidence="48">
    <location>
        <begin position="458"/>
        <end position="463"/>
    </location>
</feature>
<feature type="strand" evidence="48">
    <location>
        <begin position="468"/>
        <end position="472"/>
    </location>
</feature>
<feature type="helix" evidence="48">
    <location>
        <begin position="479"/>
        <end position="490"/>
    </location>
</feature>
<feature type="helix" evidence="48">
    <location>
        <begin position="494"/>
        <end position="496"/>
    </location>
</feature>
<feature type="strand" evidence="48">
    <location>
        <begin position="497"/>
        <end position="501"/>
    </location>
</feature>
<feature type="helix" evidence="48">
    <location>
        <begin position="513"/>
        <end position="515"/>
    </location>
</feature>
<feature type="strand" evidence="48">
    <location>
        <begin position="522"/>
        <end position="527"/>
    </location>
</feature>
<feature type="turn" evidence="54">
    <location>
        <begin position="529"/>
        <end position="531"/>
    </location>
</feature>
<feature type="strand" evidence="43">
    <location>
        <begin position="534"/>
        <end position="539"/>
    </location>
</feature>
<feature type="strand" evidence="51">
    <location>
        <begin position="540"/>
        <end position="542"/>
    </location>
</feature>
<feature type="strand" evidence="43">
    <location>
        <begin position="544"/>
        <end position="548"/>
    </location>
</feature>
<feature type="helix" evidence="43">
    <location>
        <begin position="555"/>
        <end position="566"/>
    </location>
</feature>
<feature type="helix" evidence="43">
    <location>
        <begin position="570"/>
        <end position="572"/>
    </location>
</feature>
<feature type="strand" evidence="43">
    <location>
        <begin position="573"/>
        <end position="577"/>
    </location>
</feature>
<feature type="strand" evidence="44">
    <location>
        <begin position="579"/>
        <end position="581"/>
    </location>
</feature>
<feature type="strand" evidence="51">
    <location>
        <begin position="586"/>
        <end position="588"/>
    </location>
</feature>
<feature type="helix" evidence="43">
    <location>
        <begin position="589"/>
        <end position="591"/>
    </location>
</feature>
<feature type="strand" evidence="43">
    <location>
        <begin position="598"/>
        <end position="603"/>
    </location>
</feature>
<feature type="strand" evidence="52">
    <location>
        <begin position="610"/>
        <end position="615"/>
    </location>
</feature>
<feature type="strand" evidence="46">
    <location>
        <begin position="616"/>
        <end position="618"/>
    </location>
</feature>
<feature type="strand" evidence="52">
    <location>
        <begin position="620"/>
        <end position="624"/>
    </location>
</feature>
<feature type="strand" evidence="42">
    <location>
        <begin position="627"/>
        <end position="630"/>
    </location>
</feature>
<feature type="helix" evidence="52">
    <location>
        <begin position="631"/>
        <end position="642"/>
    </location>
</feature>
<feature type="helix" evidence="52">
    <location>
        <begin position="646"/>
        <end position="648"/>
    </location>
</feature>
<feature type="strand" evidence="52">
    <location>
        <begin position="649"/>
        <end position="653"/>
    </location>
</feature>
<feature type="strand" evidence="53">
    <location>
        <begin position="656"/>
        <end position="658"/>
    </location>
</feature>
<feature type="strand" evidence="45">
    <location>
        <begin position="662"/>
        <end position="664"/>
    </location>
</feature>
<feature type="helix" evidence="52">
    <location>
        <begin position="665"/>
        <end position="667"/>
    </location>
</feature>
<feature type="turn" evidence="49">
    <location>
        <begin position="668"/>
        <end position="670"/>
    </location>
</feature>
<feature type="strand" evidence="50">
    <location>
        <begin position="671"/>
        <end position="673"/>
    </location>
</feature>
<feature type="strand" evidence="52">
    <location>
        <begin position="674"/>
        <end position="679"/>
    </location>
</feature>
<feature type="strand" evidence="53">
    <location>
        <begin position="681"/>
        <end position="683"/>
    </location>
</feature>
<accession>P0CG48</accession>
<accession>P02248</accession>
<accession>P02249</accession>
<accession>P02250</accession>
<accession>P62988</accession>
<accession>Q29120</accession>
<accession>Q6LBL4</accession>
<accession>Q6LDU5</accession>
<accession>Q8WYN8</accession>
<accession>Q91887</accession>
<accession>Q91888</accession>
<accession>Q9BWD6</accession>
<accession>Q9BX98</accession>
<accession>Q9UEF2</accession>
<accession>Q9UEG1</accession>
<accession>Q9UEK8</accession>
<accession>Q9UPK7</accession>
<proteinExistence type="evidence at protein level"/>
<name>UBC_HUMAN</name>
<dbReference type="EMBL" id="M26880">
    <property type="protein sequence ID" value="AAA36789.1"/>
    <property type="molecule type" value="mRNA"/>
</dbReference>
<dbReference type="EMBL" id="AB009010">
    <property type="protein sequence ID" value="BAA23632.1"/>
    <property type="molecule type" value="mRNA"/>
</dbReference>
<dbReference type="EMBL" id="AB089613">
    <property type="protein sequence ID" value="BAC56951.1"/>
    <property type="molecule type" value="Genomic_DNA"/>
</dbReference>
<dbReference type="EMBL" id="AC126309">
    <property type="status" value="NOT_ANNOTATED_CDS"/>
    <property type="molecule type" value="Genomic_DNA"/>
</dbReference>
<dbReference type="EMBL" id="BC039193">
    <property type="protein sequence ID" value="AAH39193.1"/>
    <property type="molecule type" value="mRNA"/>
</dbReference>
<dbReference type="EMBL" id="D63791">
    <property type="protein sequence ID" value="BAA09860.1"/>
    <property type="molecule type" value="Genomic_DNA"/>
</dbReference>
<dbReference type="EMBL" id="AB003730">
    <property type="protein sequence ID" value="BAA23486.1"/>
    <property type="molecule type" value="Genomic_DNA"/>
</dbReference>
<dbReference type="EMBL" id="M17597">
    <property type="protein sequence ID" value="AAA36787.1"/>
    <property type="molecule type" value="mRNA"/>
</dbReference>
<dbReference type="CCDS" id="CCDS9260.1"/>
<dbReference type="PIR" id="A02574">
    <property type="entry name" value="UQHU"/>
</dbReference>
<dbReference type="PIR" id="A22005">
    <property type="entry name" value="UQHUC"/>
</dbReference>
<dbReference type="PIR" id="A29526">
    <property type="entry name" value="A29526"/>
</dbReference>
<dbReference type="RefSeq" id="NP_066289.3">
    <property type="nucleotide sequence ID" value="NM_021009.7"/>
</dbReference>
<dbReference type="PDB" id="1C3T">
    <property type="method" value="NMR"/>
    <property type="chains" value="A=1-76"/>
</dbReference>
<dbReference type="PDB" id="1CMX">
    <property type="method" value="X-ray"/>
    <property type="resolution" value="2.25 A"/>
    <property type="chains" value="B/D=1-76"/>
</dbReference>
<dbReference type="PDB" id="1D3Z">
    <property type="method" value="NMR"/>
    <property type="chains" value="A=1-76"/>
</dbReference>
<dbReference type="PDB" id="1F9J">
    <property type="method" value="X-ray"/>
    <property type="resolution" value="2.70 A"/>
    <property type="chains" value="A/B=1-76"/>
</dbReference>
<dbReference type="PDB" id="1FXT">
    <property type="method" value="NMR"/>
    <property type="chains" value="B=1-76"/>
</dbReference>
<dbReference type="PDB" id="1G6J">
    <property type="method" value="NMR"/>
    <property type="chains" value="A=1-76"/>
</dbReference>
<dbReference type="PDB" id="1GJZ">
    <property type="method" value="NMR"/>
    <property type="chains" value="A/B=1-51"/>
</dbReference>
<dbReference type="PDB" id="1NBF">
    <property type="method" value="X-ray"/>
    <property type="resolution" value="2.30 A"/>
    <property type="chains" value="C/D=1-76"/>
</dbReference>
<dbReference type="PDB" id="1OGW">
    <property type="method" value="X-ray"/>
    <property type="resolution" value="1.32 A"/>
    <property type="chains" value="A=1-76"/>
</dbReference>
<dbReference type="PDB" id="1Q5W">
    <property type="method" value="NMR"/>
    <property type="chains" value="B=1-76"/>
</dbReference>
<dbReference type="PDB" id="1S1Q">
    <property type="method" value="X-ray"/>
    <property type="resolution" value="2.00 A"/>
    <property type="chains" value="B/D=1-76"/>
</dbReference>
<dbReference type="PDB" id="1SIF">
    <property type="method" value="X-ray"/>
    <property type="resolution" value="2.18 A"/>
    <property type="chains" value="A=6-76"/>
</dbReference>
<dbReference type="PDB" id="1TBE">
    <property type="method" value="X-ray"/>
    <property type="resolution" value="2.40 A"/>
    <property type="chains" value="A/B=1-76"/>
</dbReference>
<dbReference type="PDB" id="1UBI">
    <property type="method" value="X-ray"/>
    <property type="resolution" value="1.80 A"/>
    <property type="chains" value="A=1-76"/>
</dbReference>
<dbReference type="PDB" id="1UBQ">
    <property type="method" value="X-ray"/>
    <property type="resolution" value="1.80 A"/>
    <property type="chains" value="A=1-76"/>
</dbReference>
<dbReference type="PDB" id="1UD7">
    <property type="method" value="NMR"/>
    <property type="chains" value="A=1-76"/>
</dbReference>
<dbReference type="PDB" id="1XD3">
    <property type="method" value="X-ray"/>
    <property type="resolution" value="1.45 A"/>
    <property type="chains" value="B/D=1-75"/>
</dbReference>
<dbReference type="PDB" id="1XQQ">
    <property type="method" value="NMR"/>
    <property type="chains" value="A=1-76"/>
</dbReference>
<dbReference type="PDB" id="1YX5">
    <property type="method" value="NMR"/>
    <property type="chains" value="B=1-76"/>
</dbReference>
<dbReference type="PDB" id="1YX6">
    <property type="method" value="NMR"/>
    <property type="chains" value="B=1-76"/>
</dbReference>
<dbReference type="PDB" id="1ZGU">
    <property type="method" value="NMR"/>
    <property type="chains" value="B=1-76"/>
</dbReference>
<dbReference type="PDB" id="2AYO">
    <property type="method" value="X-ray"/>
    <property type="resolution" value="3.50 A"/>
    <property type="chains" value="B=1-76"/>
</dbReference>
<dbReference type="PDB" id="2BGF">
    <property type="method" value="NMR"/>
    <property type="chains" value="A/B=1-76"/>
</dbReference>
<dbReference type="PDB" id="2DEN">
    <property type="method" value="NMR"/>
    <property type="chains" value="B=1-76"/>
</dbReference>
<dbReference type="PDB" id="2FUH">
    <property type="method" value="NMR"/>
    <property type="chains" value="B=1-76"/>
</dbReference>
<dbReference type="PDB" id="2G45">
    <property type="method" value="X-ray"/>
    <property type="resolution" value="1.99 A"/>
    <property type="chains" value="B/E=1-76"/>
</dbReference>
<dbReference type="PDB" id="2GBJ">
    <property type="method" value="X-ray"/>
    <property type="resolution" value="1.35 A"/>
    <property type="chains" value="A/B=1-76"/>
</dbReference>
<dbReference type="PDB" id="2GBK">
    <property type="method" value="X-ray"/>
    <property type="resolution" value="1.99 A"/>
    <property type="chains" value="A/B/C/D=10-76"/>
</dbReference>
<dbReference type="PDB" id="2GBM">
    <property type="method" value="X-ray"/>
    <property type="resolution" value="1.55 A"/>
    <property type="chains" value="A/B/C/D=1-76"/>
</dbReference>
<dbReference type="PDB" id="2GBN">
    <property type="method" value="X-ray"/>
    <property type="resolution" value="1.60 A"/>
    <property type="chains" value="A=1-76"/>
</dbReference>
<dbReference type="PDB" id="2GBR">
    <property type="method" value="X-ray"/>
    <property type="resolution" value="2.00 A"/>
    <property type="chains" value="A/B/C=1-76"/>
</dbReference>
<dbReference type="PDB" id="2GMI">
    <property type="method" value="X-ray"/>
    <property type="resolution" value="2.50 A"/>
    <property type="chains" value="C=1-76"/>
</dbReference>
<dbReference type="PDB" id="2HTH">
    <property type="method" value="X-ray"/>
    <property type="resolution" value="2.70 A"/>
    <property type="chains" value="A=1-76"/>
</dbReference>
<dbReference type="PDB" id="2IBI">
    <property type="method" value="X-ray"/>
    <property type="resolution" value="2.20 A"/>
    <property type="chains" value="B=1-75"/>
</dbReference>
<dbReference type="PDB" id="2J7Q">
    <property type="method" value="X-ray"/>
    <property type="resolution" value="1.80 A"/>
    <property type="chains" value="B/D=1-75"/>
</dbReference>
<dbReference type="PDB" id="2JF5">
    <property type="method" value="X-ray"/>
    <property type="resolution" value="1.95 A"/>
    <property type="chains" value="A/B=1-76"/>
</dbReference>
<dbReference type="PDB" id="2JRI">
    <property type="method" value="NMR"/>
    <property type="chains" value="B/C=1-76"/>
</dbReference>
<dbReference type="PDB" id="2JY6">
    <property type="method" value="NMR"/>
    <property type="chains" value="A=1-76"/>
</dbReference>
<dbReference type="PDB" id="2JZZ">
    <property type="method" value="NMR"/>
    <property type="chains" value="A=1-76"/>
</dbReference>
<dbReference type="PDB" id="2K25">
    <property type="method" value="NMR"/>
    <property type="chains" value="A=1-75"/>
</dbReference>
<dbReference type="PDB" id="2K6D">
    <property type="method" value="NMR"/>
    <property type="chains" value="B=1-75"/>
</dbReference>
<dbReference type="PDB" id="2K8B">
    <property type="method" value="NMR"/>
    <property type="chains" value="A=1-76"/>
</dbReference>
<dbReference type="PDB" id="2K8C">
    <property type="method" value="NMR"/>
    <property type="chains" value="A=1-76"/>
</dbReference>
<dbReference type="PDB" id="2KDF">
    <property type="method" value="NMR"/>
    <property type="chains" value="B/C=1-76"/>
</dbReference>
<dbReference type="PDB" id="2KHW">
    <property type="method" value="NMR"/>
    <property type="chains" value="B=1-76"/>
</dbReference>
<dbReference type="PDB" id="2KJH">
    <property type="method" value="NMR"/>
    <property type="chains" value="B=1-75"/>
</dbReference>
<dbReference type="PDB" id="2KLG">
    <property type="method" value="NMR"/>
    <property type="chains" value="A=1-76"/>
</dbReference>
<dbReference type="PDB" id="2KN5">
    <property type="method" value="NMR"/>
    <property type="chains" value="A=1-76"/>
</dbReference>
<dbReference type="PDB" id="2KX0">
    <property type="method" value="NMR"/>
    <property type="chains" value="A=74-151"/>
</dbReference>
<dbReference type="PDB" id="2L3Z">
    <property type="method" value="NMR"/>
    <property type="chains" value="A=1-76"/>
</dbReference>
<dbReference type="PDB" id="2LD9">
    <property type="method" value="NMR"/>
    <property type="chains" value="A=76-152"/>
</dbReference>
<dbReference type="PDB" id="2LVO">
    <property type="method" value="NMR"/>
    <property type="chains" value="A=1-76"/>
</dbReference>
<dbReference type="PDB" id="2LVP">
    <property type="method" value="NMR"/>
    <property type="chains" value="A/B=1-76"/>
</dbReference>
<dbReference type="PDB" id="2LVQ">
    <property type="method" value="NMR"/>
    <property type="chains" value="A/B=1-76"/>
</dbReference>
<dbReference type="PDB" id="2LZ6">
    <property type="method" value="NMR"/>
    <property type="chains" value="A=609-684"/>
</dbReference>
<dbReference type="PDB" id="2MBO">
    <property type="method" value="NMR"/>
    <property type="chains" value="A/B=609-684"/>
</dbReference>
<dbReference type="PDB" id="2MBQ">
    <property type="method" value="NMR"/>
    <property type="chains" value="A/B=609-684"/>
</dbReference>
<dbReference type="PDB" id="2MCN">
    <property type="method" value="NMR"/>
    <property type="chains" value="B=609-684"/>
</dbReference>
<dbReference type="PDB" id="2MI8">
    <property type="method" value="NMR"/>
    <property type="chains" value="A=609-684"/>
</dbReference>
<dbReference type="PDB" id="2MJ5">
    <property type="method" value="NMR"/>
    <property type="chains" value="A=609-684"/>
</dbReference>
<dbReference type="PDB" id="2MOR">
    <property type="method" value="NMR"/>
    <property type="chains" value="A=609-684"/>
</dbReference>
<dbReference type="PDB" id="2MRE">
    <property type="method" value="NMR"/>
    <property type="chains" value="A=609-684"/>
</dbReference>
<dbReference type="PDB" id="2MWS">
    <property type="method" value="NMR"/>
    <property type="chains" value="A=609-684"/>
</dbReference>
<dbReference type="PDB" id="2N2K">
    <property type="method" value="NMR"/>
    <property type="chains" value="A=609-684, B=609-679"/>
</dbReference>
<dbReference type="PDB" id="2NR2">
    <property type="method" value="NMR"/>
    <property type="chains" value="A=1-76"/>
</dbReference>
<dbReference type="PDB" id="2O6V">
    <property type="method" value="X-ray"/>
    <property type="resolution" value="2.20 A"/>
    <property type="chains" value="A/B/C/D/E/F/G/H=1-76"/>
</dbReference>
<dbReference type="PDB" id="2OJR">
    <property type="method" value="X-ray"/>
    <property type="resolution" value="2.60 A"/>
    <property type="chains" value="A=1-76"/>
</dbReference>
<dbReference type="PDB" id="2PE9">
    <property type="method" value="NMR"/>
    <property type="chains" value="A/B=1-76"/>
</dbReference>
<dbReference type="PDB" id="2PEA">
    <property type="method" value="NMR"/>
    <property type="chains" value="A/B=1-76"/>
</dbReference>
<dbReference type="PDB" id="2RR9">
    <property type="method" value="NMR"/>
    <property type="chains" value="A/B=1-76"/>
</dbReference>
<dbReference type="PDB" id="2RU6">
    <property type="method" value="NMR"/>
    <property type="chains" value="A=609-684"/>
</dbReference>
<dbReference type="PDB" id="2W9N">
    <property type="method" value="X-ray"/>
    <property type="resolution" value="2.25 A"/>
    <property type="chains" value="A=1-152"/>
</dbReference>
<dbReference type="PDB" id="2WDT">
    <property type="method" value="X-ray"/>
    <property type="resolution" value="2.30 A"/>
    <property type="chains" value="B/D=1-75"/>
</dbReference>
<dbReference type="PDB" id="2XEW">
    <property type="method" value="X-ray"/>
    <property type="resolution" value="2.20 A"/>
    <property type="chains" value="A/B/C/D/E/F/G/H/I/J/K/L=1-76"/>
</dbReference>
<dbReference type="PDB" id="2Y5B">
    <property type="method" value="X-ray"/>
    <property type="resolution" value="2.70 A"/>
    <property type="chains" value="B/F=1-152"/>
</dbReference>
<dbReference type="PDB" id="2Z59">
    <property type="method" value="NMR"/>
    <property type="chains" value="B=1-76"/>
</dbReference>
<dbReference type="PDB" id="2ZCB">
    <property type="method" value="X-ray"/>
    <property type="resolution" value="1.60 A"/>
    <property type="chains" value="A/B/C=1-76"/>
</dbReference>
<dbReference type="PDB" id="2ZVN">
    <property type="method" value="X-ray"/>
    <property type="resolution" value="3.00 A"/>
    <property type="chains" value="A/C/E/G=1-152"/>
</dbReference>
<dbReference type="PDB" id="2ZVO">
    <property type="method" value="X-ray"/>
    <property type="resolution" value="2.90 A"/>
    <property type="chains" value="A/G=1-152"/>
</dbReference>
<dbReference type="PDB" id="3A33">
    <property type="method" value="X-ray"/>
    <property type="resolution" value="2.20 A"/>
    <property type="chains" value="B=1-76"/>
</dbReference>
<dbReference type="PDB" id="3ALB">
    <property type="method" value="X-ray"/>
    <property type="resolution" value="1.85 A"/>
    <property type="chains" value="A/B/C/D=1-76"/>
</dbReference>
<dbReference type="PDB" id="3AUL">
    <property type="method" value="X-ray"/>
    <property type="resolution" value="2.39 A"/>
    <property type="chains" value="A/B=1-76"/>
</dbReference>
<dbReference type="PDB" id="3B08">
    <property type="method" value="X-ray"/>
    <property type="resolution" value="1.70 A"/>
    <property type="chains" value="A/D/G/J=1-152"/>
</dbReference>
<dbReference type="PDB" id="3B0A">
    <property type="method" value="X-ray"/>
    <property type="resolution" value="1.90 A"/>
    <property type="chains" value="A/D=1-152"/>
</dbReference>
<dbReference type="PDB" id="3BY4">
    <property type="method" value="X-ray"/>
    <property type="resolution" value="1.55 A"/>
    <property type="chains" value="B=1-75"/>
</dbReference>
<dbReference type="PDB" id="3C0R">
    <property type="method" value="X-ray"/>
    <property type="resolution" value="2.31 A"/>
    <property type="chains" value="B/D=1-75"/>
</dbReference>
<dbReference type="PDB" id="3DVG">
    <property type="method" value="X-ray"/>
    <property type="resolution" value="2.60 A"/>
    <property type="chains" value="X/Y=1-76"/>
</dbReference>
<dbReference type="PDB" id="3DVN">
    <property type="method" value="X-ray"/>
    <property type="resolution" value="2.70 A"/>
    <property type="chains" value="U/V/X/Y=1-76"/>
</dbReference>
<dbReference type="PDB" id="3EEC">
    <property type="method" value="X-ray"/>
    <property type="resolution" value="3.00 A"/>
    <property type="chains" value="A/B=1-76"/>
</dbReference>
<dbReference type="PDB" id="3EFU">
    <property type="method" value="X-ray"/>
    <property type="resolution" value="1.84 A"/>
    <property type="chains" value="A=1-76"/>
</dbReference>
<dbReference type="PDB" id="3EHV">
    <property type="method" value="X-ray"/>
    <property type="resolution" value="1.81 A"/>
    <property type="chains" value="A/B/C=1-76"/>
</dbReference>
<dbReference type="PDB" id="3H7P">
    <property type="method" value="X-ray"/>
    <property type="resolution" value="1.90 A"/>
    <property type="chains" value="A/B=1-76"/>
</dbReference>
<dbReference type="PDB" id="3H7S">
    <property type="method" value="X-ray"/>
    <property type="resolution" value="2.30 A"/>
    <property type="chains" value="A/B=1-76"/>
</dbReference>
<dbReference type="PDB" id="3HM3">
    <property type="method" value="X-ray"/>
    <property type="resolution" value="1.96 A"/>
    <property type="chains" value="A/B/C/D=1-76"/>
</dbReference>
<dbReference type="PDB" id="3I3T">
    <property type="method" value="X-ray"/>
    <property type="resolution" value="2.59 A"/>
    <property type="chains" value="B/D/F/H=1-75"/>
</dbReference>
<dbReference type="PDB" id="3IFW">
    <property type="method" value="X-ray"/>
    <property type="resolution" value="2.40 A"/>
    <property type="chains" value="B=1-75"/>
</dbReference>
<dbReference type="PDB" id="3IHP">
    <property type="method" value="X-ray"/>
    <property type="resolution" value="2.80 A"/>
    <property type="chains" value="C/D=1-75"/>
</dbReference>
<dbReference type="PDB" id="3JSV">
    <property type="method" value="X-ray"/>
    <property type="resolution" value="2.70 A"/>
    <property type="chains" value="A/B=1-76"/>
</dbReference>
<dbReference type="PDB" id="3JVZ">
    <property type="method" value="X-ray"/>
    <property type="resolution" value="3.30 A"/>
    <property type="chains" value="X/Y=1-76"/>
</dbReference>
<dbReference type="PDB" id="3JW0">
    <property type="method" value="X-ray"/>
    <property type="resolution" value="3.10 A"/>
    <property type="chains" value="X/Y=1-76"/>
</dbReference>
<dbReference type="PDB" id="3K9O">
    <property type="method" value="X-ray"/>
    <property type="resolution" value="1.80 A"/>
    <property type="chains" value="B=76-151"/>
</dbReference>
<dbReference type="PDB" id="3K9P">
    <property type="method" value="X-ray"/>
    <property type="resolution" value="2.80 A"/>
    <property type="chains" value="B=1-76"/>
</dbReference>
<dbReference type="PDB" id="3KVF">
    <property type="method" value="X-ray"/>
    <property type="resolution" value="2.80 A"/>
    <property type="chains" value="B=1-75"/>
</dbReference>
<dbReference type="PDB" id="3KW5">
    <property type="method" value="X-ray"/>
    <property type="resolution" value="2.83 A"/>
    <property type="chains" value="B=1-75"/>
</dbReference>
<dbReference type="PDB" id="3LDZ">
    <property type="method" value="X-ray"/>
    <property type="resolution" value="2.60 A"/>
    <property type="chains" value="E/F/G=1-73"/>
</dbReference>
<dbReference type="PDB" id="3MHS">
    <property type="method" value="X-ray"/>
    <property type="resolution" value="1.89 A"/>
    <property type="chains" value="D=1-76"/>
</dbReference>
<dbReference type="PDB" id="3MTN">
    <property type="method" value="X-ray"/>
    <property type="resolution" value="2.70 A"/>
    <property type="chains" value="B/D=1-76"/>
</dbReference>
<dbReference type="PDB" id="3N30">
    <property type="method" value="X-ray"/>
    <property type="resolution" value="3.00 A"/>
    <property type="chains" value="A/B=1-76"/>
</dbReference>
<dbReference type="PDB" id="3N32">
    <property type="method" value="X-ray"/>
    <property type="resolution" value="1.80 A"/>
    <property type="chains" value="A=1-76"/>
</dbReference>
<dbReference type="PDB" id="3N3K">
    <property type="method" value="X-ray"/>
    <property type="resolution" value="2.60 A"/>
    <property type="chains" value="B=5-76"/>
</dbReference>
<dbReference type="PDB" id="3NS8">
    <property type="method" value="X-ray"/>
    <property type="resolution" value="1.71 A"/>
    <property type="chains" value="A/B=1-76"/>
</dbReference>
<dbReference type="PDB" id="3O65">
    <property type="method" value="X-ray"/>
    <property type="resolution" value="2.70 A"/>
    <property type="chains" value="B/D/F/H=1-75"/>
</dbReference>
<dbReference type="PDB" id="3OFI">
    <property type="method" value="X-ray"/>
    <property type="resolution" value="2.35 A"/>
    <property type="chains" value="C/D=1-76"/>
</dbReference>
<dbReference type="PDB" id="3OJ3">
    <property type="method" value="X-ray"/>
    <property type="resolution" value="2.50 A"/>
    <property type="chains" value="A/B/C/D/E/F/G/H=1-76"/>
</dbReference>
<dbReference type="PDB" id="3OJ4">
    <property type="method" value="X-ray"/>
    <property type="resolution" value="3.40 A"/>
    <property type="chains" value="B/E=1-76"/>
</dbReference>
<dbReference type="PDB" id="3ONS">
    <property type="method" value="X-ray"/>
    <property type="resolution" value="1.80 A"/>
    <property type="chains" value="A=1-72"/>
</dbReference>
<dbReference type="PDB" id="3PRM">
    <property type="method" value="X-ray"/>
    <property type="resolution" value="2.30 A"/>
    <property type="chains" value="B/D=1-75"/>
</dbReference>
<dbReference type="PDB" id="3PT2">
    <property type="method" value="X-ray"/>
    <property type="resolution" value="2.50 A"/>
    <property type="chains" value="B=1-75"/>
</dbReference>
<dbReference type="PDB" id="3PTF">
    <property type="method" value="X-ray"/>
    <property type="resolution" value="2.70 A"/>
    <property type="chains" value="C/D=1-76"/>
</dbReference>
<dbReference type="PDB" id="3Q3F">
    <property type="method" value="X-ray"/>
    <property type="resolution" value="2.17 A"/>
    <property type="chains" value="A=2-76"/>
</dbReference>
<dbReference type="PDB" id="3RUL">
    <property type="method" value="X-ray"/>
    <property type="resolution" value="2.50 A"/>
    <property type="chains" value="A/B/C/D=1-75"/>
</dbReference>
<dbReference type="PDB" id="3TMP">
    <property type="method" value="X-ray"/>
    <property type="resolution" value="1.91 A"/>
    <property type="chains" value="B/D/F/H=1-76"/>
</dbReference>
<dbReference type="PDB" id="3U30">
    <property type="method" value="X-ray"/>
    <property type="resolution" value="2.43 A"/>
    <property type="chains" value="A/D=1-152"/>
</dbReference>
<dbReference type="PDB" id="3UGB">
    <property type="method" value="X-ray"/>
    <property type="resolution" value="2.35 A"/>
    <property type="chains" value="B=1-76"/>
</dbReference>
<dbReference type="PDB" id="3V6C">
    <property type="method" value="X-ray"/>
    <property type="resolution" value="1.70 A"/>
    <property type="chains" value="B=74-150"/>
</dbReference>
<dbReference type="PDB" id="3V6E">
    <property type="method" value="X-ray"/>
    <property type="resolution" value="2.10 A"/>
    <property type="chains" value="B=74-150"/>
</dbReference>
<dbReference type="PDB" id="3VFK">
    <property type="method" value="X-ray"/>
    <property type="resolution" value="2.80 A"/>
    <property type="chains" value="A=1-75"/>
</dbReference>
<dbReference type="PDB" id="3VUW">
    <property type="method" value="X-ray"/>
    <property type="resolution" value="1.95 A"/>
    <property type="chains" value="A/B/C=1-76"/>
</dbReference>
<dbReference type="PDB" id="3VUX">
    <property type="method" value="X-ray"/>
    <property type="resolution" value="1.70 A"/>
    <property type="chains" value="A/B/C=1-76"/>
</dbReference>
<dbReference type="PDB" id="3VUY">
    <property type="method" value="X-ray"/>
    <property type="resolution" value="1.98 A"/>
    <property type="chains" value="A/B/C=1-76"/>
</dbReference>
<dbReference type="PDB" id="3WXE">
    <property type="method" value="X-ray"/>
    <property type="resolution" value="2.50 A"/>
    <property type="chains" value="B=533-680"/>
</dbReference>
<dbReference type="PDB" id="3WXF">
    <property type="method" value="X-ray"/>
    <property type="resolution" value="2.30 A"/>
    <property type="chains" value="B/D=533-680"/>
</dbReference>
<dbReference type="PDB" id="3ZLZ">
    <property type="method" value="X-ray"/>
    <property type="resolution" value="2.90 A"/>
    <property type="chains" value="A/B=1-76"/>
</dbReference>
<dbReference type="PDB" id="3ZNH">
    <property type="method" value="X-ray"/>
    <property type="resolution" value="2.30 A"/>
    <property type="chains" value="B=1-75"/>
</dbReference>
<dbReference type="PDB" id="3ZNI">
    <property type="method" value="X-ray"/>
    <property type="resolution" value="2.21 A"/>
    <property type="chains" value="D/H/L/P=1-76"/>
</dbReference>
<dbReference type="PDB" id="3ZNZ">
    <property type="method" value="X-ray"/>
    <property type="resolution" value="1.90 A"/>
    <property type="chains" value="B=1-152"/>
</dbReference>
<dbReference type="PDB" id="4AP4">
    <property type="method" value="X-ray"/>
    <property type="resolution" value="2.21 A"/>
    <property type="chains" value="C/F=608-684"/>
</dbReference>
<dbReference type="PDB" id="4AUQ">
    <property type="method" value="X-ray"/>
    <property type="resolution" value="2.18 A"/>
    <property type="chains" value="C/F=1-76"/>
</dbReference>
<dbReference type="PDB" id="4BOS">
    <property type="method" value="X-ray"/>
    <property type="resolution" value="2.35 A"/>
    <property type="chains" value="C/E=609-684, F=612-625"/>
</dbReference>
<dbReference type="PDB" id="4BOZ">
    <property type="method" value="X-ray"/>
    <property type="resolution" value="3.03 A"/>
    <property type="chains" value="B/C/E=1-76"/>
</dbReference>
<dbReference type="PDB" id="4BVU">
    <property type="method" value="X-ray"/>
    <property type="resolution" value="2.70 A"/>
    <property type="chains" value="C=609-684"/>
</dbReference>
<dbReference type="PDB" id="4DDG">
    <property type="method" value="X-ray"/>
    <property type="resolution" value="3.30 A"/>
    <property type="chains" value="D/E/F/G/H/I/M/N/O/P/Q/R=1-76"/>
</dbReference>
<dbReference type="PDB" id="4DDI">
    <property type="method" value="X-ray"/>
    <property type="resolution" value="3.80 A"/>
    <property type="chains" value="G/H/I/J/K/L=1-76"/>
</dbReference>
<dbReference type="PDB" id="4DHJ">
    <property type="method" value="X-ray"/>
    <property type="resolution" value="2.35 A"/>
    <property type="chains" value="B/F/J/M=1-76, D/H=1-75"/>
</dbReference>
<dbReference type="PDB" id="4DHZ">
    <property type="method" value="X-ray"/>
    <property type="resolution" value="3.11 A"/>
    <property type="chains" value="B=1-76, E=1-75"/>
</dbReference>
<dbReference type="PDB" id="4FJV">
    <property type="method" value="X-ray"/>
    <property type="resolution" value="2.05 A"/>
    <property type="chains" value="B/D=1-76"/>
</dbReference>
<dbReference type="PDB" id="4HK2">
    <property type="method" value="X-ray"/>
    <property type="resolution" value="1.40 A"/>
    <property type="chains" value="A/B/C/D=1-76"/>
</dbReference>
<dbReference type="PDB" id="4HXD">
    <property type="method" value="X-ray"/>
    <property type="resolution" value="2.85 A"/>
    <property type="chains" value="A/C=1-75"/>
</dbReference>
<dbReference type="PDB" id="4I6L">
    <property type="method" value="X-ray"/>
    <property type="resolution" value="2.49 A"/>
    <property type="chains" value="B=77-150"/>
</dbReference>
<dbReference type="PDB" id="4I6N">
    <property type="method" value="X-ray"/>
    <property type="resolution" value="1.70 A"/>
    <property type="chains" value="B/D=1-75"/>
</dbReference>
<dbReference type="PDB" id="4IG7">
    <property type="method" value="X-ray"/>
    <property type="resolution" value="2.00 A"/>
    <property type="chains" value="B=1-75"/>
</dbReference>
<dbReference type="PDB" id="4IUM">
    <property type="method" value="X-ray"/>
    <property type="resolution" value="1.45 A"/>
    <property type="chains" value="B=1-75"/>
</dbReference>
<dbReference type="PDB" id="4JQW">
    <property type="method" value="X-ray"/>
    <property type="resolution" value="2.90 A"/>
    <property type="chains" value="C=609-684"/>
</dbReference>
<dbReference type="PDB" id="4K1R">
    <property type="method" value="X-ray"/>
    <property type="resolution" value="1.63 A"/>
    <property type="chains" value="B/D=607-684"/>
</dbReference>
<dbReference type="PDB" id="4K7S">
    <property type="method" value="X-ray"/>
    <property type="resolution" value="1.76 A"/>
    <property type="chains" value="A/B/C=1-76"/>
</dbReference>
<dbReference type="PDB" id="4K7U">
    <property type="method" value="X-ray"/>
    <property type="resolution" value="1.76 A"/>
    <property type="chains" value="A/B/C=1-76"/>
</dbReference>
<dbReference type="PDB" id="4K7W">
    <property type="method" value="X-ray"/>
    <property type="resolution" value="1.76 A"/>
    <property type="chains" value="A/B/C=1-76"/>
</dbReference>
<dbReference type="PDB" id="4KSK">
    <property type="method" value="X-ray"/>
    <property type="resolution" value="2.40 A"/>
    <property type="chains" value="C/D=76-152"/>
</dbReference>
<dbReference type="PDB" id="4KSL">
    <property type="method" value="X-ray"/>
    <property type="resolution" value="2.83 A"/>
    <property type="chains" value="C/D/F/H/J/L/N/P/R/T/V/X=76-228"/>
</dbReference>
<dbReference type="PDB" id="4LCD">
    <property type="method" value="X-ray"/>
    <property type="resolution" value="3.10 A"/>
    <property type="chains" value="E/F=609-683"/>
</dbReference>
<dbReference type="PDB" id="4LDT">
    <property type="method" value="X-ray"/>
    <property type="resolution" value="1.90 A"/>
    <property type="chains" value="B/D=609-684"/>
</dbReference>
<dbReference type="PDB" id="4MDK">
    <property type="method" value="X-ray"/>
    <property type="resolution" value="2.61 A"/>
    <property type="chains" value="E/F/G/H=608-684"/>
</dbReference>
<dbReference type="PDB" id="4MM3">
    <property type="method" value="X-ray"/>
    <property type="resolution" value="2.75 A"/>
    <property type="chains" value="A=609-684"/>
</dbReference>
<dbReference type="PDB" id="4MSM">
    <property type="method" value="X-ray"/>
    <property type="resolution" value="1.74 A"/>
    <property type="chains" value="B/D=609-684"/>
</dbReference>
<dbReference type="PDB" id="4MSQ">
    <property type="method" value="X-ray"/>
    <property type="resolution" value="1.95 A"/>
    <property type="chains" value="B/D=609-684"/>
</dbReference>
<dbReference type="PDB" id="4NQK">
    <property type="method" value="X-ray"/>
    <property type="resolution" value="3.70 A"/>
    <property type="chains" value="E/F/G/H/I/J=608-684"/>
</dbReference>
<dbReference type="PDB" id="4UN2">
    <property type="method" value="X-ray"/>
    <property type="resolution" value="1.51 A"/>
    <property type="chains" value="A=609-684"/>
</dbReference>
<dbReference type="PDB" id="4V3K">
    <property type="method" value="X-ray"/>
    <property type="resolution" value="2.04 A"/>
    <property type="chains" value="B/E=609-684"/>
</dbReference>
<dbReference type="PDB" id="4V3L">
    <property type="method" value="X-ray"/>
    <property type="resolution" value="1.53 A"/>
    <property type="chains" value="B/D=609-684"/>
</dbReference>
<dbReference type="PDB" id="4WZP">
    <property type="method" value="X-ray"/>
    <property type="resolution" value="1.90 A"/>
    <property type="chains" value="A/B/C/D/E/F/G/H=153-228"/>
</dbReference>
<dbReference type="PDB" id="4XOK">
    <property type="method" value="X-ray"/>
    <property type="resolution" value="2.20 A"/>
    <property type="chains" value="A/B/C=1-76"/>
</dbReference>
<dbReference type="PDB" id="4XOL">
    <property type="method" value="X-ray"/>
    <property type="resolution" value="2.91 A"/>
    <property type="chains" value="A/B=1-76"/>
</dbReference>
<dbReference type="PDB" id="4ZQS">
    <property type="method" value="X-ray"/>
    <property type="resolution" value="1.80 A"/>
    <property type="chains" value="A/B=533-684"/>
</dbReference>
<dbReference type="PDB" id="5A5B">
    <property type="method" value="EM"/>
    <property type="resolution" value="9.50 A"/>
    <property type="chains" value="9=609-684"/>
</dbReference>
<dbReference type="PDB" id="5AF4">
    <property type="method" value="X-ray"/>
    <property type="resolution" value="1.85 A"/>
    <property type="chains" value="A/B/C/D/E/F/G/H=1-76"/>
</dbReference>
<dbReference type="PDB" id="5AF5">
    <property type="method" value="X-ray"/>
    <property type="resolution" value="1.68 A"/>
    <property type="chains" value="A=1-73"/>
</dbReference>
<dbReference type="PDB" id="5AF6">
    <property type="method" value="X-ray"/>
    <property type="resolution" value="3.40 A"/>
    <property type="chains" value="A/B/C/D/E=1-76"/>
</dbReference>
<dbReference type="PDB" id="5AIT">
    <property type="method" value="X-ray"/>
    <property type="resolution" value="3.40 A"/>
    <property type="chains" value="C/F=609-684"/>
</dbReference>
<dbReference type="PDB" id="5AIU">
    <property type="method" value="X-ray"/>
    <property type="resolution" value="2.21 A"/>
    <property type="chains" value="C/F=609-684"/>
</dbReference>
<dbReference type="PDB" id="5B83">
    <property type="method" value="X-ray"/>
    <property type="resolution" value="2.69 A"/>
    <property type="chains" value="A/D=1-304"/>
</dbReference>
<dbReference type="PDB" id="5C7J">
    <property type="method" value="X-ray"/>
    <property type="resolution" value="3.00 A"/>
    <property type="chains" value="C/D=1-74"/>
</dbReference>
<dbReference type="PDB" id="5C7M">
    <property type="method" value="X-ray"/>
    <property type="resolution" value="3.03 A"/>
    <property type="chains" value="B/C=1-75"/>
</dbReference>
<dbReference type="PDB" id="5E6J">
    <property type="method" value="X-ray"/>
    <property type="resolution" value="2.85 A"/>
    <property type="chains" value="B/E=609-683"/>
</dbReference>
<dbReference type="PDB" id="5H07">
    <property type="method" value="X-ray"/>
    <property type="resolution" value="2.59 A"/>
    <property type="chains" value="A=1-228"/>
</dbReference>
<dbReference type="PDB" id="5NL4">
    <property type="method" value="X-ray"/>
    <property type="resolution" value="1.32 A"/>
    <property type="chains" value="A/B/C=1-76"/>
</dbReference>
<dbReference type="PDB" id="5NLF">
    <property type="method" value="X-ray"/>
    <property type="resolution" value="1.50 A"/>
    <property type="chains" value="A/B/C=1-76"/>
</dbReference>
<dbReference type="PDB" id="5NLI">
    <property type="method" value="X-ray"/>
    <property type="resolution" value="1.53 A"/>
    <property type="chains" value="A/B/C=1-76"/>
</dbReference>
<dbReference type="PDB" id="5NMC">
    <property type="method" value="X-ray"/>
    <property type="resolution" value="1.70 A"/>
    <property type="chains" value="A/B/C=1-76"/>
</dbReference>
<dbReference type="PDB" id="5OE7">
    <property type="method" value="X-ray"/>
    <property type="resolution" value="2.95 A"/>
    <property type="chains" value="B=1-146"/>
</dbReference>
<dbReference type="PDB" id="5OHV">
    <property type="method" value="X-ray"/>
    <property type="resolution" value="2.80 A"/>
    <property type="chains" value="A/C=1-76"/>
</dbReference>
<dbReference type="PDB" id="5OXH">
    <property type="method" value="X-ray"/>
    <property type="resolution" value="1.60 A"/>
    <property type="chains" value="A=1-76"/>
</dbReference>
<dbReference type="PDB" id="5OXI">
    <property type="method" value="X-ray"/>
    <property type="resolution" value="1.63 A"/>
    <property type="chains" value="A/B=1-76"/>
</dbReference>
<dbReference type="PDB" id="5UDH">
    <property type="method" value="X-ray"/>
    <property type="resolution" value="3.24 A"/>
    <property type="chains" value="E=1-76"/>
</dbReference>
<dbReference type="PDB" id="5WQ4">
    <property type="method" value="X-ray"/>
    <property type="resolution" value="3.00 A"/>
    <property type="chains" value="A/B=1-152"/>
</dbReference>
<dbReference type="PDB" id="5ZQ3">
    <property type="method" value="X-ray"/>
    <property type="resolution" value="2.18 A"/>
    <property type="chains" value="C/D=609-684"/>
</dbReference>
<dbReference type="PDB" id="5ZQ4">
    <property type="method" value="X-ray"/>
    <property type="resolution" value="2.22 A"/>
    <property type="chains" value="C/D=609-684"/>
</dbReference>
<dbReference type="PDB" id="5ZQ5">
    <property type="method" value="X-ray"/>
    <property type="resolution" value="2.49 A"/>
    <property type="chains" value="B/D=609-684"/>
</dbReference>
<dbReference type="PDB" id="5ZQ6">
    <property type="method" value="X-ray"/>
    <property type="resolution" value="3.01 A"/>
    <property type="chains" value="B/D=609-684"/>
</dbReference>
<dbReference type="PDB" id="5ZQ7">
    <property type="method" value="X-ray"/>
    <property type="resolution" value="2.85 A"/>
    <property type="chains" value="B/D=609-684"/>
</dbReference>
<dbReference type="PDB" id="6A43">
    <property type="method" value="X-ray"/>
    <property type="resolution" value="2.40 A"/>
    <property type="chains" value="A=1-76"/>
</dbReference>
<dbReference type="PDB" id="6A44">
    <property type="method" value="X-ray"/>
    <property type="resolution" value="2.40 A"/>
    <property type="chains" value="A=1-76"/>
</dbReference>
<dbReference type="PDB" id="6AQR">
    <property type="method" value="X-ray"/>
    <property type="resolution" value="2.10 A"/>
    <property type="chains" value="D=609-684"/>
</dbReference>
<dbReference type="PDB" id="6B7M">
    <property type="method" value="X-ray"/>
    <property type="resolution" value="1.70 A"/>
    <property type="chains" value="B/C=609-684"/>
</dbReference>
<dbReference type="PDB" id="6B7O">
    <property type="method" value="X-ray"/>
    <property type="resolution" value="1.85 A"/>
    <property type="chains" value="B/C=609-684"/>
</dbReference>
<dbReference type="PDB" id="6EQI">
    <property type="method" value="X-ray"/>
    <property type="resolution" value="3.10 A"/>
    <property type="chains" value="A=1-76"/>
</dbReference>
<dbReference type="PDB" id="6K2U">
    <property type="method" value="X-ray"/>
    <property type="resolution" value="2.55 A"/>
    <property type="chains" value="B=1-76"/>
</dbReference>
<dbReference type="PDB" id="6KBE">
    <property type="method" value="X-ray"/>
    <property type="resolution" value="2.34 A"/>
    <property type="chains" value="G=1-152"/>
</dbReference>
<dbReference type="PDB" id="6N13">
    <property type="method" value="NMR"/>
    <property type="chains" value="A=1-76"/>
</dbReference>
<dbReference type="PDB" id="6N6R">
    <property type="method" value="X-ray"/>
    <property type="resolution" value="1.95 A"/>
    <property type="chains" value="A/C=1-76"/>
</dbReference>
<dbReference type="PDB" id="6NQA">
    <property type="method" value="EM"/>
    <property type="resolution" value="3.54 A"/>
    <property type="chains" value="L=1-76"/>
</dbReference>
<dbReference type="PDB" id="6NXK">
    <property type="method" value="X-ray"/>
    <property type="resolution" value="2.20 A"/>
    <property type="chains" value="A/B=1-76"/>
</dbReference>
<dbReference type="PDB" id="6OI4">
    <property type="method" value="X-ray"/>
    <property type="resolution" value="1.76 A"/>
    <property type="chains" value="C/D=1-76"/>
</dbReference>
<dbReference type="PDB" id="6P5B">
    <property type="method" value="X-ray"/>
    <property type="resolution" value="2.10 A"/>
    <property type="chains" value="E=1-76"/>
</dbReference>
<dbReference type="PDB" id="6Q00">
    <property type="method" value="X-ray"/>
    <property type="resolution" value="0.85 A"/>
    <property type="chains" value="A=1-76"/>
</dbReference>
<dbReference type="PDB" id="6QML">
    <property type="method" value="X-ray"/>
    <property type="resolution" value="2.10 A"/>
    <property type="chains" value="C/F=1-76"/>
</dbReference>
<dbReference type="PDB" id="6RYA">
    <property type="method" value="X-ray"/>
    <property type="resolution" value="2.21 A"/>
    <property type="chains" value="B/D/F=1-76"/>
</dbReference>
<dbReference type="PDB" id="6S53">
    <property type="method" value="X-ray"/>
    <property type="resolution" value="2.80 A"/>
    <property type="chains" value="D/F/J/L=1-76"/>
</dbReference>
<dbReference type="PDB" id="6SQR">
    <property type="method" value="X-ray"/>
    <property type="resolution" value="2.18 A"/>
    <property type="chains" value="I=1-76"/>
</dbReference>
<dbReference type="PDB" id="6T7F">
    <property type="method" value="X-ray"/>
    <property type="resolution" value="2.58 A"/>
    <property type="chains" value="C=1-73"/>
</dbReference>
<dbReference type="PDB" id="6T9L">
    <property type="method" value="EM"/>
    <property type="resolution" value="3.60 A"/>
    <property type="chains" value="O=1-76"/>
</dbReference>
<dbReference type="PDB" id="6TNF">
    <property type="method" value="EM"/>
    <property type="resolution" value="3.80 A"/>
    <property type="chains" value="C=1-76"/>
</dbReference>
<dbReference type="PDB" id="6TTU">
    <property type="method" value="EM"/>
    <property type="resolution" value="3.70 A"/>
    <property type="chains" value="U=1-76"/>
</dbReference>
<dbReference type="PDB" id="6TUV">
    <property type="method" value="X-ray"/>
    <property type="resolution" value="2.16 A"/>
    <property type="chains" value="D/H/L=1-76"/>
</dbReference>
<dbReference type="PDB" id="6TXB">
    <property type="method" value="X-ray"/>
    <property type="resolution" value="2.18 A"/>
    <property type="chains" value="D/H/L=1-76"/>
</dbReference>
<dbReference type="PDB" id="6ULH">
    <property type="method" value="X-ray"/>
    <property type="resolution" value="1.97 A"/>
    <property type="chains" value="E=1-76"/>
</dbReference>
<dbReference type="PDB" id="6UMP">
    <property type="method" value="X-ray"/>
    <property type="resolution" value="2.80 A"/>
    <property type="chains" value="E=1-76"/>
</dbReference>
<dbReference type="PDB" id="6UMS">
    <property type="method" value="X-ray"/>
    <property type="resolution" value="2.34 A"/>
    <property type="chains" value="E=1-76"/>
</dbReference>
<dbReference type="PDB" id="6UPU">
    <property type="method" value="X-ray"/>
    <property type="resolution" value="2.20 A"/>
    <property type="chains" value="B/C/D/F/G/H/J/K/L/N/O/P=609-684"/>
</dbReference>
<dbReference type="PDB" id="6V5D">
    <property type="method" value="NMR"/>
    <property type="chains" value="A=1-76"/>
</dbReference>
<dbReference type="PDB" id="6VAE">
    <property type="method" value="EM"/>
    <property type="resolution" value="3.50 A"/>
    <property type="chains" value="C/D=1-76"/>
</dbReference>
<dbReference type="PDB" id="6VAF">
    <property type="method" value="EM"/>
    <property type="resolution" value="3.90 A"/>
    <property type="chains" value="D=1-76"/>
</dbReference>
<dbReference type="PDB" id="6VEN">
    <property type="method" value="EM"/>
    <property type="resolution" value="3.37 A"/>
    <property type="chains" value="K=1-76"/>
</dbReference>
<dbReference type="PDB" id="6W9D">
    <property type="method" value="X-ray"/>
    <property type="resolution" value="3.19 A"/>
    <property type="chains" value="C/F/I=1-76"/>
</dbReference>
<dbReference type="PDB" id="6W9R">
    <property type="method" value="X-ray"/>
    <property type="resolution" value="1.82 A"/>
    <property type="chains" value="M/N/O/P/Q/R/S/T/U/V/W/X=609-683"/>
</dbReference>
<dbReference type="PDB" id="6W9S">
    <property type="method" value="X-ray"/>
    <property type="resolution" value="2.10 A"/>
    <property type="chains" value="B=77-151"/>
</dbReference>
<dbReference type="PDB" id="6WJD">
    <property type="method" value="EM"/>
    <property type="resolution" value="4.80 A"/>
    <property type="chains" value="u=1-76"/>
</dbReference>
<dbReference type="PDB" id="6WKR">
    <property type="method" value="EM"/>
    <property type="resolution" value="3.50 A"/>
    <property type="chains" value="F/T=1-76"/>
</dbReference>
<dbReference type="PDB" id="6WTG">
    <property type="method" value="X-ray"/>
    <property type="resolution" value="2.63 A"/>
    <property type="chains" value="D=1-76"/>
</dbReference>
<dbReference type="PDB" id="6Z7V">
    <property type="method" value="X-ray"/>
    <property type="resolution" value="2.65 A"/>
    <property type="chains" value="C/D/E/F/G/H/I=1-76"/>
</dbReference>
<dbReference type="PDB" id="7B5L">
    <property type="method" value="EM"/>
    <property type="resolution" value="3.80 A"/>
    <property type="chains" value="U=1-75"/>
</dbReference>
<dbReference type="PDB" id="7B5M">
    <property type="method" value="EM"/>
    <property type="resolution" value="3.91 A"/>
    <property type="chains" value="U=1-75"/>
</dbReference>
<dbReference type="PDB" id="7B5N">
    <property type="method" value="EM"/>
    <property type="resolution" value="3.60 A"/>
    <property type="chains" value="U=1-75"/>
</dbReference>
<dbReference type="PDB" id="7BBD">
    <property type="method" value="X-ray"/>
    <property type="resolution" value="2.20 A"/>
    <property type="chains" value="D=1-76"/>
</dbReference>
<dbReference type="PDB" id="7BBF">
    <property type="method" value="X-ray"/>
    <property type="resolution" value="2.54 A"/>
    <property type="chains" value="C/F/I=1-76"/>
</dbReference>
<dbReference type="PDB" id="7BXG">
    <property type="method" value="X-ray"/>
    <property type="resolution" value="2.71 A"/>
    <property type="chains" value="D=1-76"/>
</dbReference>
<dbReference type="PDB" id="7EAL">
    <property type="method" value="X-ray"/>
    <property type="resolution" value="2.50 A"/>
    <property type="chains" value="A/D=1-152"/>
</dbReference>
<dbReference type="PDB" id="7EAO">
    <property type="method" value="X-ray"/>
    <property type="resolution" value="2.90 A"/>
    <property type="chains" value="A=1-228"/>
</dbReference>
<dbReference type="PDB" id="7EB9">
    <property type="method" value="X-ray"/>
    <property type="resolution" value="3.20 A"/>
    <property type="chains" value="A=1-304"/>
</dbReference>
<dbReference type="PDB" id="7JXV">
    <property type="method" value="X-ray"/>
    <property type="resolution" value="2.35 A"/>
    <property type="chains" value="B=1-76"/>
</dbReference>
<dbReference type="PDB" id="7K6P">
    <property type="method" value="EM"/>
    <property type="resolution" value="3.20 A"/>
    <property type="chains" value="L=1-76"/>
</dbReference>
<dbReference type="PDB" id="7K6Q">
    <property type="method" value="EM"/>
    <property type="resolution" value="3.10 A"/>
    <property type="chains" value="L=1-76"/>
</dbReference>
<dbReference type="PDB" id="7KEO">
    <property type="method" value="X-ray"/>
    <property type="resolution" value="2.90 A"/>
    <property type="chains" value="C/D/G/H=1-76"/>
</dbReference>
<dbReference type="PDB" id="7M4M">
    <property type="method" value="X-ray"/>
    <property type="resolution" value="2.39 A"/>
    <property type="chains" value="C/D=1-76"/>
</dbReference>
<dbReference type="PDB" id="7M4N">
    <property type="method" value="X-ray"/>
    <property type="resolution" value="2.52 A"/>
    <property type="chains" value="C/D/E/F=1-76"/>
</dbReference>
<dbReference type="PDB" id="7M4O">
    <property type="method" value="X-ray"/>
    <property type="resolution" value="2.21 A"/>
    <property type="chains" value="B/C=1-76"/>
</dbReference>
<dbReference type="PDB" id="7MEX">
    <property type="method" value="EM"/>
    <property type="resolution" value="3.35 A"/>
    <property type="chains" value="C=1-76"/>
</dbReference>
<dbReference type="PDB" id="7MIC">
    <property type="method" value="X-ray"/>
    <property type="resolution" value="2.09 A"/>
    <property type="chains" value="B=1-75"/>
</dbReference>
<dbReference type="PDB" id="7MYF">
    <property type="method" value="X-ray"/>
    <property type="resolution" value="3.00 A"/>
    <property type="chains" value="C=1-76"/>
</dbReference>
<dbReference type="PDB" id="7NPI">
    <property type="method" value="X-ray"/>
    <property type="resolution" value="2.81 A"/>
    <property type="chains" value="B/C/D/E/F/H/I/J/K/L/N/O/P/Q/R/T/U/V/W/X/Z/a/b/c/d/f/g/h/i/j=609-684"/>
</dbReference>
<dbReference type="PDB" id="7OWD">
    <property type="method" value="X-ray"/>
    <property type="resolution" value="1.71 A"/>
    <property type="chains" value="A=1-76"/>
</dbReference>
<dbReference type="PDB" id="7R70">
    <property type="method" value="X-ray"/>
    <property type="resolution" value="2.50 A"/>
    <property type="chains" value="A/B=1-76"/>
</dbReference>
<dbReference type="PDB" id="7TV4">
    <property type="method" value="X-ray"/>
    <property type="resolution" value="4.20 A"/>
    <property type="chains" value="C/G=533-684"/>
</dbReference>
<dbReference type="PDB" id="7UV5">
    <property type="method" value="X-ray"/>
    <property type="resolution" value="1.45 A"/>
    <property type="chains" value="B=1-76"/>
</dbReference>
<dbReference type="PDB" id="7UYH">
    <property type="method" value="X-ray"/>
    <property type="resolution" value="2.80 A"/>
    <property type="chains" value="B/C=609-684"/>
</dbReference>
<dbReference type="PDB" id="7YUI">
    <property type="method" value="X-ray"/>
    <property type="resolution" value="2.60 A"/>
    <property type="chains" value="A=381-684"/>
</dbReference>
<dbReference type="PDB" id="7ZF1">
    <property type="method" value="EM"/>
    <property type="resolution" value="4.14 A"/>
    <property type="chains" value="C=1-76"/>
</dbReference>
<dbReference type="PDB" id="7ZJ3">
    <property type="method" value="X-ray"/>
    <property type="resolution" value="2.53 A"/>
    <property type="chains" value="C/F/I/L=608-684"/>
</dbReference>
<dbReference type="PDB" id="8A9J">
    <property type="method" value="EM"/>
    <property type="resolution" value="2.80 A"/>
    <property type="chains" value="C=609-684"/>
</dbReference>
<dbReference type="PDB" id="8A9K">
    <property type="method" value="EM"/>
    <property type="resolution" value="2.85 A"/>
    <property type="chains" value="C=609-684"/>
</dbReference>
<dbReference type="PDB" id="8ADB">
    <property type="method" value="X-ray"/>
    <property type="resolution" value="1.73 A"/>
    <property type="chains" value="B=609-683"/>
</dbReference>
<dbReference type="PDB" id="8AMS">
    <property type="method" value="X-ray"/>
    <property type="resolution" value="2.40 A"/>
    <property type="chains" value="E=608-684"/>
</dbReference>
<dbReference type="PDB" id="8B3G">
    <property type="method" value="EM"/>
    <property type="resolution" value="4.40 A"/>
    <property type="chains" value="U=609-684"/>
</dbReference>
<dbReference type="PDB" id="8B3I">
    <property type="method" value="EM"/>
    <property type="resolution" value="3.50 A"/>
    <property type="chains" value="U=609-684"/>
</dbReference>
<dbReference type="PDB" id="8E7O">
    <property type="method" value="X-ray"/>
    <property type="resolution" value="1.70 A"/>
    <property type="chains" value="A/B/C/D=609-684"/>
</dbReference>
<dbReference type="PDB" id="8EAZ">
    <property type="method" value="X-ray"/>
    <property type="resolution" value="3.08 A"/>
    <property type="chains" value="E/F/G/H=609-684"/>
</dbReference>
<dbReference type="PDB" id="8EB0">
    <property type="method" value="X-ray"/>
    <property type="resolution" value="3.03 A"/>
    <property type="chains" value="C/D=609-684"/>
</dbReference>
<dbReference type="PDB" id="8FTQ">
    <property type="method" value="X-ray"/>
    <property type="resolution" value="2.10 A"/>
    <property type="chains" value="C/D=609-680"/>
</dbReference>
<dbReference type="PDB" id="8JRT">
    <property type="method" value="EM"/>
    <property type="resolution" value="3.60 A"/>
    <property type="chains" value="u/v/w=1-76"/>
</dbReference>
<dbReference type="PDB" id="8JTI">
    <property type="method" value="EM"/>
    <property type="resolution" value="3.80 A"/>
    <property type="chains" value="u/v/w/x=1-76"/>
</dbReference>
<dbReference type="PDB" id="8K6E">
    <property type="method" value="X-ray"/>
    <property type="resolution" value="2.74 A"/>
    <property type="chains" value="C=1-76"/>
</dbReference>
<dbReference type="PDB" id="8K6F">
    <property type="method" value="X-ray"/>
    <property type="resolution" value="3.41 A"/>
    <property type="chains" value="E/F=1-76"/>
</dbReference>
<dbReference type="PDB" id="8K6I">
    <property type="method" value="X-ray"/>
    <property type="resolution" value="3.19 A"/>
    <property type="chains" value="E/F=1-76"/>
</dbReference>
<dbReference type="PDB" id="8K6R">
    <property type="method" value="X-ray"/>
    <property type="resolution" value="2.76 A"/>
    <property type="chains" value="C=1-76"/>
</dbReference>
<dbReference type="PDB" id="8K6V">
    <property type="method" value="X-ray"/>
    <property type="resolution" value="2.60 A"/>
    <property type="chains" value="C=1-76"/>
</dbReference>
<dbReference type="PDB" id="8OFF">
    <property type="method" value="EM"/>
    <property type="resolution" value="3.40 A"/>
    <property type="chains" value="Fa=609-684"/>
</dbReference>
<dbReference type="PDB" id="8PJN">
    <property type="method" value="EM"/>
    <property type="resolution" value="3.40 A"/>
    <property type="chains" value="u=609-684"/>
</dbReference>
<dbReference type="PDB" id="8PMQ">
    <property type="method" value="EM"/>
    <property type="resolution" value="3.53 A"/>
    <property type="chains" value="U=609-684"/>
</dbReference>
<dbReference type="PDB" id="8PQL">
    <property type="method" value="EM"/>
    <property type="resolution" value="3.76 A"/>
    <property type="chains" value="E/U=1-685"/>
</dbReference>
<dbReference type="PDB" id="8Q7R">
    <property type="method" value="EM"/>
    <property type="resolution" value="3.71 A"/>
    <property type="chains" value="U=1-685"/>
</dbReference>
<dbReference type="PDB" id="8R5H">
    <property type="method" value="EM"/>
    <property type="resolution" value="3.44 A"/>
    <property type="chains" value="U=609-683"/>
</dbReference>
<dbReference type="PDB" id="8RX0">
    <property type="method" value="EM"/>
    <property type="resolution" value="3.70 A"/>
    <property type="chains" value="U=609-684"/>
</dbReference>
<dbReference type="PDB" id="8SSI">
    <property type="method" value="X-ray"/>
    <property type="resolution" value="2.50 A"/>
    <property type="chains" value="B/D=609-683"/>
</dbReference>
<dbReference type="PDB" id="8ST7">
    <property type="method" value="X-ray"/>
    <property type="resolution" value="1.44 A"/>
    <property type="chains" value="B/D=1-75"/>
</dbReference>
<dbReference type="PDB" id="8ST8">
    <property type="method" value="X-ray"/>
    <property type="resolution" value="1.75 A"/>
    <property type="chains" value="B=1-75"/>
</dbReference>
<dbReference type="PDB" id="8ST9">
    <property type="method" value="X-ray"/>
    <property type="resolution" value="2.50 A"/>
    <property type="chains" value="B/D=1-75"/>
</dbReference>
<dbReference type="PDB" id="8SVF">
    <property type="method" value="EM"/>
    <property type="resolution" value="3.20 A"/>
    <property type="chains" value="M=609-684"/>
</dbReference>
<dbReference type="PDB" id="8T48">
    <property type="method" value="X-ray"/>
    <property type="resolution" value="2.00 A"/>
    <property type="chains" value="A/B=533-684"/>
</dbReference>
<dbReference type="PDB" id="8U5H">
    <property type="method" value="EM"/>
    <property type="resolution" value="3.23 A"/>
    <property type="chains" value="D=609-684"/>
</dbReference>
<dbReference type="PDB" id="9D1I">
    <property type="method" value="X-ray"/>
    <property type="resolution" value="2.00 A"/>
    <property type="chains" value="D=1-76"/>
</dbReference>
<dbReference type="PDB" id="9D1Y">
    <property type="method" value="X-ray"/>
    <property type="resolution" value="2.60 A"/>
    <property type="chains" value="D=1-76"/>
</dbReference>
<dbReference type="PDB" id="9D1Z">
    <property type="method" value="X-ray"/>
    <property type="resolution" value="1.88 A"/>
    <property type="chains" value="D=1-76"/>
</dbReference>
<dbReference type="PDB" id="9D8P">
    <property type="method" value="EM"/>
    <property type="resolution" value="3.20 A"/>
    <property type="chains" value="D=1-76"/>
</dbReference>
<dbReference type="PDB" id="9DBY">
    <property type="method" value="EM"/>
    <property type="resolution" value="2.80 A"/>
    <property type="chains" value="N=609-684"/>
</dbReference>
<dbReference type="PDB" id="9DDE">
    <property type="method" value="EM"/>
    <property type="resolution" value="3.20 A"/>
    <property type="chains" value="N=609-684"/>
</dbReference>
<dbReference type="PDB" id="9DG3">
    <property type="method" value="EM"/>
    <property type="resolution" value="3.46 A"/>
    <property type="chains" value="N=609-684"/>
</dbReference>
<dbReference type="PDB" id="9EBS">
    <property type="method" value="EM"/>
    <property type="resolution" value="3.30 A"/>
    <property type="chains" value="C=1-76"/>
</dbReference>
<dbReference type="PDB" id="9EGV">
    <property type="method" value="X-ray"/>
    <property type="resolution" value="2.00 A"/>
    <property type="chains" value="C=608-684"/>
</dbReference>
<dbReference type="PDB" id="9EGW">
    <property type="method" value="X-ray"/>
    <property type="resolution" value="1.78 A"/>
    <property type="chains" value="C=608-684"/>
</dbReference>
<dbReference type="PDB" id="9FCI">
    <property type="method" value="EM"/>
    <property type="resolution" value="3.20 A"/>
    <property type="chains" value="C=609-684"/>
</dbReference>
<dbReference type="PDB" id="9FCJ">
    <property type="method" value="EM"/>
    <property type="resolution" value="2.70 A"/>
    <property type="chains" value="C=609-684"/>
</dbReference>
<dbReference type="PDB" id="9FJ3">
    <property type="method" value="X-ray"/>
    <property type="resolution" value="1.40 A"/>
    <property type="chains" value="A/D=609-684"/>
</dbReference>
<dbReference type="PDB" id="9FJ4">
    <property type="method" value="X-ray"/>
    <property type="resolution" value="1.54 A"/>
    <property type="chains" value="A=609-684"/>
</dbReference>
<dbReference type="PDBsum" id="1C3T"/>
<dbReference type="PDBsum" id="1CMX"/>
<dbReference type="PDBsum" id="1D3Z"/>
<dbReference type="PDBsum" id="1F9J"/>
<dbReference type="PDBsum" id="1FXT"/>
<dbReference type="PDBsum" id="1G6J"/>
<dbReference type="PDBsum" id="1GJZ"/>
<dbReference type="PDBsum" id="1NBF"/>
<dbReference type="PDBsum" id="1OGW"/>
<dbReference type="PDBsum" id="1Q5W"/>
<dbReference type="PDBsum" id="1S1Q"/>
<dbReference type="PDBsum" id="1SIF"/>
<dbReference type="PDBsum" id="1TBE"/>
<dbReference type="PDBsum" id="1UBI"/>
<dbReference type="PDBsum" id="1UBQ"/>
<dbReference type="PDBsum" id="1UD7"/>
<dbReference type="PDBsum" id="1XD3"/>
<dbReference type="PDBsum" id="1XQQ"/>
<dbReference type="PDBsum" id="1YX5"/>
<dbReference type="PDBsum" id="1YX6"/>
<dbReference type="PDBsum" id="1ZGU"/>
<dbReference type="PDBsum" id="2AYO"/>
<dbReference type="PDBsum" id="2BGF"/>
<dbReference type="PDBsum" id="2DEN"/>
<dbReference type="PDBsum" id="2FUH"/>
<dbReference type="PDBsum" id="2G45"/>
<dbReference type="PDBsum" id="2GBJ"/>
<dbReference type="PDBsum" id="2GBK"/>
<dbReference type="PDBsum" id="2GBM"/>
<dbReference type="PDBsum" id="2GBN"/>
<dbReference type="PDBsum" id="2GBR"/>
<dbReference type="PDBsum" id="2GMI"/>
<dbReference type="PDBsum" id="2HTH"/>
<dbReference type="PDBsum" id="2IBI"/>
<dbReference type="PDBsum" id="2J7Q"/>
<dbReference type="PDBsum" id="2JF5"/>
<dbReference type="PDBsum" id="2JRI"/>
<dbReference type="PDBsum" id="2JY6"/>
<dbReference type="PDBsum" id="2JZZ"/>
<dbReference type="PDBsum" id="2K25"/>
<dbReference type="PDBsum" id="2K6D"/>
<dbReference type="PDBsum" id="2K8B"/>
<dbReference type="PDBsum" id="2K8C"/>
<dbReference type="PDBsum" id="2KDF"/>
<dbReference type="PDBsum" id="2KHW"/>
<dbReference type="PDBsum" id="2KJH"/>
<dbReference type="PDBsum" id="2KLG"/>
<dbReference type="PDBsum" id="2KN5"/>
<dbReference type="PDBsum" id="2KX0"/>
<dbReference type="PDBsum" id="2L3Z"/>
<dbReference type="PDBsum" id="2LD9"/>
<dbReference type="PDBsum" id="2LVO"/>
<dbReference type="PDBsum" id="2LVP"/>
<dbReference type="PDBsum" id="2LVQ"/>
<dbReference type="PDBsum" id="2LZ6"/>
<dbReference type="PDBsum" id="2MBO"/>
<dbReference type="PDBsum" id="2MBQ"/>
<dbReference type="PDBsum" id="2MCN"/>
<dbReference type="PDBsum" id="2MI8"/>
<dbReference type="PDBsum" id="2MJ5"/>
<dbReference type="PDBsum" id="2MOR"/>
<dbReference type="PDBsum" id="2MRE"/>
<dbReference type="PDBsum" id="2MWS"/>
<dbReference type="PDBsum" id="2N2K"/>
<dbReference type="PDBsum" id="2NR2"/>
<dbReference type="PDBsum" id="2O6V"/>
<dbReference type="PDBsum" id="2OJR"/>
<dbReference type="PDBsum" id="2PE9"/>
<dbReference type="PDBsum" id="2PEA"/>
<dbReference type="PDBsum" id="2RR9"/>
<dbReference type="PDBsum" id="2RU6"/>
<dbReference type="PDBsum" id="2W9N"/>
<dbReference type="PDBsum" id="2WDT"/>
<dbReference type="PDBsum" id="2XEW"/>
<dbReference type="PDBsum" id="2Y5B"/>
<dbReference type="PDBsum" id="2Z59"/>
<dbReference type="PDBsum" id="2ZCB"/>
<dbReference type="PDBsum" id="2ZVN"/>
<dbReference type="PDBsum" id="2ZVO"/>
<dbReference type="PDBsum" id="3A33"/>
<dbReference type="PDBsum" id="3ALB"/>
<dbReference type="PDBsum" id="3AUL"/>
<dbReference type="PDBsum" id="3B08"/>
<dbReference type="PDBsum" id="3B0A"/>
<dbReference type="PDBsum" id="3BY4"/>
<dbReference type="PDBsum" id="3C0R"/>
<dbReference type="PDBsum" id="3DVG"/>
<dbReference type="PDBsum" id="3DVN"/>
<dbReference type="PDBsum" id="3EEC"/>
<dbReference type="PDBsum" id="3EFU"/>
<dbReference type="PDBsum" id="3EHV"/>
<dbReference type="PDBsum" id="3H7P"/>
<dbReference type="PDBsum" id="3H7S"/>
<dbReference type="PDBsum" id="3HM3"/>
<dbReference type="PDBsum" id="3I3T"/>
<dbReference type="PDBsum" id="3IFW"/>
<dbReference type="PDBsum" id="3IHP"/>
<dbReference type="PDBsum" id="3JSV"/>
<dbReference type="PDBsum" id="3JVZ"/>
<dbReference type="PDBsum" id="3JW0"/>
<dbReference type="PDBsum" id="3K9O"/>
<dbReference type="PDBsum" id="3K9P"/>
<dbReference type="PDBsum" id="3KVF"/>
<dbReference type="PDBsum" id="3KW5"/>
<dbReference type="PDBsum" id="3LDZ"/>
<dbReference type="PDBsum" id="3MHS"/>
<dbReference type="PDBsum" id="3MTN"/>
<dbReference type="PDBsum" id="3N30"/>
<dbReference type="PDBsum" id="3N32"/>
<dbReference type="PDBsum" id="3N3K"/>
<dbReference type="PDBsum" id="3NS8"/>
<dbReference type="PDBsum" id="3O65"/>
<dbReference type="PDBsum" id="3OFI"/>
<dbReference type="PDBsum" id="3OJ3"/>
<dbReference type="PDBsum" id="3OJ4"/>
<dbReference type="PDBsum" id="3ONS"/>
<dbReference type="PDBsum" id="3PRM"/>
<dbReference type="PDBsum" id="3PT2"/>
<dbReference type="PDBsum" id="3PTF"/>
<dbReference type="PDBsum" id="3Q3F"/>
<dbReference type="PDBsum" id="3RUL"/>
<dbReference type="PDBsum" id="3TMP"/>
<dbReference type="PDBsum" id="3U30"/>
<dbReference type="PDBsum" id="3UGB"/>
<dbReference type="PDBsum" id="3V6C"/>
<dbReference type="PDBsum" id="3V6E"/>
<dbReference type="PDBsum" id="3VFK"/>
<dbReference type="PDBsum" id="3VUW"/>
<dbReference type="PDBsum" id="3VUX"/>
<dbReference type="PDBsum" id="3VUY"/>
<dbReference type="PDBsum" id="3WXE"/>
<dbReference type="PDBsum" id="3WXF"/>
<dbReference type="PDBsum" id="3ZLZ"/>
<dbReference type="PDBsum" id="3ZNH"/>
<dbReference type="PDBsum" id="3ZNI"/>
<dbReference type="PDBsum" id="3ZNZ"/>
<dbReference type="PDBsum" id="4AP4"/>
<dbReference type="PDBsum" id="4AUQ"/>
<dbReference type="PDBsum" id="4BOS"/>
<dbReference type="PDBsum" id="4BOZ"/>
<dbReference type="PDBsum" id="4BVU"/>
<dbReference type="PDBsum" id="4DDG"/>
<dbReference type="PDBsum" id="4DDI"/>
<dbReference type="PDBsum" id="4DHJ"/>
<dbReference type="PDBsum" id="4DHZ"/>
<dbReference type="PDBsum" id="4FJV"/>
<dbReference type="PDBsum" id="4HK2"/>
<dbReference type="PDBsum" id="4HXD"/>
<dbReference type="PDBsum" id="4I6L"/>
<dbReference type="PDBsum" id="4I6N"/>
<dbReference type="PDBsum" id="4IG7"/>
<dbReference type="PDBsum" id="4IUM"/>
<dbReference type="PDBsum" id="4JQW"/>
<dbReference type="PDBsum" id="4K1R"/>
<dbReference type="PDBsum" id="4K7S"/>
<dbReference type="PDBsum" id="4K7U"/>
<dbReference type="PDBsum" id="4K7W"/>
<dbReference type="PDBsum" id="4KSK"/>
<dbReference type="PDBsum" id="4KSL"/>
<dbReference type="PDBsum" id="4LCD"/>
<dbReference type="PDBsum" id="4LDT"/>
<dbReference type="PDBsum" id="4MDK"/>
<dbReference type="PDBsum" id="4MM3"/>
<dbReference type="PDBsum" id="4MSM"/>
<dbReference type="PDBsum" id="4MSQ"/>
<dbReference type="PDBsum" id="4NQK"/>
<dbReference type="PDBsum" id="4UN2"/>
<dbReference type="PDBsum" id="4V3K"/>
<dbReference type="PDBsum" id="4V3L"/>
<dbReference type="PDBsum" id="4WZP"/>
<dbReference type="PDBsum" id="4XOK"/>
<dbReference type="PDBsum" id="4XOL"/>
<dbReference type="PDBsum" id="4ZQS"/>
<dbReference type="PDBsum" id="5A5B"/>
<dbReference type="PDBsum" id="5AF4"/>
<dbReference type="PDBsum" id="5AF5"/>
<dbReference type="PDBsum" id="5AF6"/>
<dbReference type="PDBsum" id="5AIT"/>
<dbReference type="PDBsum" id="5AIU"/>
<dbReference type="PDBsum" id="5B83"/>
<dbReference type="PDBsum" id="5C7J"/>
<dbReference type="PDBsum" id="5C7M"/>
<dbReference type="PDBsum" id="5E6J"/>
<dbReference type="PDBsum" id="5H07"/>
<dbReference type="PDBsum" id="5NL4"/>
<dbReference type="PDBsum" id="5NLF"/>
<dbReference type="PDBsum" id="5NLI"/>
<dbReference type="PDBsum" id="5NMC"/>
<dbReference type="PDBsum" id="5OE7"/>
<dbReference type="PDBsum" id="5OHV"/>
<dbReference type="PDBsum" id="5OXH"/>
<dbReference type="PDBsum" id="5OXI"/>
<dbReference type="PDBsum" id="5UDH"/>
<dbReference type="PDBsum" id="5WQ4"/>
<dbReference type="PDBsum" id="5ZQ3"/>
<dbReference type="PDBsum" id="5ZQ4"/>
<dbReference type="PDBsum" id="5ZQ5"/>
<dbReference type="PDBsum" id="5ZQ6"/>
<dbReference type="PDBsum" id="5ZQ7"/>
<dbReference type="PDBsum" id="6A43"/>
<dbReference type="PDBsum" id="6A44"/>
<dbReference type="PDBsum" id="6AQR"/>
<dbReference type="PDBsum" id="6B7M"/>
<dbReference type="PDBsum" id="6B7O"/>
<dbReference type="PDBsum" id="6EQI"/>
<dbReference type="PDBsum" id="6K2U"/>
<dbReference type="PDBsum" id="6KBE"/>
<dbReference type="PDBsum" id="6N13"/>
<dbReference type="PDBsum" id="6N6R"/>
<dbReference type="PDBsum" id="6NQA"/>
<dbReference type="PDBsum" id="6NXK"/>
<dbReference type="PDBsum" id="6OI4"/>
<dbReference type="PDBsum" id="6P5B"/>
<dbReference type="PDBsum" id="6Q00"/>
<dbReference type="PDBsum" id="6QML"/>
<dbReference type="PDBsum" id="6RYA"/>
<dbReference type="PDBsum" id="6S53"/>
<dbReference type="PDBsum" id="6SQR"/>
<dbReference type="PDBsum" id="6T7F"/>
<dbReference type="PDBsum" id="6T9L"/>
<dbReference type="PDBsum" id="6TNF"/>
<dbReference type="PDBsum" id="6TTU"/>
<dbReference type="PDBsum" id="6TUV"/>
<dbReference type="PDBsum" id="6TXB"/>
<dbReference type="PDBsum" id="6ULH"/>
<dbReference type="PDBsum" id="6UMP"/>
<dbReference type="PDBsum" id="6UMS"/>
<dbReference type="PDBsum" id="6UPU"/>
<dbReference type="PDBsum" id="6V5D"/>
<dbReference type="PDBsum" id="6VAE"/>
<dbReference type="PDBsum" id="6VAF"/>
<dbReference type="PDBsum" id="6VEN"/>
<dbReference type="PDBsum" id="6W9D"/>
<dbReference type="PDBsum" id="6W9R"/>
<dbReference type="PDBsum" id="6W9S"/>
<dbReference type="PDBsum" id="6WJD"/>
<dbReference type="PDBsum" id="6WKR"/>
<dbReference type="PDBsum" id="6WTG"/>
<dbReference type="PDBsum" id="6Z7V"/>
<dbReference type="PDBsum" id="7B5L"/>
<dbReference type="PDBsum" id="7B5M"/>
<dbReference type="PDBsum" id="7B5N"/>
<dbReference type="PDBsum" id="7BBD"/>
<dbReference type="PDBsum" id="7BBF"/>
<dbReference type="PDBsum" id="7BXG"/>
<dbReference type="PDBsum" id="7EAL"/>
<dbReference type="PDBsum" id="7EAO"/>
<dbReference type="PDBsum" id="7EB9"/>
<dbReference type="PDBsum" id="7JXV"/>
<dbReference type="PDBsum" id="7K6P"/>
<dbReference type="PDBsum" id="7K6Q"/>
<dbReference type="PDBsum" id="7KEO"/>
<dbReference type="PDBsum" id="7M4M"/>
<dbReference type="PDBsum" id="7M4N"/>
<dbReference type="PDBsum" id="7M4O"/>
<dbReference type="PDBsum" id="7MEX"/>
<dbReference type="PDBsum" id="7MIC"/>
<dbReference type="PDBsum" id="7MYF"/>
<dbReference type="PDBsum" id="7NPI"/>
<dbReference type="PDBsum" id="7OWD"/>
<dbReference type="PDBsum" id="7R70"/>
<dbReference type="PDBsum" id="7TV4"/>
<dbReference type="PDBsum" id="7UV5"/>
<dbReference type="PDBsum" id="7UYH"/>
<dbReference type="PDBsum" id="7YUI"/>
<dbReference type="PDBsum" id="7ZF1"/>
<dbReference type="PDBsum" id="7ZJ3"/>
<dbReference type="PDBsum" id="8A9J"/>
<dbReference type="PDBsum" id="8A9K"/>
<dbReference type="PDBsum" id="8ADB"/>
<dbReference type="PDBsum" id="8AMS"/>
<dbReference type="PDBsum" id="8B3G"/>
<dbReference type="PDBsum" id="8B3I"/>
<dbReference type="PDBsum" id="8E7O"/>
<dbReference type="PDBsum" id="8EAZ"/>
<dbReference type="PDBsum" id="8EB0"/>
<dbReference type="PDBsum" id="8FTQ"/>
<dbReference type="PDBsum" id="8JRT"/>
<dbReference type="PDBsum" id="8JTI"/>
<dbReference type="PDBsum" id="8K6E"/>
<dbReference type="PDBsum" id="8K6F"/>
<dbReference type="PDBsum" id="8K6I"/>
<dbReference type="PDBsum" id="8K6R"/>
<dbReference type="PDBsum" id="8K6V"/>
<dbReference type="PDBsum" id="8OFF"/>
<dbReference type="PDBsum" id="8PJN"/>
<dbReference type="PDBsum" id="8PMQ"/>
<dbReference type="PDBsum" id="8PQL"/>
<dbReference type="PDBsum" id="8Q7R"/>
<dbReference type="PDBsum" id="8R5H"/>
<dbReference type="PDBsum" id="8RX0"/>
<dbReference type="PDBsum" id="8SSI"/>
<dbReference type="PDBsum" id="8ST7"/>
<dbReference type="PDBsum" id="8ST8"/>
<dbReference type="PDBsum" id="8ST9"/>
<dbReference type="PDBsum" id="8SVF"/>
<dbReference type="PDBsum" id="8T48"/>
<dbReference type="PDBsum" id="8U5H"/>
<dbReference type="PDBsum" id="9D1I"/>
<dbReference type="PDBsum" id="9D1Y"/>
<dbReference type="PDBsum" id="9D1Z"/>
<dbReference type="PDBsum" id="9D8P"/>
<dbReference type="PDBsum" id="9DBY"/>
<dbReference type="PDBsum" id="9DDE"/>
<dbReference type="PDBsum" id="9DG3"/>
<dbReference type="PDBsum" id="9EBS"/>
<dbReference type="PDBsum" id="9EGV"/>
<dbReference type="PDBsum" id="9EGW"/>
<dbReference type="PDBsum" id="9FCI"/>
<dbReference type="PDBsum" id="9FCJ"/>
<dbReference type="PDBsum" id="9FJ3"/>
<dbReference type="PDBsum" id="9FJ4"/>
<dbReference type="BMRB" id="P0CG48"/>
<dbReference type="EMDB" id="EMD-0480"/>
<dbReference type="EMDB" id="EMD-10415"/>
<dbReference type="EMDB" id="EMD-10531"/>
<dbReference type="EMDB" id="EMD-10585"/>
<dbReference type="EMDB" id="EMD-12037"/>
<dbReference type="EMDB" id="EMD-12040"/>
<dbReference type="EMDB" id="EMD-12041"/>
<dbReference type="EMDB" id="EMD-15284"/>
<dbReference type="EMDB" id="EMD-15827"/>
<dbReference type="EMDB" id="EMD-15829"/>
<dbReference type="EMDB" id="EMD-16859"/>
<dbReference type="EMDB" id="EMD-17713"/>
<dbReference type="EMDB" id="EMD-17764"/>
<dbReference type="EMDB" id="EMD-17822"/>
<dbReference type="EMDB" id="EMD-18230"/>
<dbReference type="EMDB" id="EMD-18915"/>
<dbReference type="EMDB" id="EMD-19857"/>
<dbReference type="EMDB" id="EMD-19858"/>
<dbReference type="EMDB" id="EMD-19859"/>
<dbReference type="EMDB" id="EMD-19860"/>
<dbReference type="EMDB" id="EMD-21138"/>
<dbReference type="EMDB" id="EMD-21139"/>
<dbReference type="EMDB" id="EMD-21157"/>
<dbReference type="EMDB" id="EMD-21691"/>
<dbReference type="EMDB" id="EMD-21707"/>
<dbReference type="EMDB" id="EMD-22691"/>
<dbReference type="EMDB" id="EMD-22692"/>
<dbReference type="EMDB" id="EMD-23806"/>
<dbReference type="EMDB" id="EMD-40789"/>
<dbReference type="EMDB" id="EMD-41922"/>
<dbReference type="EMDB" id="EMD-46645"/>
<dbReference type="EMDB" id="EMD-50316"/>
<dbReference type="EMDB" id="EMD-50317"/>
<dbReference type="EMDB" id="EMD-6340"/>
<dbReference type="EMDB" id="EMD-6400"/>
<dbReference type="SASBDB" id="P0CG48"/>
<dbReference type="SMR" id="P0CG48"/>
<dbReference type="BioGRID" id="113164">
    <property type="interactions" value="2265"/>
</dbReference>
<dbReference type="FunCoup" id="P0CG48">
    <property type="interactions" value="1876"/>
</dbReference>
<dbReference type="IntAct" id="P0CG48">
    <property type="interactions" value="211"/>
</dbReference>
<dbReference type="MINT" id="P0CG48"/>
<dbReference type="STRING" id="9606.ENSP00000441543"/>
<dbReference type="ChEMBL" id="CHEMBL4523179"/>
<dbReference type="DrugBank" id="DB04464">
    <property type="generic name" value="N-Formylmethionine"/>
</dbReference>
<dbReference type="MoonDB" id="P0CG48">
    <property type="type" value="Predicted"/>
</dbReference>
<dbReference type="GlyGen" id="P0CG48">
    <property type="glycosylation" value="2 sites, 1 O-linked glycan (1 site)"/>
</dbReference>
<dbReference type="iPTMnet" id="P0CG48"/>
<dbReference type="PhosphoSitePlus" id="P0CG48"/>
<dbReference type="SwissPalm" id="P0CG48"/>
<dbReference type="BioMuta" id="UBC"/>
<dbReference type="DMDM" id="391358178"/>
<dbReference type="jPOST" id="P0CG48"/>
<dbReference type="MassIVE" id="P0CG48"/>
<dbReference type="PaxDb" id="9606-ENSP00000441543"/>
<dbReference type="PeptideAtlas" id="P0CG48"/>
<dbReference type="ProteomicsDB" id="52475"/>
<dbReference type="Pumba" id="P0CG48"/>
<dbReference type="TopDownProteomics" id="P0CG48"/>
<dbReference type="ABCD" id="P0CG48">
    <property type="antibodies" value="6 sequenced antibodies"/>
</dbReference>
<dbReference type="Antibodypedia" id="3954">
    <property type="antibodies" value="290 antibodies from 32 providers"/>
</dbReference>
<dbReference type="DNASU" id="7316"/>
<dbReference type="Ensembl" id="ENST00000339647.6">
    <property type="protein sequence ID" value="ENSP00000344818.5"/>
    <property type="gene ID" value="ENSG00000150991.16"/>
</dbReference>
<dbReference type="Ensembl" id="ENST00000536769.1">
    <property type="protein sequence ID" value="ENSP00000441543.1"/>
    <property type="gene ID" value="ENSG00000150991.16"/>
</dbReference>
<dbReference type="GeneID" id="7316"/>
<dbReference type="KEGG" id="hsa:7316"/>
<dbReference type="MANE-Select" id="ENST00000339647.6">
    <property type="protein sequence ID" value="ENSP00000344818.5"/>
    <property type="RefSeq nucleotide sequence ID" value="NM_021009.7"/>
    <property type="RefSeq protein sequence ID" value="NP_066289.3"/>
</dbReference>
<dbReference type="UCSC" id="uc001ugs.5">
    <property type="organism name" value="human"/>
</dbReference>
<dbReference type="AGR" id="HGNC:12468"/>
<dbReference type="CTD" id="7316"/>
<dbReference type="DisGeNET" id="7316"/>
<dbReference type="GeneCards" id="UBC"/>
<dbReference type="HGNC" id="HGNC:12468">
    <property type="gene designation" value="UBC"/>
</dbReference>
<dbReference type="HPA" id="ENSG00000150991">
    <property type="expression patterns" value="Low tissue specificity"/>
</dbReference>
<dbReference type="MIM" id="191340">
    <property type="type" value="gene"/>
</dbReference>
<dbReference type="neXtProt" id="NX_P0CG48"/>
<dbReference type="OpenTargets" id="ENSG00000150991"/>
<dbReference type="VEuPathDB" id="HostDB:ENSG00000150991"/>
<dbReference type="eggNOG" id="KOG0001">
    <property type="taxonomic scope" value="Eukaryota"/>
</dbReference>
<dbReference type="GeneTree" id="ENSGT00940000163900"/>
<dbReference type="HOGENOM" id="CLU_010412_1_1_1"/>
<dbReference type="InParanoid" id="P0CG48"/>
<dbReference type="OMA" id="CIWYCVY"/>
<dbReference type="OrthoDB" id="9979733at2759"/>
<dbReference type="PAN-GO" id="P0CG48">
    <property type="GO annotations" value="6 GO annotations based on evolutionary models"/>
</dbReference>
<dbReference type="TreeFam" id="TF354256"/>
<dbReference type="BioCyc" id="MetaCyc:ENSG00000150991-MONOMER"/>
<dbReference type="PathwayCommons" id="P0CG48"/>
<dbReference type="Reactome" id="R-HSA-110312">
    <property type="pathway name" value="Translesion synthesis by REV1"/>
</dbReference>
<dbReference type="Reactome" id="R-HSA-110314">
    <property type="pathway name" value="Recognition of DNA damage by PCNA-containing replication complex"/>
</dbReference>
<dbReference type="Reactome" id="R-HSA-110320">
    <property type="pathway name" value="Translesion Synthesis by POLH"/>
</dbReference>
<dbReference type="Reactome" id="R-HSA-1169091">
    <property type="pathway name" value="Activation of NF-kappaB in B cells"/>
</dbReference>
<dbReference type="Reactome" id="R-HSA-1169408">
    <property type="pathway name" value="ISG15 antiviral mechanism"/>
</dbReference>
<dbReference type="Reactome" id="R-HSA-1234176">
    <property type="pathway name" value="Oxygen-dependent proline hydroxylation of Hypoxia-inducible Factor Alpha"/>
</dbReference>
<dbReference type="Reactome" id="R-HSA-1236382">
    <property type="pathway name" value="Constitutive Signaling by Ligand-Responsive EGFR Cancer Variants"/>
</dbReference>
<dbReference type="Reactome" id="R-HSA-1236974">
    <property type="pathway name" value="ER-Phagosome pathway"/>
</dbReference>
<dbReference type="Reactome" id="R-HSA-1253288">
    <property type="pathway name" value="Downregulation of ERBB4 signaling"/>
</dbReference>
<dbReference type="Reactome" id="R-HSA-1295596">
    <property type="pathway name" value="Spry regulation of FGF signaling"/>
</dbReference>
<dbReference type="Reactome" id="R-HSA-1358803">
    <property type="pathway name" value="Downregulation of ERBB2:ERBB3 signaling"/>
</dbReference>
<dbReference type="Reactome" id="R-HSA-162588">
    <property type="pathway name" value="Budding and maturation of HIV virion"/>
</dbReference>
<dbReference type="Reactome" id="R-HSA-168638">
    <property type="pathway name" value="NOD1/2 Signaling Pathway"/>
</dbReference>
<dbReference type="Reactome" id="R-HSA-168927">
    <property type="pathway name" value="TICAM1, RIP1-mediated IKK complex recruitment"/>
</dbReference>
<dbReference type="Reactome" id="R-HSA-168928">
    <property type="pathway name" value="DDX58/IFIH1-mediated induction of interferon-alpha/beta"/>
</dbReference>
<dbReference type="Reactome" id="R-HSA-174048">
    <property type="pathway name" value="APC/C:Cdc20 mediated degradation of Cyclin B"/>
</dbReference>
<dbReference type="Reactome" id="R-HSA-174084">
    <property type="pathway name" value="Autodegradation of Cdh1 by Cdh1:APC/C"/>
</dbReference>
<dbReference type="Reactome" id="R-HSA-174113">
    <property type="pathway name" value="SCF-beta-TrCP mediated degradation of Emi1"/>
</dbReference>
<dbReference type="Reactome" id="R-HSA-174154">
    <property type="pathway name" value="APC/C:Cdc20 mediated degradation of Securin"/>
</dbReference>
<dbReference type="Reactome" id="R-HSA-174178">
    <property type="pathway name" value="APC/C:Cdh1 mediated degradation of Cdc20 and other APC/C:Cdh1 targeted proteins in late mitosis/early G1"/>
</dbReference>
<dbReference type="Reactome" id="R-HSA-174184">
    <property type="pathway name" value="Cdc20:Phospho-APC/C mediated degradation of Cyclin A"/>
</dbReference>
<dbReference type="Reactome" id="R-HSA-174490">
    <property type="pathway name" value="Membrane binding and targetting of GAG proteins"/>
</dbReference>
<dbReference type="Reactome" id="R-HSA-175474">
    <property type="pathway name" value="Assembly Of The HIV Virion"/>
</dbReference>
<dbReference type="Reactome" id="R-HSA-179409">
    <property type="pathway name" value="APC-Cdc20 mediated degradation of Nek2A"/>
</dbReference>
<dbReference type="Reactome" id="R-HSA-180534">
    <property type="pathway name" value="Vpu mediated degradation of CD4"/>
</dbReference>
<dbReference type="Reactome" id="R-HSA-180585">
    <property type="pathway name" value="Vif-mediated degradation of APOBEC3G"/>
</dbReference>
<dbReference type="Reactome" id="R-HSA-182971">
    <property type="pathway name" value="EGFR downregulation"/>
</dbReference>
<dbReference type="Reactome" id="R-HSA-187577">
    <property type="pathway name" value="SCF(Skp2)-mediated degradation of p27/p21"/>
</dbReference>
<dbReference type="Reactome" id="R-HSA-195253">
    <property type="pathway name" value="Degradation of beta-catenin by the destruction complex"/>
</dbReference>
<dbReference type="Reactome" id="R-HSA-201681">
    <property type="pathway name" value="TCF dependent signaling in response to WNT"/>
</dbReference>
<dbReference type="Reactome" id="R-HSA-202424">
    <property type="pathway name" value="Downstream TCR signaling"/>
</dbReference>
<dbReference type="Reactome" id="R-HSA-205043">
    <property type="pathway name" value="NRIF signals cell death from the nucleus"/>
</dbReference>
<dbReference type="Reactome" id="R-HSA-209543">
    <property type="pathway name" value="p75NTR recruits signalling complexes"/>
</dbReference>
<dbReference type="Reactome" id="R-HSA-209560">
    <property type="pathway name" value="NF-kB is activated and signals survival"/>
</dbReference>
<dbReference type="Reactome" id="R-HSA-211733">
    <property type="pathway name" value="Regulation of activated PAK-2p34 by proteasome mediated degradation"/>
</dbReference>
<dbReference type="Reactome" id="R-HSA-2122947">
    <property type="pathway name" value="NOTCH1 Intracellular Domain Regulates Transcription"/>
</dbReference>
<dbReference type="Reactome" id="R-HSA-2122948">
    <property type="pathway name" value="Activated NOTCH1 Transmits Signal to the Nucleus"/>
</dbReference>
<dbReference type="Reactome" id="R-HSA-2173788">
    <property type="pathway name" value="Downregulation of TGF-beta receptor signaling"/>
</dbReference>
<dbReference type="Reactome" id="R-HSA-2173791">
    <property type="pathway name" value="TGF-beta receptor signaling in EMT (epithelial to mesenchymal transition)"/>
</dbReference>
<dbReference type="Reactome" id="R-HSA-2173795">
    <property type="pathway name" value="Downregulation of SMAD2/3:SMAD4 transcriptional activity"/>
</dbReference>
<dbReference type="Reactome" id="R-HSA-2173796">
    <property type="pathway name" value="SMAD2/SMAD3:SMAD4 heterotrimer regulates transcription"/>
</dbReference>
<dbReference type="Reactome" id="R-HSA-2467813">
    <property type="pathway name" value="Separation of Sister Chromatids"/>
</dbReference>
<dbReference type="Reactome" id="R-HSA-2559580">
    <property type="pathway name" value="Oxidative Stress Induced Senescence"/>
</dbReference>
<dbReference type="Reactome" id="R-HSA-2559582">
    <property type="pathway name" value="Senescence-Associated Secretory Phenotype (SASP)"/>
</dbReference>
<dbReference type="Reactome" id="R-HSA-2559585">
    <property type="pathway name" value="Oncogene Induced Senescence"/>
</dbReference>
<dbReference type="Reactome" id="R-HSA-2565942">
    <property type="pathway name" value="Regulation of PLK1 Activity at G2/M Transition"/>
</dbReference>
<dbReference type="Reactome" id="R-HSA-2644606">
    <property type="pathway name" value="Constitutive Signaling by NOTCH1 PEST Domain Mutants"/>
</dbReference>
<dbReference type="Reactome" id="R-HSA-2672351">
    <property type="pathway name" value="Stimuli-sensing channels"/>
</dbReference>
<dbReference type="Reactome" id="R-HSA-2691232">
    <property type="pathway name" value="Constitutive Signaling by NOTCH1 HD Domain Mutants"/>
</dbReference>
<dbReference type="Reactome" id="R-HSA-2871837">
    <property type="pathway name" value="FCERI mediated NF-kB activation"/>
</dbReference>
<dbReference type="Reactome" id="R-HSA-2894862">
    <property type="pathway name" value="Constitutive Signaling by NOTCH1 HD+PEST Domain Mutants"/>
</dbReference>
<dbReference type="Reactome" id="R-HSA-2979096">
    <property type="pathway name" value="NOTCH2 Activation and Transmission of Signal to the Nucleus"/>
</dbReference>
<dbReference type="Reactome" id="R-HSA-3134975">
    <property type="pathway name" value="Regulation of innate immune responses to cytosolic DNA"/>
</dbReference>
<dbReference type="Reactome" id="R-HSA-3322077">
    <property type="pathway name" value="Glycogen synthesis"/>
</dbReference>
<dbReference type="Reactome" id="R-HSA-349425">
    <property type="pathway name" value="Autodegradation of the E3 ubiquitin ligase COP1"/>
</dbReference>
<dbReference type="Reactome" id="R-HSA-3769402">
    <property type="pathway name" value="Deactivation of the beta-catenin transactivating complex"/>
</dbReference>
<dbReference type="Reactome" id="R-HSA-3785653">
    <property type="pathway name" value="Myoclonic epilepsy of Lafora"/>
</dbReference>
<dbReference type="Reactome" id="R-HSA-382556">
    <property type="pathway name" value="ABC-family proteins mediated transport"/>
</dbReference>
<dbReference type="Reactome" id="R-HSA-400253">
    <property type="pathway name" value="Circadian Clock"/>
</dbReference>
<dbReference type="Reactome" id="R-HSA-445989">
    <property type="pathway name" value="TAK1-dependent IKK and NF-kappa-B activation"/>
</dbReference>
<dbReference type="Reactome" id="R-HSA-450302">
    <property type="pathway name" value="activated TAK1 mediates p38 MAPK activation"/>
</dbReference>
<dbReference type="Reactome" id="R-HSA-450321">
    <property type="pathway name" value="JNK (c-Jun kinases) phosphorylation and activation mediated by activated human TAK1"/>
</dbReference>
<dbReference type="Reactome" id="R-HSA-450408">
    <property type="pathway name" value="AUF1 (hnRNP D0) binds and destabilizes mRNA"/>
</dbReference>
<dbReference type="Reactome" id="R-HSA-4608870">
    <property type="pathway name" value="Asymmetric localization of PCP proteins"/>
</dbReference>
<dbReference type="Reactome" id="R-HSA-4641257">
    <property type="pathway name" value="Degradation of AXIN"/>
</dbReference>
<dbReference type="Reactome" id="R-HSA-4641258">
    <property type="pathway name" value="Degradation of DVL"/>
</dbReference>
<dbReference type="Reactome" id="R-HSA-4641263">
    <property type="pathway name" value="Regulation of FZD by ubiquitination"/>
</dbReference>
<dbReference type="Reactome" id="R-HSA-5205685">
    <property type="pathway name" value="PINK1-PRKN Mediated Mitophagy"/>
</dbReference>
<dbReference type="Reactome" id="R-HSA-532668">
    <property type="pathway name" value="N-glycan trimming in the ER and Calnexin/Calreticulin cycle"/>
</dbReference>
<dbReference type="Reactome" id="R-HSA-5357905">
    <property type="pathway name" value="Regulation of TNFR1 signaling"/>
</dbReference>
<dbReference type="Reactome" id="R-HSA-5357956">
    <property type="pathway name" value="TNFR1-induced NF-kappa-B signaling pathway"/>
</dbReference>
<dbReference type="Reactome" id="R-HSA-5358346">
    <property type="pathway name" value="Hedgehog ligand biogenesis"/>
</dbReference>
<dbReference type="Reactome" id="R-HSA-5362768">
    <property type="pathway name" value="Hh mutants are degraded by ERAD"/>
</dbReference>
<dbReference type="Reactome" id="R-HSA-5607761">
    <property type="pathway name" value="Dectin-1 mediated noncanonical NF-kB signaling"/>
</dbReference>
<dbReference type="Reactome" id="R-HSA-5607764">
    <property type="pathway name" value="CLEC7A (Dectin-1) signaling"/>
</dbReference>
<dbReference type="Reactome" id="R-HSA-5610780">
    <property type="pathway name" value="Degradation of GLI1 by the proteasome"/>
</dbReference>
<dbReference type="Reactome" id="R-HSA-5610783">
    <property type="pathway name" value="Degradation of GLI2 by the proteasome"/>
</dbReference>
<dbReference type="Reactome" id="R-HSA-5610785">
    <property type="pathway name" value="GLI3 is processed to GLI3R by the proteasome"/>
</dbReference>
<dbReference type="Reactome" id="R-HSA-5632684">
    <property type="pathway name" value="Hedgehog 'on' state"/>
</dbReference>
<dbReference type="Reactome" id="R-HSA-5654726">
    <property type="pathway name" value="Negative regulation of FGFR1 signaling"/>
</dbReference>
<dbReference type="Reactome" id="R-HSA-5654727">
    <property type="pathway name" value="Negative regulation of FGFR2 signaling"/>
</dbReference>
<dbReference type="Reactome" id="R-HSA-5654732">
    <property type="pathway name" value="Negative regulation of FGFR3 signaling"/>
</dbReference>
<dbReference type="Reactome" id="R-HSA-5654733">
    <property type="pathway name" value="Negative regulation of FGFR4 signaling"/>
</dbReference>
<dbReference type="Reactome" id="R-HSA-5655862">
    <property type="pathway name" value="Translesion synthesis by POLK"/>
</dbReference>
<dbReference type="Reactome" id="R-HSA-5656121">
    <property type="pathway name" value="Translesion synthesis by POLI"/>
</dbReference>
<dbReference type="Reactome" id="R-HSA-5656169">
    <property type="pathway name" value="Termination of translesion DNA synthesis"/>
</dbReference>
<dbReference type="Reactome" id="R-HSA-5658442">
    <property type="pathway name" value="Regulation of RAS by GAPs"/>
</dbReference>
<dbReference type="Reactome" id="R-HSA-5668541">
    <property type="pathway name" value="TNFR2 non-canonical NF-kB pathway"/>
</dbReference>
<dbReference type="Reactome" id="R-HSA-5675221">
    <property type="pathway name" value="Negative regulation of MAPK pathway"/>
</dbReference>
<dbReference type="Reactome" id="R-HSA-5675482">
    <property type="pathway name" value="Regulation of necroptotic cell death"/>
</dbReference>
<dbReference type="Reactome" id="R-HSA-5676590">
    <property type="pathway name" value="NIK--&gt;noncanonical NF-kB signaling"/>
</dbReference>
<dbReference type="Reactome" id="R-HSA-5678895">
    <property type="pathway name" value="Defective CFTR causes cystic fibrosis"/>
</dbReference>
<dbReference type="Reactome" id="R-HSA-5684264">
    <property type="pathway name" value="MAP3K8 (TPL2)-dependent MAPK1/3 activation"/>
</dbReference>
<dbReference type="Reactome" id="R-HSA-5685942">
    <property type="pathway name" value="HDR through Homologous Recombination (HRR)"/>
</dbReference>
<dbReference type="Reactome" id="R-HSA-5687128">
    <property type="pathway name" value="MAPK6/MAPK4 signaling"/>
</dbReference>
<dbReference type="Reactome" id="R-HSA-5689603">
    <property type="pathway name" value="UCH proteinases"/>
</dbReference>
<dbReference type="Reactome" id="R-HSA-5689877">
    <property type="pathway name" value="Josephin domain DUBs"/>
</dbReference>
<dbReference type="Reactome" id="R-HSA-5689880">
    <property type="pathway name" value="Ub-specific processing proteases"/>
</dbReference>
<dbReference type="Reactome" id="R-HSA-5689896">
    <property type="pathway name" value="Ovarian tumor domain proteases"/>
</dbReference>
<dbReference type="Reactome" id="R-HSA-5689901">
    <property type="pathway name" value="Metalloprotease DUBs"/>
</dbReference>
<dbReference type="Reactome" id="R-HSA-5693565">
    <property type="pathway name" value="Recruitment and ATM-mediated phosphorylation of repair and signaling proteins at DNA double strand breaks"/>
</dbReference>
<dbReference type="Reactome" id="R-HSA-5693607">
    <property type="pathway name" value="Processing of DNA double-strand break ends"/>
</dbReference>
<dbReference type="Reactome" id="R-HSA-5696394">
    <property type="pathway name" value="DNA Damage Recognition in GG-NER"/>
</dbReference>
<dbReference type="Reactome" id="R-HSA-5696395">
    <property type="pathway name" value="Formation of Incision Complex in GG-NER"/>
</dbReference>
<dbReference type="Reactome" id="R-HSA-5696397">
    <property type="pathway name" value="Gap-filling DNA repair synthesis and ligation in GG-NER"/>
</dbReference>
<dbReference type="Reactome" id="R-HSA-5696400">
    <property type="pathway name" value="Dual Incision in GG-NER"/>
</dbReference>
<dbReference type="Reactome" id="R-HSA-6781823">
    <property type="pathway name" value="Formation of TC-NER Pre-Incision Complex"/>
</dbReference>
<dbReference type="Reactome" id="R-HSA-6781827">
    <property type="pathway name" value="Transcription-Coupled Nucleotide Excision Repair (TC-NER)"/>
</dbReference>
<dbReference type="Reactome" id="R-HSA-6782135">
    <property type="pathway name" value="Dual incision in TC-NER"/>
</dbReference>
<dbReference type="Reactome" id="R-HSA-6782210">
    <property type="pathway name" value="Gap-filling DNA repair synthesis and ligation in TC-NER"/>
</dbReference>
<dbReference type="Reactome" id="R-HSA-6783310">
    <property type="pathway name" value="Fanconi Anemia Pathway"/>
</dbReference>
<dbReference type="Reactome" id="R-HSA-6804756">
    <property type="pathway name" value="Regulation of TP53 Activity through Phosphorylation"/>
</dbReference>
<dbReference type="Reactome" id="R-HSA-6804757">
    <property type="pathway name" value="Regulation of TP53 Degradation"/>
</dbReference>
<dbReference type="Reactome" id="R-HSA-6804760">
    <property type="pathway name" value="Regulation of TP53 Activity through Methylation"/>
</dbReference>
<dbReference type="Reactome" id="R-HSA-6807004">
    <property type="pathway name" value="Negative regulation of MET activity"/>
</dbReference>
<dbReference type="Reactome" id="R-HSA-68867">
    <property type="pathway name" value="Assembly of the pre-replicative complex"/>
</dbReference>
<dbReference type="Reactome" id="R-HSA-68949">
    <property type="pathway name" value="Orc1 removal from chromatin"/>
</dbReference>
<dbReference type="Reactome" id="R-HSA-69017">
    <property type="pathway name" value="CDK-mediated phosphorylation and removal of Cdc6"/>
</dbReference>
<dbReference type="Reactome" id="R-HSA-69231">
    <property type="pathway name" value="Cyclin D associated events in G1"/>
</dbReference>
<dbReference type="Reactome" id="R-HSA-69481">
    <property type="pathway name" value="G2/M Checkpoints"/>
</dbReference>
<dbReference type="Reactome" id="R-HSA-69541">
    <property type="pathway name" value="Stabilization of p53"/>
</dbReference>
<dbReference type="Reactome" id="R-HSA-69601">
    <property type="pathway name" value="Ubiquitin Mediated Degradation of Phosphorylated Cdc25A"/>
</dbReference>
<dbReference type="Reactome" id="R-HSA-75815">
    <property type="pathway name" value="Ubiquitin-dependent degradation of Cyclin D"/>
</dbReference>
<dbReference type="Reactome" id="R-HSA-8849469">
    <property type="pathway name" value="PTK6 Regulates RTKs and Their Effectors AKT1 and DOK1"/>
</dbReference>
<dbReference type="Reactome" id="R-HSA-8852276">
    <property type="pathway name" value="The role of GTSE1 in G2/M progression after G2 checkpoint"/>
</dbReference>
<dbReference type="Reactome" id="R-HSA-8854050">
    <property type="pathway name" value="FBXL7 down-regulates AURKA during mitotic entry and in early mitosis"/>
</dbReference>
<dbReference type="Reactome" id="R-HSA-8856825">
    <property type="pathway name" value="Cargo recognition for clathrin-mediated endocytosis"/>
</dbReference>
<dbReference type="Reactome" id="R-HSA-8856828">
    <property type="pathway name" value="Clathrin-mediated endocytosis"/>
</dbReference>
<dbReference type="Reactome" id="R-HSA-8863795">
    <property type="pathway name" value="Downregulation of ERBB2 signaling"/>
</dbReference>
<dbReference type="Reactome" id="R-HSA-8866427">
    <property type="pathway name" value="VLDLR internalisation and degradation"/>
</dbReference>
<dbReference type="Reactome" id="R-HSA-8866652">
    <property type="pathway name" value="Synthesis of active ubiquitin: roles of E1 and E2 enzymes"/>
</dbReference>
<dbReference type="Reactome" id="R-HSA-8866654">
    <property type="pathway name" value="E3 ubiquitin ligases ubiquitinate target proteins"/>
</dbReference>
<dbReference type="Reactome" id="R-HSA-8875360">
    <property type="pathway name" value="InlB-mediated entry of Listeria monocytogenes into host cell"/>
</dbReference>
<dbReference type="Reactome" id="R-HSA-8876493">
    <property type="pathway name" value="InlA-mediated entry of Listeria monocytogenes into host cells"/>
</dbReference>
<dbReference type="Reactome" id="R-HSA-8939236">
    <property type="pathway name" value="RUNX1 regulates transcription of genes involved in differentiation of HSCs"/>
</dbReference>
<dbReference type="Reactome" id="R-HSA-8939902">
    <property type="pathway name" value="Regulation of RUNX2 expression and activity"/>
</dbReference>
<dbReference type="Reactome" id="R-HSA-8941858">
    <property type="pathway name" value="Regulation of RUNX3 expression and activity"/>
</dbReference>
<dbReference type="Reactome" id="R-HSA-8948747">
    <property type="pathway name" value="Regulation of PTEN localization"/>
</dbReference>
<dbReference type="Reactome" id="R-HSA-8948751">
    <property type="pathway name" value="Regulation of PTEN stability and activity"/>
</dbReference>
<dbReference type="Reactome" id="R-HSA-8951664">
    <property type="pathway name" value="Neddylation"/>
</dbReference>
<dbReference type="Reactome" id="R-HSA-901032">
    <property type="pathway name" value="ER Quality Control Compartment (ERQC)"/>
</dbReference>
<dbReference type="Reactome" id="R-HSA-9010553">
    <property type="pathway name" value="Regulation of expression of SLITs and ROBOs"/>
</dbReference>
<dbReference type="Reactome" id="R-HSA-9013507">
    <property type="pathway name" value="NOTCH3 Activation and Transmission of Signal to the Nucleus"/>
</dbReference>
<dbReference type="Reactome" id="R-HSA-9013973">
    <property type="pathway name" value="TICAM1-dependent activation of IRF3/IRF7"/>
</dbReference>
<dbReference type="Reactome" id="R-HSA-9014325">
    <property type="pathway name" value="TICAM1,TRAF6-dependent induction of TAK1 complex"/>
</dbReference>
<dbReference type="Reactome" id="R-HSA-9020702">
    <property type="pathway name" value="Interleukin-1 signaling"/>
</dbReference>
<dbReference type="Reactome" id="R-HSA-9033241">
    <property type="pathway name" value="Peroxisomal protein import"/>
</dbReference>
<dbReference type="Reactome" id="R-HSA-909733">
    <property type="pathway name" value="Interferon alpha/beta signaling"/>
</dbReference>
<dbReference type="Reactome" id="R-HSA-912631">
    <property type="pathway name" value="Regulation of signaling by CBL"/>
</dbReference>
<dbReference type="Reactome" id="R-HSA-917729">
    <property type="pathway name" value="Endosomal Sorting Complex Required For Transport (ESCRT)"/>
</dbReference>
<dbReference type="Reactome" id="R-HSA-917937">
    <property type="pathway name" value="Iron uptake and transport"/>
</dbReference>
<dbReference type="Reactome" id="R-HSA-936440">
    <property type="pathway name" value="Negative regulators of DDX58/IFIH1 signaling"/>
</dbReference>
<dbReference type="Reactome" id="R-HSA-936964">
    <property type="pathway name" value="Activation of IRF3, IRF7 mediated by TBK1, IKKEpsilon (IKBKE)"/>
</dbReference>
<dbReference type="Reactome" id="R-HSA-937039">
    <property type="pathway name" value="IRAK1 recruits IKK complex"/>
</dbReference>
<dbReference type="Reactome" id="R-HSA-937041">
    <property type="pathway name" value="IKK complex recruitment mediated by RIP1"/>
</dbReference>
<dbReference type="Reactome" id="R-HSA-937042">
    <property type="pathway name" value="IRAK2 mediated activation of TAK1 complex"/>
</dbReference>
<dbReference type="Reactome" id="R-HSA-937072">
    <property type="pathway name" value="TRAF6-mediated induction of TAK1 complex within TLR4 complex"/>
</dbReference>
<dbReference type="Reactome" id="R-HSA-9604323">
    <property type="pathway name" value="Negative regulation of NOTCH4 signaling"/>
</dbReference>
<dbReference type="Reactome" id="R-HSA-9613829">
    <property type="pathway name" value="Chaperone Mediated Autophagy"/>
</dbReference>
<dbReference type="Reactome" id="R-HSA-9615710">
    <property type="pathway name" value="Late endosomal microautophagy"/>
</dbReference>
<dbReference type="Reactome" id="R-HSA-9636383">
    <property type="pathway name" value="Prevention of phagosomal-lysosomal fusion"/>
</dbReference>
<dbReference type="Reactome" id="R-HSA-9637628">
    <property type="pathway name" value="Modulation by Mtb of host immune system"/>
</dbReference>
<dbReference type="Reactome" id="R-HSA-9645460">
    <property type="pathway name" value="Alpha-protein kinase 1 signaling pathway"/>
</dbReference>
<dbReference type="Reactome" id="R-HSA-9646399">
    <property type="pathway name" value="Aggrephagy"/>
</dbReference>
<dbReference type="Reactome" id="R-HSA-9648002">
    <property type="pathway name" value="RAS processing"/>
</dbReference>
<dbReference type="Reactome" id="R-HSA-9664873">
    <property type="pathway name" value="Pexophagy"/>
</dbReference>
<dbReference type="Reactome" id="R-HSA-9680350">
    <property type="pathway name" value="Signaling by CSF1 (M-CSF) in myeloid cells"/>
</dbReference>
<dbReference type="Reactome" id="R-HSA-9683683">
    <property type="pathway name" value="Maturation of protein E"/>
</dbReference>
<dbReference type="Reactome" id="R-HSA-9692916">
    <property type="pathway name" value="SARS-CoV-1 activates/modulates innate immune responses"/>
</dbReference>
<dbReference type="Reactome" id="R-HSA-9694493">
    <property type="pathway name" value="Maturation of protein E"/>
</dbReference>
<dbReference type="Reactome" id="R-HSA-9705462">
    <property type="pathway name" value="Inactivation of CSF3 (G-CSF) signaling"/>
</dbReference>
<dbReference type="Reactome" id="R-HSA-9705671">
    <property type="pathway name" value="SARS-CoV-2 activates/modulates innate and adaptive immune responses"/>
</dbReference>
<dbReference type="Reactome" id="R-HSA-9706369">
    <property type="pathway name" value="Negative regulation of FLT3"/>
</dbReference>
<dbReference type="Reactome" id="R-HSA-9706377">
    <property type="pathway name" value="FLT3 signaling by CBL mutants"/>
</dbReference>
<dbReference type="Reactome" id="R-HSA-9708530">
    <property type="pathway name" value="Regulation of BACH1 activity"/>
</dbReference>
<dbReference type="Reactome" id="R-HSA-9725370">
    <property type="pathway name" value="Signaling by ALK fusions and activated point mutants"/>
</dbReference>
<dbReference type="Reactome" id="R-HSA-975110">
    <property type="pathway name" value="TRAF6 mediated IRF7 activation in TLR7/8 or 9 signaling"/>
</dbReference>
<dbReference type="Reactome" id="R-HSA-975144">
    <property type="pathway name" value="IRAK1 recruits IKK complex upon TLR7/8 or 9 stimulation"/>
</dbReference>
<dbReference type="Reactome" id="R-HSA-975163">
    <property type="pathway name" value="IRAK2 mediated activation of TAK1 complex upon TLR7/8 or 9 stimulation"/>
</dbReference>
<dbReference type="Reactome" id="R-HSA-9755511">
    <property type="pathway name" value="KEAP1-NFE2L2 pathway"/>
</dbReference>
<dbReference type="Reactome" id="R-HSA-9758274">
    <property type="pathway name" value="Regulation of NF-kappa B signaling"/>
</dbReference>
<dbReference type="Reactome" id="R-HSA-9762114">
    <property type="pathway name" value="GSK3B and BTRC:CUL1-mediated-degradation of NFE2L2"/>
</dbReference>
<dbReference type="Reactome" id="R-HSA-977225">
    <property type="pathway name" value="Amyloid fiber formation"/>
</dbReference>
<dbReference type="Reactome" id="R-HSA-9824878">
    <property type="pathway name" value="Regulation of TBK1, IKKEpsilon (IKBKE)-mediated activation of IRF3, IRF7"/>
</dbReference>
<dbReference type="Reactome" id="R-HSA-9828211">
    <property type="pathway name" value="Regulation of TBK1, IKKEpsilon-mediated activation of IRF3, IRF7 upon TLR3 ligation"/>
</dbReference>
<dbReference type="Reactome" id="R-HSA-983168">
    <property type="pathway name" value="Antigen processing: Ubiquitination &amp; Proteasome degradation"/>
</dbReference>
<dbReference type="Reactome" id="R-HSA-9833109">
    <property type="pathway name" value="Evasion by RSV of host interferon responses"/>
</dbReference>
<dbReference type="Reactome" id="R-HSA-9861718">
    <property type="pathway name" value="Regulation of pyruvate metabolism"/>
</dbReference>
<dbReference type="SignaLink" id="P0CG48"/>
<dbReference type="SIGNOR" id="P0CG48"/>
<dbReference type="BioGRID-ORCS" id="7316">
    <property type="hits" value="375 hits in 1150 CRISPR screens"/>
</dbReference>
<dbReference type="CD-CODE" id="139BF52E">
    <property type="entry name" value="Synthetic Condensate 000072"/>
</dbReference>
<dbReference type="CD-CODE" id="91857CE7">
    <property type="entry name" value="Nucleolus"/>
</dbReference>
<dbReference type="CD-CODE" id="EF6CBD8C">
    <property type="entry name" value="Synthetic Condensate 000070"/>
</dbReference>
<dbReference type="CD-CODE" id="F5639AB0">
    <property type="entry name" value="Synthetic Condensate 000096"/>
</dbReference>
<dbReference type="CD-CODE" id="FB4E32DD">
    <property type="entry name" value="Presynaptic clusters and postsynaptic densities"/>
</dbReference>
<dbReference type="ChiTaRS" id="UBC">
    <property type="organism name" value="human"/>
</dbReference>
<dbReference type="EvolutionaryTrace" id="P0CG48"/>
<dbReference type="GeneWiki" id="Ubiquitin_C"/>
<dbReference type="GenomeRNAi" id="7316"/>
<dbReference type="Pharos" id="P0CG48">
    <property type="development level" value="Tbio"/>
</dbReference>
<dbReference type="PRO" id="PR:P0CG48"/>
<dbReference type="Proteomes" id="UP000005640">
    <property type="component" value="Chromosome 12"/>
</dbReference>
<dbReference type="RNAct" id="P0CG48">
    <property type="molecule type" value="protein"/>
</dbReference>
<dbReference type="Bgee" id="ENSG00000150991">
    <property type="expression patterns" value="Expressed in olfactory bulb and 215 other cell types or tissues"/>
</dbReference>
<dbReference type="ExpressionAtlas" id="P0CG48">
    <property type="expression patterns" value="baseline and differential"/>
</dbReference>
<dbReference type="GO" id="GO:0005737">
    <property type="term" value="C:cytoplasm"/>
    <property type="evidence" value="ECO:0000318"/>
    <property type="project" value="GO_Central"/>
</dbReference>
<dbReference type="GO" id="GO:0005829">
    <property type="term" value="C:cytosol"/>
    <property type="evidence" value="ECO:0000304"/>
    <property type="project" value="Reactome"/>
</dbReference>
<dbReference type="GO" id="GO:0030666">
    <property type="term" value="C:endocytic vesicle membrane"/>
    <property type="evidence" value="ECO:0000304"/>
    <property type="project" value="Reactome"/>
</dbReference>
<dbReference type="GO" id="GO:0005789">
    <property type="term" value="C:endoplasmic reticulum membrane"/>
    <property type="evidence" value="ECO:0000304"/>
    <property type="project" value="Reactome"/>
</dbReference>
<dbReference type="GO" id="GO:0010008">
    <property type="term" value="C:endosome membrane"/>
    <property type="evidence" value="ECO:0000304"/>
    <property type="project" value="Reactome"/>
</dbReference>
<dbReference type="GO" id="GO:0070062">
    <property type="term" value="C:extracellular exosome"/>
    <property type="evidence" value="ECO:0007005"/>
    <property type="project" value="UniProtKB"/>
</dbReference>
<dbReference type="GO" id="GO:0005615">
    <property type="term" value="C:extracellular space"/>
    <property type="evidence" value="ECO:0007005"/>
    <property type="project" value="UniProtKB"/>
</dbReference>
<dbReference type="GO" id="GO:0005741">
    <property type="term" value="C:mitochondrial outer membrane"/>
    <property type="evidence" value="ECO:0000304"/>
    <property type="project" value="Reactome"/>
</dbReference>
<dbReference type="GO" id="GO:0005654">
    <property type="term" value="C:nucleoplasm"/>
    <property type="evidence" value="ECO:0000304"/>
    <property type="project" value="Reactome"/>
</dbReference>
<dbReference type="GO" id="GO:0005634">
    <property type="term" value="C:nucleus"/>
    <property type="evidence" value="ECO:0007005"/>
    <property type="project" value="UniProtKB"/>
</dbReference>
<dbReference type="GO" id="GO:0005886">
    <property type="term" value="C:plasma membrane"/>
    <property type="evidence" value="ECO:0000304"/>
    <property type="project" value="Reactome"/>
</dbReference>
<dbReference type="GO" id="GO:0031982">
    <property type="term" value="C:vesicle"/>
    <property type="evidence" value="ECO:0007005"/>
    <property type="project" value="UniProtKB"/>
</dbReference>
<dbReference type="GO" id="GO:0031386">
    <property type="term" value="F:protein tag activity"/>
    <property type="evidence" value="ECO:0000318"/>
    <property type="project" value="GO_Central"/>
</dbReference>
<dbReference type="GO" id="GO:0003723">
    <property type="term" value="F:RNA binding"/>
    <property type="evidence" value="ECO:0007005"/>
    <property type="project" value="UniProtKB"/>
</dbReference>
<dbReference type="GO" id="GO:0031625">
    <property type="term" value="F:ubiquitin protein ligase binding"/>
    <property type="evidence" value="ECO:0000318"/>
    <property type="project" value="GO_Central"/>
</dbReference>
<dbReference type="GO" id="GO:0019941">
    <property type="term" value="P:modification-dependent protein catabolic process"/>
    <property type="evidence" value="ECO:0000318"/>
    <property type="project" value="GO_Central"/>
</dbReference>
<dbReference type="GO" id="GO:0016567">
    <property type="term" value="P:protein ubiquitination"/>
    <property type="evidence" value="ECO:0000318"/>
    <property type="project" value="GO_Central"/>
</dbReference>
<dbReference type="CDD" id="cd01803">
    <property type="entry name" value="Ubl_ubiquitin"/>
    <property type="match status" value="9"/>
</dbReference>
<dbReference type="FunFam" id="3.10.20.90:FF:000158">
    <property type="entry name" value="Polyubiquitin 5"/>
    <property type="match status" value="9"/>
</dbReference>
<dbReference type="Gene3D" id="3.10.20.90">
    <property type="entry name" value="Phosphatidylinositol 3-kinase Catalytic Subunit, Chain A, domain 1"/>
    <property type="match status" value="9"/>
</dbReference>
<dbReference type="InterPro" id="IPR000626">
    <property type="entry name" value="Ubiquitin-like_dom"/>
</dbReference>
<dbReference type="InterPro" id="IPR029071">
    <property type="entry name" value="Ubiquitin-like_domsf"/>
</dbReference>
<dbReference type="InterPro" id="IPR019954">
    <property type="entry name" value="Ubiquitin_CS"/>
</dbReference>
<dbReference type="InterPro" id="IPR019956">
    <property type="entry name" value="Ubiquitin_dom"/>
</dbReference>
<dbReference type="InterPro" id="IPR050158">
    <property type="entry name" value="Ubiquitin_ubiquitin-like"/>
</dbReference>
<dbReference type="PANTHER" id="PTHR10666">
    <property type="entry name" value="UBIQUITIN"/>
    <property type="match status" value="1"/>
</dbReference>
<dbReference type="Pfam" id="PF00240">
    <property type="entry name" value="ubiquitin"/>
    <property type="match status" value="9"/>
</dbReference>
<dbReference type="PRINTS" id="PR00348">
    <property type="entry name" value="UBIQUITIN"/>
</dbReference>
<dbReference type="SMART" id="SM00213">
    <property type="entry name" value="UBQ"/>
    <property type="match status" value="9"/>
</dbReference>
<dbReference type="SUPFAM" id="SSF54236">
    <property type="entry name" value="Ubiquitin-like"/>
    <property type="match status" value="9"/>
</dbReference>
<dbReference type="PROSITE" id="PS00299">
    <property type="entry name" value="UBIQUITIN_1"/>
    <property type="match status" value="9"/>
</dbReference>
<dbReference type="PROSITE" id="PS50053">
    <property type="entry name" value="UBIQUITIN_2"/>
    <property type="match status" value="9"/>
</dbReference>
<gene>
    <name type="primary">UBC</name>
</gene>
<evidence type="ECO:0000250" key="1"/>
<evidence type="ECO:0000255" key="2">
    <source>
        <dbReference type="PROSITE-ProRule" id="PRU00214"/>
    </source>
</evidence>
<evidence type="ECO:0000269" key="3">
    <source>
    </source>
</evidence>
<evidence type="ECO:0000269" key="4">
    <source>
    </source>
</evidence>
<evidence type="ECO:0000269" key="5">
    <source>
    </source>
</evidence>
<evidence type="ECO:0000269" key="6">
    <source>
    </source>
</evidence>
<evidence type="ECO:0000269" key="7">
    <source>
    </source>
</evidence>
<evidence type="ECO:0000269" key="8">
    <source>
    </source>
</evidence>
<evidence type="ECO:0000269" key="9">
    <source>
    </source>
</evidence>
<evidence type="ECO:0000269" key="10">
    <source>
    </source>
</evidence>
<evidence type="ECO:0000269" key="11">
    <source>
    </source>
</evidence>
<evidence type="ECO:0000269" key="12">
    <source>
    </source>
</evidence>
<evidence type="ECO:0000269" key="13">
    <source>
    </source>
</evidence>
<evidence type="ECO:0000269" key="14">
    <source>
    </source>
</evidence>
<evidence type="ECO:0000269" key="15">
    <source>
    </source>
</evidence>
<evidence type="ECO:0000269" key="16">
    <source>
    </source>
</evidence>
<evidence type="ECO:0000303" key="17">
    <source>
    </source>
</evidence>
<evidence type="ECO:0000305" key="18"/>
<evidence type="ECO:0000305" key="19">
    <source>
    </source>
</evidence>
<evidence type="ECO:0000305" key="20">
    <source>
    </source>
</evidence>
<evidence type="ECO:0007744" key="21">
    <source>
        <dbReference type="PDB" id="1F9J"/>
    </source>
</evidence>
<evidence type="ECO:0007744" key="22">
    <source>
        <dbReference type="PDB" id="1NBF"/>
    </source>
</evidence>
<evidence type="ECO:0007744" key="23">
    <source>
        <dbReference type="PDB" id="1TBE"/>
    </source>
</evidence>
<evidence type="ECO:0007744" key="24">
    <source>
        <dbReference type="PDB" id="1UBI"/>
    </source>
</evidence>
<evidence type="ECO:0007744" key="25">
    <source>
        <dbReference type="PDB" id="1UBQ"/>
    </source>
</evidence>
<evidence type="ECO:0007744" key="26">
    <source>
        <dbReference type="PDB" id="2XEW"/>
    </source>
</evidence>
<evidence type="ECO:0007744" key="27">
    <source>
        <dbReference type="PDB" id="2Y5B"/>
    </source>
</evidence>
<evidence type="ECO:0007744" key="28">
    <source>
        <dbReference type="PDB" id="4BOS"/>
    </source>
</evidence>
<evidence type="ECO:0007744" key="29">
    <source>
        <dbReference type="PDB" id="4BOZ"/>
    </source>
</evidence>
<evidence type="ECO:0007744" key="30">
    <source>
        <dbReference type="PDB" id="4WZP"/>
    </source>
</evidence>
<evidence type="ECO:0007744" key="31">
    <source>
        <dbReference type="PDB" id="5AF4"/>
    </source>
</evidence>
<evidence type="ECO:0007744" key="32">
    <source>
        <dbReference type="PDB" id="5AF5"/>
    </source>
</evidence>
<evidence type="ECO:0007744" key="33">
    <source>
        <dbReference type="PDB" id="5AF6"/>
    </source>
</evidence>
<evidence type="ECO:0007744" key="34">
    <source>
        <dbReference type="PDB" id="6K2U"/>
    </source>
</evidence>
<evidence type="ECO:0007744" key="35">
    <source>
        <dbReference type="PDB" id="6TNF"/>
    </source>
</evidence>
<evidence type="ECO:0007744" key="36">
    <source>
        <dbReference type="PDB" id="7ZF1"/>
    </source>
</evidence>
<evidence type="ECO:0007744" key="37">
    <source>
        <dbReference type="PDB" id="8PQL"/>
    </source>
</evidence>
<evidence type="ECO:0007744" key="38">
    <source>
        <dbReference type="PDB" id="9D1I"/>
    </source>
</evidence>
<evidence type="ECO:0007744" key="39">
    <source>
        <dbReference type="PDB" id="9D1Y"/>
    </source>
</evidence>
<evidence type="ECO:0007744" key="40">
    <source>
        <dbReference type="PDB" id="9D1Z"/>
    </source>
</evidence>
<evidence type="ECO:0007744" key="41">
    <source>
        <dbReference type="PDB" id="9D8P"/>
    </source>
</evidence>
<evidence type="ECO:0007829" key="42">
    <source>
        <dbReference type="PDB" id="1G6J"/>
    </source>
</evidence>
<evidence type="ECO:0007829" key="43">
    <source>
        <dbReference type="PDB" id="3B08"/>
    </source>
</evidence>
<evidence type="ECO:0007829" key="44">
    <source>
        <dbReference type="PDB" id="3N3K"/>
    </source>
</evidence>
<evidence type="ECO:0007829" key="45">
    <source>
        <dbReference type="PDB" id="3VUX"/>
    </source>
</evidence>
<evidence type="ECO:0007829" key="46">
    <source>
        <dbReference type="PDB" id="4K1R"/>
    </source>
</evidence>
<evidence type="ECO:0007829" key="47">
    <source>
        <dbReference type="PDB" id="5B83"/>
    </source>
</evidence>
<evidence type="ECO:0007829" key="48">
    <source>
        <dbReference type="PDB" id="5H07"/>
    </source>
</evidence>
<evidence type="ECO:0007829" key="49">
    <source>
        <dbReference type="PDB" id="5OXH"/>
    </source>
</evidence>
<evidence type="ECO:0007829" key="50">
    <source>
        <dbReference type="PDB" id="6EQI"/>
    </source>
</evidence>
<evidence type="ECO:0007829" key="51">
    <source>
        <dbReference type="PDB" id="6N6R"/>
    </source>
</evidence>
<evidence type="ECO:0007829" key="52">
    <source>
        <dbReference type="PDB" id="6Q00"/>
    </source>
</evidence>
<evidence type="ECO:0007829" key="53">
    <source>
        <dbReference type="PDB" id="6TUV"/>
    </source>
</evidence>
<evidence type="ECO:0007829" key="54">
    <source>
        <dbReference type="PDB" id="7EB9"/>
    </source>
</evidence>
<evidence type="ECO:0007829" key="55">
    <source>
        <dbReference type="PDB" id="7YUI"/>
    </source>
</evidence>
<sequence length="685" mass="77039">MQIFVKTLTGKTITLEVEPSDTIENVKAKIQDKEGIPPDQQRLIFAGKQLEDGRTLSDYNIQKESTLHLVLRLRGGMQIFVKTLTGKTITLEVEPSDTIENVKAKIQDKEGIPPDQQRLIFAGKQLEDGRTLSDYNIQKESTLHLVLRLRGGMQIFVKTLTGKTITLEVEPSDTIENVKAKIQDKEGIPPDQQRLIFAGKQLEDGRTLSDYNIQKESTLHLVLRLRGGMQIFVKTLTGKTITLEVEPSDTIENVKAKIQDKEGIPPDQQRLIFAGKQLEDGRTLSDYNIQKESTLHLVLRLRGGMQIFVKTLTGKTITLEVEPSDTIENVKAKIQDKEGIPPDQQRLIFAGKQLEDGRTLSDYNIQKESTLHLVLRLRGGMQIFVKTLTGKTITLEVEPSDTIENVKAKIQDKEGIPPDQQRLIFAGKQLEDGRTLSDYNIQKESTLHLVLRLRGGMQIFVKTLTGKTITLEVEPSDTIENVKAKIQDKEGIPPDQQRLIFAGKQLEDGRTLSDYNIQKESTLHLVLRLRGGMQIFVKTLTGKTITLEVEPSDTIENVKAKIQDKEGIPPDQQRLIFAGKQLEDGRTLSDYNIQKESTLHLVLRLRGGMQIFVKTLTGKTITLEVEPSDTIENVKAKIQDKEGIPPDQQRLIFAGKQLEDGRTLSDYNIQKESTLHLVLRLRGGV</sequence>
<protein>
    <recommendedName>
        <fullName>Polyubiquitin-C</fullName>
    </recommendedName>
    <component>
        <recommendedName>
            <fullName>Ubiquitin</fullName>
        </recommendedName>
    </component>
</protein>